<gene>
    <name type="ORF">1a</name>
</gene>
<feature type="chain" id="PRO_0000338254" description="Replicase polyprotein 1a">
    <location>
        <begin position="1"/>
        <end position="4382"/>
    </location>
</feature>
<feature type="chain" id="PRO_0000338255" description="Host translation inhibitor nsp1">
    <location>
        <begin position="1"/>
        <end position="180"/>
    </location>
</feature>
<feature type="chain" id="PRO_0000338256" description="Non-structural protein 2">
    <location>
        <begin position="181"/>
        <end position="818"/>
    </location>
</feature>
<feature type="chain" id="PRO_0000338257" description="Papain-like protease nsp3">
    <location>
        <begin position="819"/>
        <end position="2740"/>
    </location>
</feature>
<feature type="chain" id="PRO_0000338258" description="Non-structural protein 4" evidence="4">
    <location>
        <begin position="2741"/>
        <end position="3240"/>
    </location>
</feature>
<feature type="chain" id="PRO_0000338259" description="3C-like proteinase nsp5">
    <location>
        <begin position="3241"/>
        <end position="3546"/>
    </location>
</feature>
<feature type="chain" id="PRO_0000338260" description="Non-structural protein 6">
    <location>
        <begin position="3547"/>
        <end position="3836"/>
    </location>
</feature>
<feature type="chain" id="PRO_0000338261" description="Non-structural protein 7">
    <location>
        <begin position="3837"/>
        <end position="3919"/>
    </location>
</feature>
<feature type="chain" id="PRO_0000338262" description="Non-structural protein 8">
    <location>
        <begin position="3920"/>
        <end position="4117"/>
    </location>
</feature>
<feature type="chain" id="PRO_0000338263" description="RNA-capping enzyme subunit nsp9">
    <location>
        <begin position="4118"/>
        <end position="4230"/>
    </location>
</feature>
<feature type="chain" id="PRO_0000338264" description="Non-structural protein 10">
    <location>
        <begin position="4231"/>
        <end position="4369"/>
    </location>
</feature>
<feature type="chain" id="PRO_0000338265" description="Non-structural protein 11">
    <location>
        <begin position="4370"/>
        <end position="4382"/>
    </location>
</feature>
<feature type="topological domain" description="Cytoplasmic" evidence="37">
    <location>
        <begin position="1"/>
        <end position="2202"/>
    </location>
</feature>
<feature type="transmembrane region" description="Helical" evidence="52">
    <location>
        <begin position="2203"/>
        <end position="2223"/>
    </location>
</feature>
<feature type="topological domain" description="Lumenal" evidence="37">
    <location>
        <begin position="2224"/>
        <end position="2303"/>
    </location>
</feature>
<feature type="transmembrane region" description="Helical" evidence="52">
    <location>
        <begin position="2304"/>
        <end position="2324"/>
    </location>
</feature>
<feature type="topological domain" description="Cytoplasmic" evidence="37">
    <location>
        <begin position="2325"/>
        <end position="2754"/>
    </location>
</feature>
<feature type="transmembrane region" description="Helical" evidence="52">
    <location>
        <begin position="2755"/>
        <end position="2775"/>
    </location>
</feature>
<feature type="topological domain" description="Lumenal" evidence="37">
    <location>
        <begin position="2776"/>
        <end position="3021"/>
    </location>
</feature>
<feature type="transmembrane region" description="Helical" evidence="52">
    <location>
        <begin position="3022"/>
        <end position="3042"/>
    </location>
</feature>
<feature type="topological domain" description="Cytoplasmic" evidence="37">
    <location>
        <begin position="3043"/>
        <end position="3076"/>
    </location>
</feature>
<feature type="transmembrane region" description="Helical" evidence="52">
    <location>
        <begin position="3077"/>
        <end position="3097"/>
    </location>
</feature>
<feature type="topological domain" description="Lumenal" evidence="37">
    <location>
        <begin position="3098"/>
        <end position="3104"/>
    </location>
</feature>
<feature type="transmembrane region" description="Helical" evidence="52">
    <location>
        <begin position="3105"/>
        <end position="3125"/>
    </location>
</feature>
<feature type="topological domain" description="Cytoplasmic" evidence="37">
    <location>
        <begin position="3126"/>
        <end position="3563"/>
    </location>
</feature>
<feature type="transmembrane region" description="Helical" evidence="52">
    <location>
        <begin position="3564"/>
        <end position="3584"/>
    </location>
</feature>
<feature type="topological domain" description="Lumenal" evidence="37">
    <location>
        <position position="3585"/>
    </location>
</feature>
<feature type="transmembrane region" description="Helical" evidence="52">
    <location>
        <begin position="3586"/>
        <end position="3606"/>
    </location>
</feature>
<feature type="topological domain" description="Cytoplasmic" evidence="37">
    <location>
        <begin position="3607"/>
        <end position="3611"/>
    </location>
</feature>
<feature type="transmembrane region" description="Helical" evidence="52">
    <location>
        <begin position="3612"/>
        <end position="3632"/>
    </location>
</feature>
<feature type="topological domain" description="Lumenal" evidence="37">
    <location>
        <begin position="3633"/>
        <end position="3657"/>
    </location>
</feature>
<feature type="transmembrane region" description="Helical" evidence="52">
    <location>
        <begin position="3658"/>
        <end position="3678"/>
    </location>
</feature>
<feature type="topological domain" description="Cytoplasmic" evidence="37">
    <location>
        <begin position="3679"/>
        <end position="3727"/>
    </location>
</feature>
<feature type="transmembrane region" description="Helical" evidence="52">
    <location>
        <begin position="3728"/>
        <end position="3748"/>
    </location>
</feature>
<feature type="topological domain" description="Lumenal" evidence="37">
    <location>
        <begin position="3749"/>
        <end position="3755"/>
    </location>
</feature>
<feature type="transmembrane region" description="Helical" evidence="52">
    <location>
        <begin position="3756"/>
        <end position="3776"/>
    </location>
</feature>
<feature type="topological domain" description="Cytoplasmic" evidence="37">
    <location>
        <begin position="3777"/>
        <end position="4382"/>
    </location>
</feature>
<feature type="domain" description="CoV Nsp1 globular" evidence="16">
    <location>
        <begin position="12"/>
        <end position="127"/>
    </location>
</feature>
<feature type="domain" description="BetaCoV Nsp1 C-terminal" evidence="17">
    <location>
        <begin position="148"/>
        <end position="179"/>
    </location>
</feature>
<feature type="domain" description="CoV Nsp2 N-terminal" evidence="18">
    <location>
        <begin position="183"/>
        <end position="456"/>
    </location>
</feature>
<feature type="domain" description="CoV Nsp2 middle" evidence="19">
    <location>
        <begin position="458"/>
        <end position="688"/>
    </location>
</feature>
<feature type="domain" description="CoV Nsp2 C-terminal" evidence="20">
    <location>
        <begin position="690"/>
        <end position="818"/>
    </location>
</feature>
<feature type="domain" description="Ubiquitin-like 1" evidence="5">
    <location>
        <begin position="822"/>
        <end position="930"/>
    </location>
</feature>
<feature type="domain" description="Macro 1" evidence="7">
    <location>
        <begin position="1003"/>
        <end position="1169"/>
    </location>
</feature>
<feature type="domain" description="Macro 2" evidence="7">
    <location>
        <begin position="1207"/>
        <end position="1335"/>
    </location>
</feature>
<feature type="domain" description="Macro 3" evidence="7">
    <location>
        <begin position="1343"/>
        <end position="1470"/>
    </location>
</feature>
<feature type="domain" description="DPUP" evidence="9">
    <location>
        <begin position="1472"/>
        <end position="1538"/>
    </location>
</feature>
<feature type="domain" description="Ubiquitin-like 2" evidence="5">
    <location>
        <begin position="1542"/>
        <end position="1597"/>
    </location>
</feature>
<feature type="domain" description="Peptidase C16" evidence="6">
    <location>
        <begin position="1611"/>
        <end position="1875"/>
    </location>
</feature>
<feature type="domain" description="Nucleic acid-binding" evidence="10">
    <location>
        <begin position="1888"/>
        <end position="1998"/>
    </location>
</feature>
<feature type="domain" description="G2M" evidence="23">
    <location>
        <begin position="2023"/>
        <end position="2132"/>
    </location>
</feature>
<feature type="domain" description="3Ecto" evidence="22">
    <location>
        <begin position="2224"/>
        <end position="2294"/>
    </location>
</feature>
<feature type="domain" description="CoV Nsp3 Y" evidence="21">
    <location>
        <begin position="2372"/>
        <end position="2740"/>
    </location>
</feature>
<feature type="domain" description="Nsp4C" evidence="11">
    <location>
        <begin position="3142"/>
        <end position="3240"/>
    </location>
</feature>
<feature type="domain" description="Peptidase C30" evidence="8">
    <location>
        <begin position="3241"/>
        <end position="3546"/>
    </location>
</feature>
<feature type="domain" description="RdRp Nsp7 cofactor" evidence="12">
    <location>
        <begin position="3837"/>
        <end position="3919"/>
    </location>
</feature>
<feature type="domain" description="RdRp Nsp8 cofactor" evidence="13">
    <location>
        <begin position="3920"/>
        <end position="4117"/>
    </location>
</feature>
<feature type="domain" description="Nsp9 ssRNA-binding" evidence="14">
    <location>
        <begin position="4118"/>
        <end position="4230"/>
    </location>
</feature>
<feature type="domain" description="ExoN/MTase coactivator" evidence="15">
    <location>
        <begin position="4231"/>
        <end position="4369"/>
    </location>
</feature>
<feature type="zinc finger region" description="C4-type" evidence="6 33">
    <location>
        <begin position="1729"/>
        <end position="1766"/>
    </location>
</feature>
<feature type="zinc finger region">
    <location>
        <begin position="4304"/>
        <end position="4320"/>
    </location>
</feature>
<feature type="zinc finger region">
    <location>
        <begin position="4347"/>
        <end position="4360"/>
    </location>
</feature>
<feature type="region of interest" description="C2H2" evidence="18">
    <location>
        <begin position="200"/>
        <end position="236"/>
    </location>
</feature>
<feature type="region of interest" description="C4" evidence="18">
    <location>
        <begin position="323"/>
        <end position="344"/>
    </location>
</feature>
<feature type="region of interest" description="C2HC" evidence="18">
    <location>
        <begin position="370"/>
        <end position="416"/>
    </location>
</feature>
<feature type="region of interest" description="Disordered" evidence="24">
    <location>
        <begin position="972"/>
        <end position="1003"/>
    </location>
</feature>
<feature type="region of interest" description="Disordered" evidence="24">
    <location>
        <begin position="1175"/>
        <end position="1198"/>
    </location>
</feature>
<feature type="region of interest" description="HD1" evidence="52">
    <location>
        <begin position="2203"/>
        <end position="2324"/>
    </location>
</feature>
<feature type="region of interest" description="Y1" evidence="21">
    <location>
        <begin position="2372"/>
        <end position="2462"/>
    </location>
</feature>
<feature type="region of interest" description="ZF1" evidence="21">
    <location>
        <begin position="2376"/>
        <end position="2389"/>
    </location>
</feature>
<feature type="region of interest" description="ZF2" evidence="21">
    <location>
        <begin position="2422"/>
        <end position="2432"/>
    </location>
</feature>
<feature type="region of interest" description="CoV-Y" evidence="21">
    <location>
        <begin position="2463"/>
        <end position="2740"/>
    </location>
</feature>
<feature type="region of interest" description="Y2" evidence="21">
    <location>
        <begin position="2463"/>
        <end position="2557"/>
    </location>
</feature>
<feature type="region of interest" description="Y3" evidence="21">
    <location>
        <begin position="2558"/>
        <end position="2639"/>
    </location>
</feature>
<feature type="region of interest" description="Y4" evidence="21">
    <location>
        <begin position="2640"/>
        <end position="2740"/>
    </location>
</feature>
<feature type="region of interest" description="HD2" evidence="52">
    <location>
        <begin position="2755"/>
        <end position="3125"/>
    </location>
</feature>
<feature type="region of interest" description="HD3" evidence="52">
    <location>
        <begin position="3564"/>
        <end position="3776"/>
    </location>
</feature>
<feature type="compositionally biased region" description="Acidic residues" evidence="24">
    <location>
        <begin position="974"/>
        <end position="999"/>
    </location>
</feature>
<feature type="active site" description="For PL-PRO activity" evidence="6">
    <location>
        <position position="1651"/>
    </location>
</feature>
<feature type="active site" description="For PL-PRO activity" evidence="6 33">
    <location>
        <position position="1812"/>
    </location>
</feature>
<feature type="active site" description="For PL-PRO activity" evidence="6 33">
    <location>
        <position position="1826"/>
    </location>
</feature>
<feature type="active site" description="For 3CL-PRO activity" evidence="8 33">
    <location>
        <position position="3281"/>
    </location>
</feature>
<feature type="active site" description="For 3CL-PRO activity" evidence="8">
    <location>
        <position position="3385"/>
    </location>
</feature>
<feature type="binding site" evidence="18">
    <location>
        <position position="200"/>
    </location>
    <ligand>
        <name>Zn(2+)</name>
        <dbReference type="ChEBI" id="CHEBI:29105"/>
        <label>1</label>
    </ligand>
</feature>
<feature type="binding site" evidence="18">
    <location>
        <position position="231"/>
    </location>
    <ligand>
        <name>Zn(2+)</name>
        <dbReference type="ChEBI" id="CHEBI:29105"/>
        <label>1</label>
    </ligand>
</feature>
<feature type="binding site" evidence="18">
    <location>
        <position position="234"/>
    </location>
    <ligand>
        <name>Zn(2+)</name>
        <dbReference type="ChEBI" id="CHEBI:29105"/>
        <label>1</label>
    </ligand>
</feature>
<feature type="binding site" evidence="18">
    <location>
        <position position="236"/>
    </location>
    <ligand>
        <name>Zn(2+)</name>
        <dbReference type="ChEBI" id="CHEBI:29105"/>
        <label>1</label>
    </ligand>
</feature>
<feature type="binding site" evidence="18">
    <location>
        <position position="323"/>
    </location>
    <ligand>
        <name>Zn(2+)</name>
        <dbReference type="ChEBI" id="CHEBI:29105"/>
        <label>2</label>
    </ligand>
</feature>
<feature type="binding site" evidence="18">
    <location>
        <position position="326"/>
    </location>
    <ligand>
        <name>Zn(2+)</name>
        <dbReference type="ChEBI" id="CHEBI:29105"/>
        <label>2</label>
    </ligand>
</feature>
<feature type="binding site" evidence="18">
    <location>
        <position position="341"/>
    </location>
    <ligand>
        <name>Zn(2+)</name>
        <dbReference type="ChEBI" id="CHEBI:29105"/>
        <label>2</label>
    </ligand>
</feature>
<feature type="binding site" evidence="18">
    <location>
        <position position="344"/>
    </location>
    <ligand>
        <name>Zn(2+)</name>
        <dbReference type="ChEBI" id="CHEBI:29105"/>
        <label>2</label>
    </ligand>
</feature>
<feature type="binding site" evidence="18">
    <location>
        <position position="370"/>
    </location>
    <ligand>
        <name>Zn(2+)</name>
        <dbReference type="ChEBI" id="CHEBI:29105"/>
        <label>3</label>
    </ligand>
</feature>
<feature type="binding site" evidence="18">
    <location>
        <position position="373"/>
    </location>
    <ligand>
        <name>Zn(2+)</name>
        <dbReference type="ChEBI" id="CHEBI:29105"/>
        <label>3</label>
    </ligand>
</feature>
<feature type="binding site" evidence="18">
    <location>
        <position position="382"/>
    </location>
    <ligand>
        <name>Zn(2+)</name>
        <dbReference type="ChEBI" id="CHEBI:29105"/>
        <label>3</label>
    </ligand>
</feature>
<feature type="binding site" evidence="18">
    <location>
        <position position="416"/>
    </location>
    <ligand>
        <name>Zn(2+)</name>
        <dbReference type="ChEBI" id="CHEBI:29105"/>
        <label>3</label>
    </ligand>
</feature>
<feature type="binding site" evidence="6">
    <location>
        <position position="1729"/>
    </location>
    <ligand>
        <name>Zn(2+)</name>
        <dbReference type="ChEBI" id="CHEBI:29105"/>
        <label>4</label>
    </ligand>
</feature>
<feature type="binding site" evidence="6">
    <location>
        <position position="1732"/>
    </location>
    <ligand>
        <name>Zn(2+)</name>
        <dbReference type="ChEBI" id="CHEBI:29105"/>
        <label>4</label>
    </ligand>
</feature>
<feature type="binding site" evidence="6">
    <location>
        <position position="1764"/>
    </location>
    <ligand>
        <name>Zn(2+)</name>
        <dbReference type="ChEBI" id="CHEBI:29105"/>
        <label>4</label>
    </ligand>
</feature>
<feature type="binding site" evidence="6">
    <location>
        <position position="1766"/>
    </location>
    <ligand>
        <name>Zn(2+)</name>
        <dbReference type="ChEBI" id="CHEBI:29105"/>
        <label>4</label>
    </ligand>
</feature>
<feature type="binding site" evidence="21">
    <location>
        <position position="2376"/>
    </location>
    <ligand>
        <name>Zn(2+)</name>
        <dbReference type="ChEBI" id="CHEBI:29105"/>
        <label>5</label>
    </ligand>
</feature>
<feature type="binding site" evidence="21">
    <location>
        <position position="2381"/>
    </location>
    <ligand>
        <name>Zn(2+)</name>
        <dbReference type="ChEBI" id="CHEBI:29105"/>
        <label>5</label>
    </ligand>
</feature>
<feature type="binding site" evidence="21">
    <location>
        <position position="2386"/>
    </location>
    <ligand>
        <name>Zn(2+)</name>
        <dbReference type="ChEBI" id="CHEBI:29105"/>
        <label>5</label>
    </ligand>
</feature>
<feature type="binding site" evidence="21">
    <location>
        <position position="2389"/>
    </location>
    <ligand>
        <name>Zn(2+)</name>
        <dbReference type="ChEBI" id="CHEBI:29105"/>
        <label>5</label>
    </ligand>
</feature>
<feature type="binding site" evidence="21">
    <location>
        <position position="2422"/>
    </location>
    <ligand>
        <name>Zn(2+)</name>
        <dbReference type="ChEBI" id="CHEBI:29105"/>
        <label>6</label>
    </ligand>
</feature>
<feature type="binding site" evidence="21">
    <location>
        <position position="2425"/>
    </location>
    <ligand>
        <name>Zn(2+)</name>
        <dbReference type="ChEBI" id="CHEBI:29105"/>
        <label>6</label>
    </ligand>
</feature>
<feature type="binding site" evidence="21">
    <location>
        <position position="2429"/>
    </location>
    <ligand>
        <name>Zn(2+)</name>
        <dbReference type="ChEBI" id="CHEBI:29105"/>
        <label>6</label>
    </ligand>
</feature>
<feature type="binding site" evidence="21">
    <location>
        <position position="2432"/>
    </location>
    <ligand>
        <name>Zn(2+)</name>
        <dbReference type="ChEBI" id="CHEBI:29105"/>
        <label>6</label>
    </ligand>
</feature>
<feature type="binding site" evidence="15">
    <location>
        <position position="4304"/>
    </location>
    <ligand>
        <name>Zn(2+)</name>
        <dbReference type="ChEBI" id="CHEBI:29105"/>
        <label>7</label>
    </ligand>
</feature>
<feature type="binding site" evidence="15">
    <location>
        <position position="4307"/>
    </location>
    <ligand>
        <name>Zn(2+)</name>
        <dbReference type="ChEBI" id="CHEBI:29105"/>
        <label>7</label>
    </ligand>
</feature>
<feature type="binding site" evidence="15">
    <location>
        <position position="4313"/>
    </location>
    <ligand>
        <name>Zn(2+)</name>
        <dbReference type="ChEBI" id="CHEBI:29105"/>
        <label>7</label>
    </ligand>
</feature>
<feature type="binding site" evidence="15">
    <location>
        <position position="4320"/>
    </location>
    <ligand>
        <name>Zn(2+)</name>
        <dbReference type="ChEBI" id="CHEBI:29105"/>
        <label>7</label>
    </ligand>
</feature>
<feature type="binding site" evidence="15">
    <location>
        <position position="4347"/>
    </location>
    <ligand>
        <name>Zn(2+)</name>
        <dbReference type="ChEBI" id="CHEBI:29105"/>
        <label>8</label>
    </ligand>
</feature>
<feature type="binding site" evidence="15">
    <location>
        <position position="4350"/>
    </location>
    <ligand>
        <name>Zn(2+)</name>
        <dbReference type="ChEBI" id="CHEBI:29105"/>
        <label>8</label>
    </ligand>
</feature>
<feature type="binding site" evidence="15">
    <location>
        <position position="4358"/>
    </location>
    <ligand>
        <name>Zn(2+)</name>
        <dbReference type="ChEBI" id="CHEBI:29105"/>
        <label>8</label>
    </ligand>
</feature>
<feature type="binding site" evidence="15">
    <location>
        <position position="4360"/>
    </location>
    <ligand>
        <name>Zn(2+)</name>
        <dbReference type="ChEBI" id="CHEBI:29105"/>
        <label>8</label>
    </ligand>
</feature>
<feature type="site" description="Cleavage; by PL-PRO" evidence="33">
    <location>
        <begin position="180"/>
        <end position="181"/>
    </location>
</feature>
<feature type="site" description="Cleavage; by PL-PRO" evidence="33">
    <location>
        <begin position="818"/>
        <end position="819"/>
    </location>
</feature>
<feature type="site" description="Cleavage; by PL-PRO" evidence="33">
    <location>
        <begin position="2740"/>
        <end position="2741"/>
    </location>
</feature>
<feature type="site" description="Cleavage; by 3CL-PRO" evidence="26">
    <location>
        <begin position="3240"/>
        <end position="3241"/>
    </location>
</feature>
<feature type="site" description="Cleavage; by 3CL-PRO" evidence="26">
    <location>
        <begin position="3546"/>
        <end position="3547"/>
    </location>
</feature>
<feature type="site" description="Cleavage; by 3CL-PRO" evidence="26 49">
    <location>
        <begin position="3836"/>
        <end position="3837"/>
    </location>
</feature>
<feature type="site" description="Cleavage; by 3CL-PRO" evidence="26 49">
    <location>
        <begin position="3919"/>
        <end position="3920"/>
    </location>
</feature>
<feature type="site" description="Cleavage; by 3CL-PRO" evidence="26 49">
    <location>
        <begin position="4117"/>
        <end position="4118"/>
    </location>
</feature>
<feature type="site" description="Cleavage; by 3CL-PRO" evidence="26 49">
    <location>
        <begin position="4230"/>
        <end position="4231"/>
    </location>
</feature>
<feature type="site" description="Cleavage; by 3CL-PRO" evidence="26">
    <location>
        <begin position="4369"/>
        <end position="4370"/>
    </location>
</feature>
<feature type="disulfide bond" evidence="22">
    <location>
        <begin position="2240"/>
        <end position="2268"/>
    </location>
</feature>
<feature type="disulfide bond" evidence="22">
    <location>
        <begin position="2259"/>
        <end position="2265"/>
    </location>
</feature>
<feature type="sequence variant" description="In strain: Isolate GD01.">
    <original>G</original>
    <variation>C</variation>
    <location>
        <position position="82"/>
    </location>
</feature>
<feature type="sequence variant" description="In strain: Isolate GD01.">
    <original>G</original>
    <variation>R</variation>
    <location>
        <position position="130"/>
    </location>
</feature>
<feature type="sequence variant" description="In strain: Isolate SZ16.">
    <original>I</original>
    <variation>T</variation>
    <location>
        <position position="138"/>
    </location>
</feature>
<feature type="sequence variant" description="In strain: Isolate Shanghai LY.">
    <original>A</original>
    <variation>V</variation>
    <location>
        <position position="181"/>
    </location>
</feature>
<feature type="sequence variant" description="In strain: Isolate GD01.">
    <original>K</original>
    <variation>Q</variation>
    <location>
        <position position="225"/>
    </location>
</feature>
<feature type="sequence variant" description="In strain: Isolate Shanghai LY.">
    <original>Y</original>
    <variation>C</variation>
    <location>
        <position position="249"/>
    </location>
</feature>
<feature type="sequence variant" description="In strain: Isolate BJ04.">
    <original>V</original>
    <variation>F</variation>
    <location>
        <position position="306"/>
    </location>
</feature>
<feature type="sequence variant" description="In strain: Isolate SZ3.">
    <original>A</original>
    <variation>S</variation>
    <location>
        <position position="549"/>
    </location>
</feature>
<feature type="sequence variant" description="In strain: Isolate FRA and Isolate Frankfurt-1.">
    <original>A</original>
    <variation>T</variation>
    <location>
        <position position="765"/>
    </location>
</feature>
<feature type="sequence variant" description="In strain: Isolate SZ16.">
    <original>K</original>
    <variation>R</variation>
    <location>
        <position position="852"/>
    </location>
</feature>
<feature type="sequence variant" description="In strain: Isolate BJ03.">
    <original>N</original>
    <variation>H</variation>
    <location>
        <position position="1004"/>
    </location>
</feature>
<feature type="sequence variant" description="In strain: Isolate SZ3 and Isolate SZ16.">
    <original>V</original>
    <variation>A</variation>
    <location>
        <position position="1021"/>
    </location>
</feature>
<feature type="sequence variant" description="In strain: Isolate Shanghai QXC1.">
    <original>I</original>
    <variation>T</variation>
    <location>
        <position position="1023"/>
    </location>
</feature>
<feature type="sequence variant" description="In strain: Isolate GD01, Isolate SZ3 and Isolate SZ16.">
    <original>I</original>
    <variation>T</variation>
    <location>
        <position position="1121"/>
    </location>
</feature>
<feature type="sequence variant" description="In strain: Isolate SZ3 and Isolate SZ16.">
    <original>P</original>
    <variation>L</variation>
    <location>
        <position position="1136"/>
    </location>
</feature>
<feature type="sequence variant" description="In strain: Isolate Shanghai QXC1.">
    <original>K</original>
    <variation>E</variation>
    <location>
        <position position="1257"/>
    </location>
</feature>
<feature type="sequence variant" description="In strain: Isolate GD01.">
    <original>K</original>
    <variation>R</variation>
    <location>
        <position position="1319"/>
    </location>
</feature>
<feature type="sequence variant" description="In strain: Isolate GD01.">
    <original>F</original>
    <variation>S</variation>
    <location>
        <position position="1329"/>
    </location>
</feature>
<feature type="sequence variant" description="In strain: Isolate Shanghai QXC1.">
    <original>T</original>
    <variation>A</variation>
    <location>
        <position position="1361"/>
    </location>
</feature>
<feature type="sequence variant" description="In strain: Isolate Shanghai QXC1.">
    <original>I</original>
    <variation>V</variation>
    <location>
        <position position="1385"/>
    </location>
</feature>
<feature type="sequence variant" description="In strain: Isolate GD01.">
    <original>S</original>
    <variation>T</variation>
    <location>
        <position position="1538"/>
    </location>
</feature>
<feature type="sequence variant" description="In strain: Isolate BJ02.">
    <original>M</original>
    <variation>K</variation>
    <location>
        <position position="1563"/>
    </location>
</feature>
<feature type="sequence variant" description="In strain: Isolate SZ3 and Isolate SZ16.">
    <original>L</original>
    <variation>I</variation>
    <location>
        <position position="1663"/>
    </location>
</feature>
<feature type="sequence variant" description="In strain: Isolate BJ03.">
    <original>I</original>
    <variation>L</variation>
    <location>
        <position position="1762"/>
    </location>
</feature>
<feature type="sequence variant" description="In strain: Isolate BJ03.">
    <original>QQ</original>
    <variation>PP</variation>
    <location>
        <begin position="1776"/>
        <end position="1777"/>
    </location>
</feature>
<feature type="sequence variant" description="In strain: Isolate Shanghai QXC1.">
    <original>E</original>
    <variation>G</variation>
    <location>
        <position position="1790"/>
    </location>
</feature>
<feature type="sequence variant" description="In strain: Isolate BJ02.">
    <original>G</original>
    <variation>V</variation>
    <location>
        <position position="1806"/>
    </location>
</feature>
<feature type="sequence variant" description="In strain: Isolate BJ04.">
    <original>L</original>
    <variation>I</variation>
    <location>
        <position position="1962"/>
    </location>
</feature>
<feature type="sequence variant" description="In strain: Isolate GD01, Isolate SZ3 and Isolate SZ16.">
    <original>L</original>
    <variation>F</variation>
    <location>
        <position position="2116"/>
    </location>
</feature>
<feature type="sequence variant" description="In strain: Isolate GD01, Isolate SZ3 and Isolate SZ16.">
    <original>C</original>
    <variation>Y</variation>
    <location>
        <position position="2222"/>
    </location>
</feature>
<feature type="sequence variant" description="In strain: Isolate SZ3 and Isolate SZ16.">
    <original>L</original>
    <variation>S</variation>
    <location>
        <position position="2269"/>
    </location>
</feature>
<feature type="sequence variant" description="In strain: Isolate Shanghai QXC1.">
    <original>V</original>
    <variation>A</variation>
    <location>
        <position position="2326"/>
    </location>
</feature>
<feature type="sequence variant" description="In strain: Isolate Shanghai QXC1.">
    <original>RNR</original>
    <variation>CNH</variation>
    <location>
        <begin position="2392"/>
        <end position="2394"/>
    </location>
</feature>
<feature type="sequence variant" description="In strain: Isolate Shanghai QXC1.">
    <original>L</original>
    <variation>P</variation>
    <location>
        <position position="2480"/>
    </location>
</feature>
<feature type="sequence variant" description="In strain: Isolate Urbani and Isolate Taiwan TC2.">
    <original>A</original>
    <variation>V</variation>
    <location>
        <position position="2552"/>
    </location>
</feature>
<feature type="sequence variant" description="In strain: Isolate HKU-39849.">
    <original>D</original>
    <variation>N</variation>
    <location>
        <position position="2556"/>
    </location>
</feature>
<feature type="sequence variant" description="In strain: Isolate GD01.">
    <original>S</original>
    <variation>P</variation>
    <location>
        <position position="2564"/>
    </location>
</feature>
<feature type="sequence variant" description="In strain: Isolate Shanghai QXC1.">
    <original>N</original>
    <variation>Y</variation>
    <location>
        <position position="2648"/>
    </location>
</feature>
<feature type="sequence variant" description="In strain: Isolate HKU-39849.">
    <original>S</original>
    <variation>T</variation>
    <location>
        <position position="2708"/>
    </location>
</feature>
<feature type="sequence variant" description="In strain: Isolate HKU-39849.">
    <original>R</original>
    <variation>T</variation>
    <location>
        <position position="2718"/>
    </location>
</feature>
<feature type="sequence variant" description="In strain: Isolate SZ3 and Isolate SZ16.">
    <original>C</original>
    <variation>W</variation>
    <location>
        <position position="2746"/>
    </location>
</feature>
<feature type="sequence variant" description="In strain: Isolate BJ01 and Isolate BJ02.">
    <original>V</original>
    <variation>L</variation>
    <location>
        <position position="2770"/>
    </location>
</feature>
<feature type="sequence variant" description="In strain: Isolate SIN2500, Isolate GD01 and Isolate GZ50.">
    <original>T</original>
    <variation>I</variation>
    <location>
        <position position="2944"/>
    </location>
</feature>
<feature type="sequence variant" description="In strain: Isolate GD01 and Isolate SZ16.">
    <original>V</original>
    <variation>A</variation>
    <location>
        <position position="2971"/>
    </location>
</feature>
<feature type="sequence variant" description="In strain: Isolate Shanghai QXC1.">
    <original>V</original>
    <variation>A</variation>
    <location>
        <position position="3020"/>
    </location>
</feature>
<feature type="sequence variant" description="In strain: Isolate CUHK-W1, Isolate GD01, Isolate SZ3, Isolate SZ16, Isolate BJ01, Isolate BJ02, Isolate BJ03 and Isolate Shanghai QXC1.">
    <original>V</original>
    <variation>A</variation>
    <location>
        <position position="3047"/>
    </location>
</feature>
<feature type="sequence variant" description="In strain: Isolate CUHK-W1, Isolate SZ3, Isolate SZ16 and Isolate GD01.">
    <original>V</original>
    <variation>A</variation>
    <location>
        <position position="3072"/>
    </location>
</feature>
<feature type="sequence variant" description="In strain: Isolate BJ01, Isolate BJ02, Isolate BJ03, Isolate BJ04 and Isolate Shanghai QXC1.">
    <original>A</original>
    <variation>V</variation>
    <location>
        <position position="3197"/>
    </location>
</feature>
<feature type="sequence variant" description="In strain: Isolate BJ02.">
    <original>Q</original>
    <variation>P</variation>
    <location>
        <position position="3429"/>
    </location>
</feature>
<feature type="sequence variant" description="In strain: Isolate BJ04.">
    <original>D</original>
    <variation>E</variation>
    <location>
        <position position="3488"/>
    </location>
</feature>
<feature type="sequence variant" description="In strain: Isolate Shanghai QXC1.">
    <original>V</original>
    <variation>A</variation>
    <location>
        <position position="3717"/>
    </location>
</feature>
<feature type="sequence variant" description="In strain: Isolate BJ04.">
    <original>N</original>
    <variation>T</variation>
    <location>
        <position position="3818"/>
    </location>
</feature>
<feature type="sequence variant" description="In strain: Isolate BJ03.">
    <original>D</original>
    <variation>N</variation>
    <location>
        <position position="3903"/>
    </location>
</feature>
<feature type="sequence variant" description="In strain: Isolate BJ02.">
    <original>I</original>
    <variation>F</variation>
    <location>
        <position position="3904"/>
    </location>
</feature>
<feature type="sequence variant" description="In strain: Isolate Shanghai QXC1.">
    <original>M</original>
    <variation>V</variation>
    <location>
        <position position="3911"/>
    </location>
</feature>
<feature type="sequence variant" description="In strain: Isolate Shanghai LY.">
    <original>K</original>
    <variation>Q</variation>
    <location>
        <position position="4001"/>
    </location>
</feature>
<feature type="sequence variant" description="In strain: Isolate Shanghai LY.">
    <original>T</original>
    <variation>A</variation>
    <location>
        <position position="4003"/>
    </location>
</feature>
<feature type="sequence variant" description="In strain: Isolate ZJ01.">
    <original>I</original>
    <variation>H</variation>
    <location>
        <position position="4085"/>
    </location>
</feature>
<feature type="sequence variant" description="In strain: Isolate Shanghai QXC1.">
    <original>V</original>
    <variation>A</variation>
    <location>
        <position position="4114"/>
    </location>
</feature>
<feature type="sequence variant" description="In strain: Isolate Shanghai QXC1.">
    <original>V</original>
    <variation>M</variation>
    <location>
        <position position="4202"/>
    </location>
</feature>
<feature type="sequence variant" description="In strain: Isolate ZJ01.">
    <original>N</original>
    <variation>H</variation>
    <location>
        <position position="4240"/>
    </location>
</feature>
<feature type="sequence variant" description="In strain: Isolate Shanghai QXC1.">
    <original>E</original>
    <variation>G</variation>
    <location>
        <position position="4296"/>
    </location>
</feature>
<feature type="sequence variant" description="In strain: Isolate Shanghai QXC1.">
    <original>LN</original>
    <variation>FK</variation>
    <location>
        <begin position="4377"/>
        <end position="4378"/>
    </location>
</feature>
<feature type="strand" evidence="59">
    <location>
        <begin position="1208"/>
        <end position="1211"/>
    </location>
</feature>
<feature type="strand" evidence="59">
    <location>
        <begin position="1214"/>
        <end position="1216"/>
    </location>
</feature>
<feature type="helix" evidence="59">
    <location>
        <begin position="1219"/>
        <end position="1222"/>
    </location>
</feature>
<feature type="turn" evidence="59">
    <location>
        <begin position="1223"/>
        <end position="1225"/>
    </location>
</feature>
<feature type="strand" evidence="59">
    <location>
        <begin position="1229"/>
        <end position="1233"/>
    </location>
</feature>
<feature type="helix" evidence="59">
    <location>
        <begin position="1241"/>
        <end position="1244"/>
    </location>
</feature>
<feature type="helix" evidence="59">
    <location>
        <begin position="1253"/>
        <end position="1255"/>
    </location>
</feature>
<feature type="turn" evidence="59">
    <location>
        <begin position="1256"/>
        <end position="1258"/>
    </location>
</feature>
<feature type="strand" evidence="59">
    <location>
        <begin position="1266"/>
        <end position="1269"/>
    </location>
</feature>
<feature type="strand" evidence="59">
    <location>
        <begin position="1272"/>
        <end position="1276"/>
    </location>
</feature>
<feature type="helix" evidence="59">
    <location>
        <begin position="1280"/>
        <end position="1282"/>
    </location>
</feature>
<feature type="helix" evidence="59">
    <location>
        <begin position="1286"/>
        <end position="1293"/>
    </location>
</feature>
<feature type="strand" evidence="59">
    <location>
        <begin position="1298"/>
        <end position="1303"/>
    </location>
</feature>
<feature type="helix" evidence="59">
    <location>
        <begin position="1315"/>
        <end position="1324"/>
    </location>
</feature>
<feature type="strand" evidence="59">
    <location>
        <begin position="1325"/>
        <end position="1331"/>
    </location>
</feature>
<feature type="helix" evidence="59">
    <location>
        <begin position="1343"/>
        <end position="1345"/>
    </location>
</feature>
<feature type="helix" evidence="59">
    <location>
        <begin position="1351"/>
        <end position="1361"/>
    </location>
</feature>
<feature type="strand" evidence="59">
    <location>
        <begin position="1364"/>
        <end position="1368"/>
    </location>
</feature>
<feature type="helix" evidence="59">
    <location>
        <begin position="1372"/>
        <end position="1381"/>
    </location>
</feature>
<feature type="turn" evidence="59">
    <location>
        <begin position="1382"/>
        <end position="1384"/>
    </location>
</feature>
<feature type="strand" evidence="59">
    <location>
        <begin position="1389"/>
        <end position="1401"/>
    </location>
</feature>
<feature type="strand" evidence="59">
    <location>
        <begin position="1403"/>
        <end position="1405"/>
    </location>
</feature>
<feature type="helix" evidence="59">
    <location>
        <begin position="1407"/>
        <end position="1417"/>
    </location>
</feature>
<feature type="strand" evidence="59">
    <location>
        <begin position="1421"/>
        <end position="1423"/>
    </location>
</feature>
<feature type="turn" evidence="59">
    <location>
        <begin position="1429"/>
        <end position="1431"/>
    </location>
</feature>
<feature type="helix" evidence="59">
    <location>
        <begin position="1435"/>
        <end position="1442"/>
    </location>
</feature>
<feature type="strand" evidence="59">
    <location>
        <begin position="1449"/>
        <end position="1452"/>
    </location>
</feature>
<feature type="helix" evidence="59">
    <location>
        <begin position="1456"/>
        <end position="1467"/>
    </location>
</feature>
<feature type="helix" evidence="56">
    <location>
        <begin position="1473"/>
        <end position="1484"/>
    </location>
</feature>
<feature type="strand" evidence="57">
    <location>
        <begin position="1485"/>
        <end position="1487"/>
    </location>
</feature>
<feature type="strand" evidence="56">
    <location>
        <begin position="1500"/>
        <end position="1506"/>
    </location>
</feature>
<feature type="strand" evidence="56">
    <location>
        <begin position="1509"/>
        <end position="1513"/>
    </location>
</feature>
<feature type="strand" evidence="56">
    <location>
        <begin position="1515"/>
        <end position="1518"/>
    </location>
</feature>
<feature type="strand" evidence="56">
    <location>
        <begin position="1521"/>
        <end position="1523"/>
    </location>
</feature>
<feature type="strand" evidence="57">
    <location>
        <begin position="1526"/>
        <end position="1528"/>
    </location>
</feature>
<feature type="helix" evidence="56">
    <location>
        <begin position="1530"/>
        <end position="1537"/>
    </location>
</feature>
<feature type="strand" evidence="65">
    <location>
        <begin position="1544"/>
        <end position="1555"/>
    </location>
</feature>
<feature type="strand" evidence="65">
    <location>
        <begin position="1557"/>
        <end position="1562"/>
    </location>
</feature>
<feature type="strand" evidence="66">
    <location>
        <begin position="1563"/>
        <end position="1565"/>
    </location>
</feature>
<feature type="helix" evidence="65">
    <location>
        <begin position="1567"/>
        <end position="1570"/>
    </location>
</feature>
<feature type="strand" evidence="65">
    <location>
        <begin position="1571"/>
        <end position="1576"/>
    </location>
</feature>
<feature type="helix" evidence="67">
    <location>
        <begin position="1581"/>
        <end position="1583"/>
    </location>
</feature>
<feature type="helix" evidence="65">
    <location>
        <begin position="1588"/>
        <end position="1590"/>
    </location>
</feature>
<feature type="strand" evidence="65">
    <location>
        <begin position="1594"/>
        <end position="1597"/>
    </location>
</feature>
<feature type="helix" evidence="65">
    <location>
        <begin position="1602"/>
        <end position="1612"/>
    </location>
</feature>
<feature type="helix" evidence="65">
    <location>
        <begin position="1619"/>
        <end position="1630"/>
    </location>
</feature>
<feature type="turn" evidence="67">
    <location>
        <begin position="1648"/>
        <end position="1650"/>
    </location>
</feature>
<feature type="helix" evidence="65">
    <location>
        <begin position="1651"/>
        <end position="1660"/>
    </location>
</feature>
<feature type="strand" evidence="65">
    <location>
        <begin position="1667"/>
        <end position="1669"/>
    </location>
</feature>
<feature type="helix" evidence="65">
    <location>
        <begin position="1670"/>
        <end position="1680"/>
    </location>
</feature>
<feature type="helix" evidence="65">
    <location>
        <begin position="1685"/>
        <end position="1695"/>
    </location>
</feature>
<feature type="helix" evidence="65">
    <location>
        <begin position="1705"/>
        <end position="1713"/>
    </location>
</feature>
<feature type="strand" evidence="65">
    <location>
        <begin position="1722"/>
        <end position="1729"/>
    </location>
</feature>
<feature type="turn" evidence="65">
    <location>
        <begin position="1730"/>
        <end position="1732"/>
    </location>
</feature>
<feature type="strand" evidence="65">
    <location>
        <begin position="1733"/>
        <end position="1740"/>
    </location>
</feature>
<feature type="helix" evidence="65">
    <location>
        <begin position="1741"/>
        <end position="1744"/>
    </location>
</feature>
<feature type="strand" evidence="65">
    <location>
        <begin position="1746"/>
        <end position="1749"/>
    </location>
</feature>
<feature type="helix" evidence="65">
    <location>
        <begin position="1753"/>
        <end position="1758"/>
    </location>
</feature>
<feature type="strand" evidence="65">
    <location>
        <begin position="1760"/>
        <end position="1763"/>
    </location>
</feature>
<feature type="strand" evidence="65">
    <location>
        <begin position="1767"/>
        <end position="1794"/>
    </location>
</feature>
<feature type="strand" evidence="65">
    <location>
        <begin position="1799"/>
        <end position="1806"/>
    </location>
</feature>
<feature type="strand" evidence="65">
    <location>
        <begin position="1811"/>
        <end position="1826"/>
    </location>
</feature>
<feature type="strand" evidence="65">
    <location>
        <begin position="1829"/>
        <end position="1846"/>
    </location>
</feature>
<feature type="strand" evidence="65">
    <location>
        <begin position="1848"/>
        <end position="1851"/>
    </location>
</feature>
<feature type="helix" evidence="70">
    <location>
        <begin position="3251"/>
        <end position="3254"/>
    </location>
</feature>
<feature type="strand" evidence="70">
    <location>
        <begin position="3257"/>
        <end position="3262"/>
    </location>
</feature>
<feature type="strand" evidence="70">
    <location>
        <begin position="3265"/>
        <end position="3272"/>
    </location>
</feature>
<feature type="strand" evidence="70">
    <location>
        <begin position="3275"/>
        <end position="3279"/>
    </location>
</feature>
<feature type="helix" evidence="70">
    <location>
        <begin position="3280"/>
        <end position="3283"/>
    </location>
</feature>
<feature type="helix" evidence="70">
    <location>
        <begin position="3288"/>
        <end position="3290"/>
    </location>
</feature>
<feature type="helix" evidence="70">
    <location>
        <begin position="3294"/>
        <end position="3299"/>
    </location>
</feature>
<feature type="helix" evidence="70">
    <location>
        <begin position="3303"/>
        <end position="3305"/>
    </location>
</feature>
<feature type="strand" evidence="70">
    <location>
        <begin position="3307"/>
        <end position="3310"/>
    </location>
</feature>
<feature type="strand" evidence="70">
    <location>
        <begin position="3313"/>
        <end position="3315"/>
    </location>
</feature>
<feature type="strand" evidence="70">
    <location>
        <begin position="3317"/>
        <end position="3323"/>
    </location>
</feature>
<feature type="strand" evidence="70">
    <location>
        <begin position="3326"/>
        <end position="3333"/>
    </location>
</feature>
<feature type="strand" evidence="70">
    <location>
        <begin position="3340"/>
        <end position="3343"/>
    </location>
</feature>
<feature type="strand" evidence="70">
    <location>
        <begin position="3351"/>
        <end position="3358"/>
    </location>
</feature>
<feature type="strand" evidence="70">
    <location>
        <begin position="3361"/>
        <end position="3370"/>
    </location>
</feature>
<feature type="turn" evidence="62">
    <location>
        <begin position="3380"/>
        <end position="3383"/>
    </location>
</feature>
<feature type="strand" evidence="70">
    <location>
        <begin position="3388"/>
        <end position="3393"/>
    </location>
</feature>
<feature type="strand" evidence="70">
    <location>
        <begin position="3396"/>
        <end position="3406"/>
    </location>
</feature>
<feature type="turn" evidence="61">
    <location>
        <begin position="3408"/>
        <end position="3410"/>
    </location>
</feature>
<feature type="strand" evidence="70">
    <location>
        <begin position="3412"/>
        <end position="3415"/>
    </location>
</feature>
<feature type="strand" evidence="63">
    <location>
        <begin position="3417"/>
        <end position="3419"/>
    </location>
</feature>
<feature type="strand" evidence="70">
    <location>
        <begin position="3421"/>
        <end position="3424"/>
    </location>
</feature>
<feature type="strand" evidence="70">
    <location>
        <begin position="3427"/>
        <end position="3430"/>
    </location>
</feature>
<feature type="helix" evidence="70">
    <location>
        <begin position="3441"/>
        <end position="3453"/>
    </location>
</feature>
<feature type="helix" evidence="70">
    <location>
        <begin position="3467"/>
        <end position="3476"/>
    </location>
</feature>
<feature type="helix" evidence="70">
    <location>
        <begin position="3484"/>
        <end position="3489"/>
    </location>
</feature>
<feature type="helix" evidence="70">
    <location>
        <begin position="3491"/>
        <end position="3497"/>
    </location>
</feature>
<feature type="helix" evidence="70">
    <location>
        <begin position="3501"/>
        <end position="3514"/>
    </location>
</feature>
<feature type="strand" evidence="61">
    <location>
        <begin position="3521"/>
        <end position="3523"/>
    </location>
</feature>
<feature type="strand" evidence="70">
    <location>
        <begin position="3524"/>
        <end position="3526"/>
    </location>
</feature>
<feature type="helix" evidence="70">
    <location>
        <begin position="3533"/>
        <end position="3540"/>
    </location>
</feature>
<feature type="strand" evidence="58">
    <location>
        <begin position="3541"/>
        <end position="3543"/>
    </location>
</feature>
<feature type="helix" evidence="68">
    <location>
        <begin position="3838"/>
        <end position="3855"/>
    </location>
</feature>
<feature type="helix" evidence="68">
    <location>
        <begin position="3858"/>
        <end position="3860"/>
    </location>
</feature>
<feature type="helix" evidence="68">
    <location>
        <begin position="3862"/>
        <end position="3877"/>
    </location>
</feature>
<feature type="helix" evidence="68">
    <location>
        <begin position="3881"/>
        <end position="3896"/>
    </location>
</feature>
<feature type="helix" evidence="68">
    <location>
        <begin position="3904"/>
        <end position="3913"/>
    </location>
</feature>
<feature type="helix" evidence="69">
    <location>
        <begin position="3997"/>
        <end position="4017"/>
    </location>
</feature>
<feature type="helix" evidence="69">
    <location>
        <begin position="4020"/>
        <end position="4027"/>
    </location>
</feature>
<feature type="strand" evidence="69">
    <location>
        <begin position="4029"/>
        <end position="4032"/>
    </location>
</feature>
<feature type="helix" evidence="69">
    <location>
        <begin position="4036"/>
        <end position="4038"/>
    </location>
</feature>
<feature type="helix" evidence="69">
    <location>
        <begin position="4040"/>
        <end position="4043"/>
    </location>
</feature>
<feature type="strand" evidence="69">
    <location>
        <begin position="4045"/>
        <end position="4053"/>
    </location>
</feature>
<feature type="helix" evidence="69">
    <location>
        <begin position="4054"/>
        <end position="4058"/>
    </location>
</feature>
<feature type="strand" evidence="69">
    <location>
        <begin position="4063"/>
        <end position="4068"/>
    </location>
</feature>
<feature type="strand" evidence="69">
    <location>
        <begin position="4071"/>
        <end position="4079"/>
    </location>
</feature>
<feature type="helix" evidence="69">
    <location>
        <begin position="4088"/>
        <end position="4090"/>
    </location>
</feature>
<feature type="helix" evidence="69">
    <location>
        <begin position="4096"/>
        <end position="4098"/>
    </location>
</feature>
<feature type="strand" evidence="69">
    <location>
        <begin position="4101"/>
        <end position="4109"/>
    </location>
</feature>
<feature type="strand" evidence="60">
    <location>
        <begin position="4127"/>
        <end position="4136"/>
    </location>
</feature>
<feature type="turn" evidence="60">
    <location>
        <begin position="4137"/>
        <end position="4139"/>
    </location>
</feature>
<feature type="strand" evidence="60">
    <location>
        <begin position="4142"/>
        <end position="4150"/>
    </location>
</feature>
<feature type="strand" evidence="60">
    <location>
        <begin position="4157"/>
        <end position="4164"/>
    </location>
</feature>
<feature type="strand" evidence="60">
    <location>
        <begin position="4170"/>
        <end position="4173"/>
    </location>
</feature>
<feature type="strand" evidence="60">
    <location>
        <begin position="4180"/>
        <end position="4186"/>
    </location>
</feature>
<feature type="strand" evidence="60">
    <location>
        <begin position="4190"/>
        <end position="4194"/>
    </location>
</feature>
<feature type="strand" evidence="60">
    <location>
        <begin position="4201"/>
        <end position="4208"/>
    </location>
</feature>
<feature type="helix" evidence="60">
    <location>
        <begin position="4213"/>
        <end position="4224"/>
    </location>
</feature>
<feature type="helix" evidence="53">
    <location>
        <begin position="4240"/>
        <end position="4248"/>
    </location>
</feature>
<feature type="strand" evidence="53">
    <location>
        <begin position="4250"/>
        <end position="4252"/>
    </location>
</feature>
<feature type="helix" evidence="53">
    <location>
        <begin position="4253"/>
        <end position="4262"/>
    </location>
</feature>
<feature type="strand" evidence="54">
    <location>
        <begin position="4273"/>
        <end position="4275"/>
    </location>
</feature>
<feature type="strand" evidence="53">
    <location>
        <begin position="4284"/>
        <end position="4288"/>
    </location>
</feature>
<feature type="strand" evidence="53">
    <location>
        <begin position="4295"/>
        <end position="4299"/>
    </location>
</feature>
<feature type="helix" evidence="53">
    <location>
        <begin position="4301"/>
        <end position="4303"/>
    </location>
</feature>
<feature type="helix" evidence="53">
    <location>
        <begin position="4305"/>
        <end position="4309"/>
    </location>
</feature>
<feature type="strand" evidence="64">
    <location>
        <begin position="4314"/>
        <end position="4318"/>
    </location>
</feature>
<feature type="turn" evidence="55">
    <location>
        <begin position="4321"/>
        <end position="4324"/>
    </location>
</feature>
<feature type="strand" evidence="53">
    <location>
        <begin position="4325"/>
        <end position="4330"/>
    </location>
</feature>
<feature type="helix" evidence="53">
    <location>
        <begin position="4331"/>
        <end position="4333"/>
    </location>
</feature>
<feature type="helix" evidence="53">
    <location>
        <begin position="4337"/>
        <end position="4343"/>
    </location>
</feature>
<feature type="turn" evidence="53">
    <location>
        <begin position="4348"/>
        <end position="4350"/>
    </location>
</feature>
<feature type="turn" evidence="53">
    <location>
        <begin position="4354"/>
        <end position="4356"/>
    </location>
</feature>
<comment type="function">
    <molecule>Isoform Replicase polyprotein 1a</molecule>
    <text evidence="51">Multifunctional protein involved in the transcription and replication of viral RNAs. Contains the proteinases responsible for the cleavages of the polyprotein.</text>
</comment>
<comment type="function">
    <molecule>Host translation inhibitor nsp1</molecule>
    <text evidence="44 48">Inhibits host translation by interacting with the 40S ribosomal subunit. The nsp1-40S ribosome complex further induces an endonucleolytic cleavage near the 5'UTR of host mRNAs, targeting them for degradation. Viral mRNAs are not susceptible to nsp1-mediated endonucleolytic RNA cleavage thanks to the presence of a 5'-end leader sequence and are therefore protected from degradation. By suppressing host gene expression, nsp1 facilitates efficient viral gene expression in infected cells and evasion from host immune response (PubMed:23035226). May disrupt nuclear pore function by binding and displacing host NUP93 (PubMed:30943371).</text>
</comment>
<comment type="function">
    <molecule>Non-structural protein 2</molecule>
    <text evidence="40">May play a role in the modulation of host cell survival signaling pathway by interacting with host PHB and PHB2 (PubMed:19640993). Indeed, these two proteins play a role in maintaining the functional integrity of the mitochondria and protecting cells from various stresses (PubMed:19640993).</text>
</comment>
<comment type="function">
    <molecule>Papain-like protease nsp3</molecule>
    <text evidence="32 36 39 45 46 50">Responsible for the cleavages located at the N-terminus of the replicase polyprotein. In addition, PL-PRO possesses a deubiquitinating/deISGylating activity and processes both 'Lys-48'- and 'Lys-63'-linked polyubiquitin chains from cellular substrates (PubMed:17692280). Plays a role in host membrane rearrangement that leads to creation of cytoplasmic double-membrane vesicles (DMV) necessary for viral replication (PubMed:23943763). Nsp3, nsp4 and nsp6 together are sufficient to form DMV (PubMed:23943763, PubMed:24410069). Antagonizes innate immune induction of type I interferon by blocking the phosphorylation, dimerization and subsequent nuclear translocation of host IRF3 (PubMed:19369340, PubMed:24622840). Also prevents host NF-kappa-B signaling (PubMed:19369340, PubMed:24622840).</text>
</comment>
<comment type="function">
    <molecule>Non-structural protein 4</molecule>
    <text evidence="45 50">Plays a role in host membrane rearrangement that leads to creation of cytoplasmic double-membrane vesicles (DMV) necessary for viral replication (PubMed:23943763, PubMed:24410069). Alone appears incapable to induce membrane curvature, but together with nsp3 is able to induce paired membranes (PubMed:23943763). Nsp3, nsp4 and nsp6 together are sufficient to form DMV (PubMed:23943763, PubMed:24410069).</text>
</comment>
<comment type="function">
    <molecule>3C-like proteinase nsp5</molecule>
    <text evidence="8 30">Cleaves the C-terminus of replicase polyprotein at 11 sites. Recognizes substrates containing the core sequence [ILMVF]-Q-|-[SGACN]. Also able to bind an ADP-ribose-1''-phosphate (ADRP). May cleave host ATP6V1G1 thereby modifying host vacuoles intracellular pH.</text>
</comment>
<comment type="function">
    <molecule>Non-structural protein 6</molecule>
    <text evidence="45 47 50">Plays a role in host membrane rearrangement that leads to creation of cytoplasmic double-membrane vesicles (DMV) necessary for viral replication (PubMed:23943763). Nsp3, nsp4 and nsp6 together are sufficient to form DMV (PubMed:23943763, PubMed:24410069). Plays a role in the initial induction of autophagosomes from host endoplasmic reticulum. Later, limits the expansion of these phagosomes that are no longer able to deliver viral components to lysosomes (PubMed:24991833).</text>
</comment>
<comment type="function">
    <molecule>Non-structural protein 7</molecule>
    <text evidence="42">Forms a hexadecamer with nsp8 (8 subunits of each) that may participate in viral replication by acting as a primase. Alternatively, may synthesize substantially longer products than oligonucleotide primers.</text>
</comment>
<comment type="function">
    <molecule>Non-structural protein 8</molecule>
    <text evidence="42">Forms a hexadecamer with nsp7 (8 subunits of each) that may participate in viral replication by acting as a primase. Alternatively, may synthesize substantially longer products than oligonucleotide primers.</text>
</comment>
<comment type="function">
    <molecule>RNA-capping enzyme subunit nsp9</molecule>
    <text evidence="2 38">Catalytic subunit of viral RNA capping enzyme which catalyzes the RNA guanylyltransferase reaction for genomic and sub-genomic RNAs. The kinase-like NiRAN domain of NSP12 transfers RNA to the amino terminus of NSP9, forming a covalent RNA-protein intermediate. Subsequently, the NiRAN domain transfers RNA to GDP, forming the core cap structure GpppA-RNA. The NSP14 and NSP16 methyltransferases then add methyl groups to form functional cap structures.</text>
</comment>
<comment type="function">
    <molecule>Non-structural protein 10</molecule>
    <text evidence="43">Plays a pivotal role in viral transcription by stimulating both nsp14 3'-5' exoribonuclease and nsp16 2'-O-methyltransferase activities. Therefore plays an essential role in viral mRNAs cap methylation.</text>
</comment>
<comment type="catalytic activity">
    <molecule>3C-like proteinase nsp5</molecule>
    <reaction evidence="25 26">
        <text>TSAVLQ-|-SGFRK-NH2 and SGVTFQ-|-GKFKK the two peptides corresponding to the two self-cleavage sites of the SARS 3C-like proteinase are the two most reactive peptide substrates. The enzyme exhibits a strong preference for substrates containing Gln at P1 position and Leu at P2 position.</text>
        <dbReference type="EC" id="3.4.22.69"/>
    </reaction>
</comment>
<comment type="catalytic activity">
    <molecule>Papain-like protease nsp3</molecule>
    <reaction evidence="25 36">
        <text>Thiol-dependent hydrolysis of ester, thioester, amide, peptide and isopeptide bonds formed by the C-terminal Gly of ubiquitin (a 76-residue protein attached to proteins as an intracellular targeting signal).</text>
        <dbReference type="EC" id="3.4.19.12"/>
    </reaction>
</comment>
<comment type="catalytic activity">
    <molecule>RNA-capping enzyme subunit nsp9</molecule>
    <reaction evidence="2">
        <text>a 5'-end diphospho-ribonucleoside in mRNA + GTP + H(+) = a 5'-end (5'-triphosphoguanosine)-ribonucleoside in mRNA + diphosphate</text>
        <dbReference type="Rhea" id="RHEA:67012"/>
        <dbReference type="Rhea" id="RHEA-COMP:17165"/>
        <dbReference type="Rhea" id="RHEA-COMP:17166"/>
        <dbReference type="ChEBI" id="CHEBI:15378"/>
        <dbReference type="ChEBI" id="CHEBI:33019"/>
        <dbReference type="ChEBI" id="CHEBI:37565"/>
        <dbReference type="ChEBI" id="CHEBI:167616"/>
        <dbReference type="ChEBI" id="CHEBI:167617"/>
        <dbReference type="EC" id="2.7.7.50"/>
    </reaction>
    <physiologicalReaction direction="right-to-left" evidence="2">
        <dbReference type="Rhea" id="RHEA:67014"/>
    </physiologicalReaction>
</comment>
<comment type="cofactor">
    <molecule>Papain-like protease nsp3</molecule>
    <cofactor evidence="33">
        <name>Zn(2+)</name>
        <dbReference type="ChEBI" id="CHEBI:29105"/>
    </cofactor>
</comment>
<comment type="biophysicochemical properties">
    <kinetics>
        <KM evidence="26">1.15 mM for peptide TSAVLQSGFRK-NH(2)</KM>
        <KM evidence="26">0.58 mM for peptide SGVTFQGKFKK</KM>
        <KM evidence="26">1.44 mM for peptide ATVRLQAGNAT</KM>
        <text>The kinetic parameters are studied for the 3C-like proteinase domain.</text>
    </kinetics>
    <phDependence>
        <text evidence="26">Optimum pH is 7.0 for 3C-like proteinase activity.</text>
    </phDependence>
</comment>
<comment type="subunit">
    <molecule>Non-structural protein 2</molecule>
    <text evidence="40">Interacts with host PHB and PHB2.</text>
</comment>
<comment type="subunit">
    <molecule>Non-structural protein 4</molecule>
    <text evidence="41">Interacts with papain-like protease and non-structural protein 6.</text>
</comment>
<comment type="subunit">
    <molecule>3C-like proteinase nsp5</molecule>
    <text evidence="26 28">Exists as monomer and homodimer. Only the homodimer shows catalytic activity.</text>
</comment>
<comment type="subunit">
    <molecule>Non-structural protein 7</molecule>
    <text evidence="31">Eight copies of nsp7 and eight copies of nsp8 assemble to form a heterohexadecamer dsRNA-encircling ring structure.</text>
</comment>
<comment type="subunit">
    <molecule>Non-structural protein 8</molecule>
    <text evidence="31 35">Eight copies of nsp7 and eight copies of nsp8 assemble to form a heterohexadecamer dsRNA-encircling ring structure (PubMed:16228002). Interacts with ORF6 protein (PubMed:17532020).</text>
</comment>
<comment type="subunit">
    <molecule>RNA-capping enzyme subunit nsp9</molecule>
    <text evidence="38">Homodimer.</text>
</comment>
<comment type="subunit">
    <molecule>Non-structural protein 10</molecule>
    <text evidence="34">Homododecamer.</text>
</comment>
<comment type="interaction">
    <interactant intactId="EBI-15810860">
        <id>P0C6U8</id>
    </interactant>
    <interactant intactId="EBI-15810860">
        <id>P0C6U8</id>
        <label>1a</label>
    </interactant>
    <organismsDiffer>false</organismsDiffer>
    <experiments>6</experiments>
</comment>
<comment type="interaction">
    <interactant intactId="EBI-15810860">
        <id>P0C6U8</id>
    </interactant>
    <interactant intactId="EBI-25496008">
        <id>PRO_0000338259</id>
        <label>1a</label>
        <dbReference type="UniProtKB" id="P0C6U8"/>
    </interactant>
    <organismsDiffer>false</organismsDiffer>
    <experiments>3</experiments>
</comment>
<comment type="interaction">
    <interactant intactId="EBI-25635190">
        <id>PRO_0000338257</id>
    </interactant>
    <interactant intactId="EBI-746466">
        <id>P05161</id>
        <label>ISG15</label>
    </interactant>
    <organismsDiffer>true</organismsDiffer>
    <experiments>5</experiments>
</comment>
<comment type="interaction">
    <interactant intactId="EBI-25635190">
        <id>PRO_0000338257</id>
    </interactant>
    <interactant intactId="EBI-8345781">
        <id>Q64339</id>
        <label>Isg15</label>
    </interactant>
    <organismsDiffer>true</organismsDiffer>
    <experiments>3</experiments>
</comment>
<comment type="interaction">
    <interactant intactId="EBI-25635190">
        <id>PRO_0000338257</id>
    </interactant>
    <interactant intactId="EBI-25760965">
        <id>L5LC70</id>
        <label>MDA_GLEAN10007532</label>
    </interactant>
    <organismsDiffer>true</organismsDiffer>
    <experiments>2</experiments>
</comment>
<comment type="interaction">
    <interactant intactId="EBI-25635190">
        <id>PRO_0000338257</id>
    </interactant>
    <interactant intactId="EBI-12101100">
        <id>Q9H074-2</id>
        <label>PAIP1</label>
    </interactant>
    <organismsDiffer>true</organismsDiffer>
    <experiments>7</experiments>
</comment>
<comment type="interaction">
    <interactant intactId="EBI-25635190">
        <id>PRO_0000338257</id>
    </interactant>
    <interactant intactId="EBI-25820711">
        <id>PRO_0000396474</id>
        <label>RPS27A</label>
        <dbReference type="UniProtKB" id="P62992"/>
    </interactant>
    <organismsDiffer>true</organismsDiffer>
    <experiments>2</experiments>
</comment>
<comment type="interaction">
    <interactant intactId="EBI-25610723">
        <id>PRO_0000338263</id>
    </interactant>
    <interactant intactId="EBI-25610723">
        <id>PRO_0000338263</id>
        <label>1a</label>
        <dbReference type="UniProtKB" id="P0C6U8"/>
    </interactant>
    <organismsDiffer>false</organismsDiffer>
    <experiments>4</experiments>
</comment>
<comment type="interaction">
    <interactant intactId="EBI-25492625">
        <id>PRO_0000338265</id>
    </interactant>
    <interactant intactId="EBI-25474098">
        <id>PRO_0000037310</id>
        <label>rep</label>
        <dbReference type="UniProtKB" id="P0C6X7"/>
    </interactant>
    <organismsDiffer>false</organismsDiffer>
    <experiments>2</experiments>
</comment>
<comment type="subcellular location">
    <molecule>Non-structural protein 2</molecule>
    <subcellularLocation>
        <location evidence="3">Host cytoplasm</location>
    </subcellularLocation>
    <subcellularLocation>
        <location evidence="3">Host endosome</location>
    </subcellularLocation>
</comment>
<comment type="subcellular location">
    <molecule>Papain-like protease nsp3</molecule>
    <subcellularLocation>
        <location evidence="51">Host membrane</location>
        <topology>Multi-pass membrane protein</topology>
    </subcellularLocation>
    <subcellularLocation>
        <location evidence="45">Host cytoplasm</location>
    </subcellularLocation>
</comment>
<comment type="subcellular location">
    <molecule>Non-structural protein 4</molecule>
    <subcellularLocation>
        <location>Host membrane</location>
        <topology>Multi-pass membrane protein</topology>
    </subcellularLocation>
    <subcellularLocation>
        <location evidence="45">Host cytoplasm</location>
    </subcellularLocation>
    <text evidence="41 45">Localizes in virally-induced cytoplasmic double-membrane vesicles.</text>
</comment>
<comment type="subcellular location">
    <molecule>3C-like proteinase nsp5</molecule>
    <subcellularLocation>
        <location evidence="3">Host cytoplasm</location>
    </subcellularLocation>
    <subcellularLocation>
        <location evidence="3">Host Golgi apparatus</location>
    </subcellularLocation>
</comment>
<comment type="subcellular location">
    <molecule>Non-structural protein 6</molecule>
    <subcellularLocation>
        <location evidence="51">Host membrane</location>
        <topology evidence="51">Multi-pass membrane protein</topology>
    </subcellularLocation>
</comment>
<comment type="subcellular location">
    <molecule>Non-structural protein 7</molecule>
    <subcellularLocation>
        <location evidence="1">Host cytoplasm</location>
        <location evidence="1">Host perinuclear region</location>
    </subcellularLocation>
    <subcellularLocation>
        <location evidence="3">Host cytoplasm</location>
    </subcellularLocation>
    <subcellularLocation>
        <location evidence="3">Host endoplasmic reticulum</location>
    </subcellularLocation>
    <text>nsp7, nsp8, nsp9 and nsp10 are localized in cytoplasmic foci, largely perinuclear. Late in infection, they merge into confluent complexes.</text>
</comment>
<comment type="subcellular location">
    <molecule>Non-structural protein 8</molecule>
    <subcellularLocation>
        <location evidence="35">Host cytoplasm</location>
        <location evidence="35">Host perinuclear region</location>
    </subcellularLocation>
    <subcellularLocation>
        <location evidence="3">Host cytoplasm</location>
    </subcellularLocation>
    <subcellularLocation>
        <location evidence="3">Host endoplasmic reticulum</location>
    </subcellularLocation>
    <text>nsp7, nsp8, nsp9 and nsp10 are localized in cytoplasmic foci, largely perinuclear. Late in infection, they merge into confluent complexes.</text>
</comment>
<comment type="subcellular location">
    <molecule>RNA-capping enzyme subunit nsp9</molecule>
    <subcellularLocation>
        <location evidence="1">Host cytoplasm</location>
        <location evidence="1">Host perinuclear region</location>
    </subcellularLocation>
    <subcellularLocation>
        <location evidence="3">Host cytoplasm</location>
    </subcellularLocation>
    <subcellularLocation>
        <location evidence="3">Host endoplasmic reticulum</location>
    </subcellularLocation>
    <text>nsp7, nsp8, nsp9 and nsp10 are localized in cytoplasmic foci, largely perinuclear. Late in infection, they merge into confluent complexes.</text>
</comment>
<comment type="subcellular location">
    <molecule>Non-structural protein 10</molecule>
    <subcellularLocation>
        <location evidence="1">Host cytoplasm</location>
        <location evidence="1">Host perinuclear region</location>
    </subcellularLocation>
    <subcellularLocation>
        <location evidence="3">Host cytoplasm</location>
    </subcellularLocation>
    <subcellularLocation>
        <location evidence="3">Host endoplasmic reticulum</location>
    </subcellularLocation>
    <text>nsp7, nsp8, nsp9 and nsp10 are localized in cytoplasmic foci, largely perinuclear. Late in infection, they merge into confluent complexes.</text>
</comment>
<comment type="alternative products">
    <event type="ribosomal frameshifting"/>
    <isoform>
        <id>P0C6U8-1</id>
        <name>Replicase polyprotein 1a</name>
        <name>pp1a</name>
        <name>ORF1a polyprotein</name>
        <sequence type="displayed"/>
    </isoform>
    <isoform>
        <id>P0C6X7-1</id>
        <name>Replicase polyprotein 1ab</name>
        <name>pp1ab</name>
        <sequence type="external"/>
    </isoform>
    <text evidence="51">Isoform replicase polyprotein 1ab is produced by -1 ribosomal frameshifting at the 1a-1b genes boundary. Isoform replicase polyprotein 1a is produced by conventional translation.</text>
</comment>
<comment type="domain">
    <molecule>Papain-like protease nsp3</molecule>
    <text evidence="52">The hydrophobic region HD1 probably mediates the membrane association of the replication complex.</text>
</comment>
<comment type="domain">
    <molecule>Non-structural protein 4</molecule>
    <text evidence="52">The hydrophobic region HD2 probably mediates the membrane association of the replication complex.</text>
</comment>
<comment type="domain">
    <molecule>Non-structural protein 6</molecule>
    <text evidence="52">The hydrophobic region HD3 probably mediates the membrane association of the replication complex.</text>
</comment>
<comment type="PTM">
    <molecule>Isoform Replicase polyprotein 1a</molecule>
    <text evidence="25 27 29 33 49">Specific enzymatic cleavages in vivo by its own proteases yield mature proteins (PubMed:12917450, PubMed:15331731, PubMed:15564471, PubMed:16306590, PubMed:32083638). 3C-like proteinase nsp5 liberates nsps 6-11 from the polyprotein (PubMed:32083638). Papain-like and 3C-like proteinases are autocatalytically processed.</text>
</comment>
<comment type="mass spectrometry" mass="21871.0" method="Electrospray" evidence="49">
    <molecule>Non-structural protein 8</molecule>
</comment>
<comment type="mass spectrometry" mass="12403.0" method="Electrospray" evidence="49">
    <molecule>RNA-capping enzyme subunit nsp9</molecule>
</comment>
<comment type="mass spectrometry" mass="14974.0" method="Electrospray" evidence="49">
    <molecule>Non-structural protein 10</molecule>
</comment>
<comment type="similarity">
    <text evidence="51">Belongs to the coronaviruses polyprotein 1ab family.</text>
</comment>
<comment type="caution">
    <text evidence="51">Isolates SZ3 and SZ16 have been isolated from Paguma larvata and are described as SARS-like in literature.</text>
</comment>
<name>R1A_SARS</name>
<protein>
    <recommendedName>
        <fullName>Replicase polyprotein 1a</fullName>
        <shortName>pp1a</shortName>
    </recommendedName>
    <alternativeName>
        <fullName>ORF1a polyprotein</fullName>
    </alternativeName>
    <component>
        <recommendedName>
            <fullName>Host translation inhibitor nsp1</fullName>
        </recommendedName>
        <alternativeName>
            <fullName>Leader protein</fullName>
        </alternativeName>
        <alternativeName>
            <fullName>Non-structural protein 1</fullName>
            <shortName>nsp1</shortName>
        </alternativeName>
    </component>
    <component>
        <recommendedName>
            <fullName>Non-structural protein 2</fullName>
            <shortName>nsp2</shortName>
        </recommendedName>
        <alternativeName>
            <fullName>p65 homolog</fullName>
        </alternativeName>
    </component>
    <component>
        <recommendedName>
            <fullName>Papain-like protease nsp3</fullName>
            <shortName>PL-PRO</shortName>
            <ecNumber evidence="36">3.4.19.12</ecNumber>
            <ecNumber evidence="25 33 36">3.4.22.-</ecNumber>
        </recommendedName>
        <alternativeName>
            <fullName>Non-structural protein 3</fullName>
            <shortName>nsp3</shortName>
        </alternativeName>
        <alternativeName>
            <fullName>PL2-PRO</fullName>
        </alternativeName>
    </component>
    <component>
        <recommendedName>
            <fullName>Non-structural protein 4</fullName>
            <shortName>nsp4</shortName>
        </recommendedName>
    </component>
    <component>
        <recommendedName>
            <fullName>3C-like proteinase nsp5</fullName>
            <shortName>3CL-PRO</shortName>
            <shortName>3CLp</shortName>
            <ecNumber evidence="25">3.4.22.69</ecNumber>
        </recommendedName>
        <alternativeName>
            <fullName>Main protease</fullName>
            <shortName>Mpro</shortName>
        </alternativeName>
        <alternativeName>
            <fullName>Non-structural protein 5</fullName>
            <shortName>nsp5</shortName>
        </alternativeName>
        <alternativeName>
            <fullName>SARS coronavirus main proteinase</fullName>
        </alternativeName>
    </component>
    <component>
        <recommendedName>
            <fullName>Non-structural protein 6</fullName>
            <shortName>nsp6</shortName>
        </recommendedName>
    </component>
    <component>
        <recommendedName>
            <fullName>Non-structural protein 7</fullName>
            <shortName>nsp7</shortName>
        </recommendedName>
    </component>
    <component>
        <recommendedName>
            <fullName>Non-structural protein 8</fullName>
            <shortName>nsp8</shortName>
        </recommendedName>
    </component>
    <component>
        <recommendedName>
            <fullName>RNA-capping enzyme subunit nsp9</fullName>
        </recommendedName>
        <alternativeName>
            <fullName>Non-structural protein 9</fullName>
            <shortName>nsp9</shortName>
            <ecNumber>2.7.7.50</ecNumber>
        </alternativeName>
    </component>
    <component>
        <recommendedName>
            <fullName>Non-structural protein 10</fullName>
            <shortName>nsp10</shortName>
        </recommendedName>
        <alternativeName>
            <fullName>Growth factor-like peptide</fullName>
            <shortName>GFL</shortName>
        </alternativeName>
    </component>
    <component>
        <recommendedName>
            <fullName>Non-structural protein 11</fullName>
            <shortName>nsp11</shortName>
        </recommendedName>
    </component>
</protein>
<keyword id="KW-0002">3D-structure</keyword>
<keyword id="KW-1072">Activation of host autophagy by virus</keyword>
<keyword id="KW-1132">Decay of host mRNAs by virus</keyword>
<keyword id="KW-1015">Disulfide bond</keyword>
<keyword id="KW-0255">Endonuclease</keyword>
<keyword id="KW-1262">Eukaryotic host gene expression shutoff by virus</keyword>
<keyword id="KW-1193">Eukaryotic host translation shutoff by virus</keyword>
<keyword id="KW-1035">Host cytoplasm</keyword>
<keyword id="KW-1038">Host endoplasmic reticulum</keyword>
<keyword id="KW-1039">Host endosome</keyword>
<keyword id="KW-1190">Host gene expression shutoff by virus</keyword>
<keyword id="KW-1040">Host Golgi apparatus</keyword>
<keyword id="KW-1043">Host membrane</keyword>
<keyword id="KW-1192">Host mRNA suppression by virus</keyword>
<keyword id="KW-0945">Host-virus interaction</keyword>
<keyword id="KW-0378">Hydrolase</keyword>
<keyword id="KW-1090">Inhibition of host innate immune response by virus</keyword>
<keyword id="KW-1114">Inhibition of host interferon signaling pathway by virus</keyword>
<keyword id="KW-1092">Inhibition of host IRF3 by virus</keyword>
<keyword id="KW-1095">Inhibition of host ISG15 by virus</keyword>
<keyword id="KW-1113">Inhibition of host RLR pathway by virus</keyword>
<keyword id="KW-0922">Interferon antiviral system evasion</keyword>
<keyword id="KW-0456">Lyase</keyword>
<keyword id="KW-0472">Membrane</keyword>
<keyword id="KW-0479">Metal-binding</keyword>
<keyword id="KW-0489">Methyltransferase</keyword>
<keyword id="KW-1127">Modulation of host ubiquitin pathway by viral deubiquitinase</keyword>
<keyword id="KW-1130">Modulation of host ubiquitin pathway by virus</keyword>
<keyword id="KW-0540">Nuclease</keyword>
<keyword id="KW-0645">Protease</keyword>
<keyword id="KW-1185">Reference proteome</keyword>
<keyword id="KW-0677">Repeat</keyword>
<keyword id="KW-0688">Ribosomal frameshifting</keyword>
<keyword id="KW-0694">RNA-binding</keyword>
<keyword id="KW-0788">Thiol protease</keyword>
<keyword id="KW-0808">Transferase</keyword>
<keyword id="KW-0812">Transmembrane</keyword>
<keyword id="KW-1133">Transmembrane helix</keyword>
<keyword id="KW-0833">Ubl conjugation pathway</keyword>
<keyword id="KW-0899">Viral immunoevasion</keyword>
<keyword id="KW-0862">Zinc</keyword>
<keyword id="KW-0863">Zinc-finger</keyword>
<proteinExistence type="evidence at protein level"/>
<evidence type="ECO:0000250" key="1"/>
<evidence type="ECO:0000250" key="2">
    <source>
        <dbReference type="UniProtKB" id="P0DTC1"/>
    </source>
</evidence>
<evidence type="ECO:0000250" key="3">
    <source>
        <dbReference type="UniProtKB" id="P0DTD1"/>
    </source>
</evidence>
<evidence type="ECO:0000255" key="4"/>
<evidence type="ECO:0000255" key="5">
    <source>
        <dbReference type="PROSITE-ProRule" id="PRU00214"/>
    </source>
</evidence>
<evidence type="ECO:0000255" key="6">
    <source>
        <dbReference type="PROSITE-ProRule" id="PRU00444"/>
    </source>
</evidence>
<evidence type="ECO:0000255" key="7">
    <source>
        <dbReference type="PROSITE-ProRule" id="PRU00490"/>
    </source>
</evidence>
<evidence type="ECO:0000255" key="8">
    <source>
        <dbReference type="PROSITE-ProRule" id="PRU00772"/>
    </source>
</evidence>
<evidence type="ECO:0000255" key="9">
    <source>
        <dbReference type="PROSITE-ProRule" id="PRU01289"/>
    </source>
</evidence>
<evidence type="ECO:0000255" key="10">
    <source>
        <dbReference type="PROSITE-ProRule" id="PRU01290"/>
    </source>
</evidence>
<evidence type="ECO:0000255" key="11">
    <source>
        <dbReference type="PROSITE-ProRule" id="PRU01291"/>
    </source>
</evidence>
<evidence type="ECO:0000255" key="12">
    <source>
        <dbReference type="PROSITE-ProRule" id="PRU01294"/>
    </source>
</evidence>
<evidence type="ECO:0000255" key="13">
    <source>
        <dbReference type="PROSITE-ProRule" id="PRU01295"/>
    </source>
</evidence>
<evidence type="ECO:0000255" key="14">
    <source>
        <dbReference type="PROSITE-ProRule" id="PRU01296"/>
    </source>
</evidence>
<evidence type="ECO:0000255" key="15">
    <source>
        <dbReference type="PROSITE-ProRule" id="PRU01297"/>
    </source>
</evidence>
<evidence type="ECO:0000255" key="16">
    <source>
        <dbReference type="PROSITE-ProRule" id="PRU01307"/>
    </source>
</evidence>
<evidence type="ECO:0000255" key="17">
    <source>
        <dbReference type="PROSITE-ProRule" id="PRU01308"/>
    </source>
</evidence>
<evidence type="ECO:0000255" key="18">
    <source>
        <dbReference type="PROSITE-ProRule" id="PRU01333"/>
    </source>
</evidence>
<evidence type="ECO:0000255" key="19">
    <source>
        <dbReference type="PROSITE-ProRule" id="PRU01334"/>
    </source>
</evidence>
<evidence type="ECO:0000255" key="20">
    <source>
        <dbReference type="PROSITE-ProRule" id="PRU01335"/>
    </source>
</evidence>
<evidence type="ECO:0000255" key="21">
    <source>
        <dbReference type="PROSITE-ProRule" id="PRU01336"/>
    </source>
</evidence>
<evidence type="ECO:0000255" key="22">
    <source>
        <dbReference type="PROSITE-ProRule" id="PRU01337"/>
    </source>
</evidence>
<evidence type="ECO:0000255" key="23">
    <source>
        <dbReference type="PROSITE-ProRule" id="PRU01338"/>
    </source>
</evidence>
<evidence type="ECO:0000256" key="24">
    <source>
        <dbReference type="SAM" id="MobiDB-lite"/>
    </source>
</evidence>
<evidence type="ECO:0000269" key="25">
    <source>
    </source>
</evidence>
<evidence type="ECO:0000269" key="26">
    <source>
    </source>
</evidence>
<evidence type="ECO:0000269" key="27">
    <source>
    </source>
</evidence>
<evidence type="ECO:0000269" key="28">
    <source>
    </source>
</evidence>
<evidence type="ECO:0000269" key="29">
    <source>
    </source>
</evidence>
<evidence type="ECO:0000269" key="30">
    <source>
    </source>
</evidence>
<evidence type="ECO:0000269" key="31">
    <source>
    </source>
</evidence>
<evidence type="ECO:0000269" key="32">
    <source>
    </source>
</evidence>
<evidence type="ECO:0000269" key="33">
    <source>
    </source>
</evidence>
<evidence type="ECO:0000269" key="34">
    <source>
    </source>
</evidence>
<evidence type="ECO:0000269" key="35">
    <source>
    </source>
</evidence>
<evidence type="ECO:0000269" key="36">
    <source>
    </source>
</evidence>
<evidence type="ECO:0000269" key="37">
    <source>
    </source>
</evidence>
<evidence type="ECO:0000269" key="38">
    <source>
    </source>
</evidence>
<evidence type="ECO:0000269" key="39">
    <source>
    </source>
</evidence>
<evidence type="ECO:0000269" key="40">
    <source>
    </source>
</evidence>
<evidence type="ECO:0000269" key="41">
    <source>
    </source>
</evidence>
<evidence type="ECO:0000269" key="42">
    <source>
    </source>
</evidence>
<evidence type="ECO:0000269" key="43">
    <source>
    </source>
</evidence>
<evidence type="ECO:0000269" key="44">
    <source>
    </source>
</evidence>
<evidence type="ECO:0000269" key="45">
    <source>
    </source>
</evidence>
<evidence type="ECO:0000269" key="46">
    <source>
    </source>
</evidence>
<evidence type="ECO:0000269" key="47">
    <source>
    </source>
</evidence>
<evidence type="ECO:0000269" key="48">
    <source>
    </source>
</evidence>
<evidence type="ECO:0000269" key="49">
    <source>
    </source>
</evidence>
<evidence type="ECO:0000303" key="50">
    <source>
    </source>
</evidence>
<evidence type="ECO:0000305" key="51"/>
<evidence type="ECO:0000305" key="52">
    <source>
    </source>
</evidence>
<evidence type="ECO:0007829" key="53">
    <source>
        <dbReference type="PDB" id="2FYG"/>
    </source>
</evidence>
<evidence type="ECO:0007829" key="54">
    <source>
        <dbReference type="PDB" id="2G9T"/>
    </source>
</evidence>
<evidence type="ECO:0007829" key="55">
    <source>
        <dbReference type="PDB" id="2GA6"/>
    </source>
</evidence>
<evidence type="ECO:0007829" key="56">
    <source>
        <dbReference type="PDB" id="2KAF"/>
    </source>
</evidence>
<evidence type="ECO:0007829" key="57">
    <source>
        <dbReference type="PDB" id="2KQW"/>
    </source>
</evidence>
<evidence type="ECO:0007829" key="58">
    <source>
        <dbReference type="PDB" id="2LIZ"/>
    </source>
</evidence>
<evidence type="ECO:0007829" key="59">
    <source>
        <dbReference type="PDB" id="2W2G"/>
    </source>
</evidence>
<evidence type="ECO:0007829" key="60">
    <source>
        <dbReference type="PDB" id="3EE7"/>
    </source>
</evidence>
<evidence type="ECO:0007829" key="61">
    <source>
        <dbReference type="PDB" id="3F9E"/>
    </source>
</evidence>
<evidence type="ECO:0007829" key="62">
    <source>
        <dbReference type="PDB" id="3F9F"/>
    </source>
</evidence>
<evidence type="ECO:0007829" key="63">
    <source>
        <dbReference type="PDB" id="3F9G"/>
    </source>
</evidence>
<evidence type="ECO:0007829" key="64">
    <source>
        <dbReference type="PDB" id="3R24"/>
    </source>
</evidence>
<evidence type="ECO:0007829" key="65">
    <source>
        <dbReference type="PDB" id="4M0W"/>
    </source>
</evidence>
<evidence type="ECO:0007829" key="66">
    <source>
        <dbReference type="PDB" id="4OVZ"/>
    </source>
</evidence>
<evidence type="ECO:0007829" key="67">
    <source>
        <dbReference type="PDB" id="4OW0"/>
    </source>
</evidence>
<evidence type="ECO:0007829" key="68">
    <source>
        <dbReference type="PDB" id="5F22"/>
    </source>
</evidence>
<evidence type="ECO:0007829" key="69">
    <source>
        <dbReference type="PDB" id="6NUR"/>
    </source>
</evidence>
<evidence type="ECO:0007829" key="70">
    <source>
        <dbReference type="PDB" id="6XHN"/>
    </source>
</evidence>
<dbReference type="EC" id="3.4.19.12" evidence="36"/>
<dbReference type="EC" id="3.4.22.-" evidence="25 33 36"/>
<dbReference type="EC" id="3.4.22.69" evidence="25"/>
<dbReference type="EC" id="2.7.7.50"/>
<dbReference type="EMBL" id="AY278741">
    <property type="protein sequence ID" value="AAP13439.1"/>
    <property type="molecule type" value="Genomic_RNA"/>
</dbReference>
<dbReference type="EMBL" id="AY274119">
    <property type="status" value="NOT_ANNOTATED_CDS"/>
    <property type="molecule type" value="Genomic_RNA"/>
</dbReference>
<dbReference type="EMBL" id="AY278554">
    <property type="protein sequence ID" value="AAP13575.1"/>
    <property type="molecule type" value="Genomic_RNA"/>
</dbReference>
<dbReference type="EMBL" id="AY282752">
    <property type="protein sequence ID" value="AAP30712.1"/>
    <property type="molecule type" value="Genomic_RNA"/>
</dbReference>
<dbReference type="EMBL" id="AY304495">
    <property type="status" value="NOT_ANNOTATED_CDS"/>
    <property type="molecule type" value="Genomic_RNA"/>
</dbReference>
<dbReference type="EMBL" id="AY304486">
    <property type="status" value="NOT_ANNOTATED_CDS"/>
    <property type="molecule type" value="Genomic_RNA"/>
</dbReference>
<dbReference type="EMBL" id="AY304488">
    <property type="status" value="NOT_ANNOTATED_CDS"/>
    <property type="molecule type" value="Genomic_RNA"/>
</dbReference>
<dbReference type="EMBL" id="AY278491">
    <property type="status" value="NOT_ANNOTATED_CDS"/>
    <property type="molecule type" value="Genomic_RNA"/>
</dbReference>
<dbReference type="EMBL" id="AY283794">
    <property type="status" value="NOT_ANNOTATED_CDS"/>
    <property type="molecule type" value="Genomic_RNA"/>
</dbReference>
<dbReference type="EMBL" id="AY283795">
    <property type="status" value="NOT_ANNOTATED_CDS"/>
    <property type="molecule type" value="Genomic_RNA"/>
</dbReference>
<dbReference type="EMBL" id="AY283796">
    <property type="status" value="NOT_ANNOTATED_CDS"/>
    <property type="molecule type" value="Genomic_RNA"/>
</dbReference>
<dbReference type="EMBL" id="AY283797">
    <property type="status" value="NOT_ANNOTATED_CDS"/>
    <property type="molecule type" value="Genomic_RNA"/>
</dbReference>
<dbReference type="EMBL" id="AY283798">
    <property type="status" value="NOT_ANNOTATED_CDS"/>
    <property type="molecule type" value="Genomic_RNA"/>
</dbReference>
<dbReference type="EMBL" id="AY286320">
    <property type="protein sequence ID" value="AAR16181.1"/>
    <property type="molecule type" value="Genomic_RNA"/>
</dbReference>
<dbReference type="EMBL" id="AY278488">
    <property type="protein sequence ID" value="AAP30029.1"/>
    <property type="molecule type" value="Genomic_RNA"/>
</dbReference>
<dbReference type="EMBL" id="AY278490">
    <property type="status" value="NOT_ANNOTATED_CDS"/>
    <property type="molecule type" value="Genomic_RNA"/>
</dbReference>
<dbReference type="EMBL" id="AY279354">
    <property type="status" value="NOT_ANNOTATED_CDS"/>
    <property type="molecule type" value="Genomic_RNA"/>
</dbReference>
<dbReference type="EMBL" id="AY278489">
    <property type="protein sequence ID" value="AAP51226.1"/>
    <property type="molecule type" value="Genomic_RNA"/>
</dbReference>
<dbReference type="EMBL" id="AY291451">
    <property type="protein sequence ID" value="AAP37016.1"/>
    <property type="molecule type" value="Genomic_RNA"/>
</dbReference>
<dbReference type="EMBL" id="AY310120">
    <property type="protein sequence ID" value="AAP50484.1"/>
    <property type="molecule type" value="Genomic_RNA"/>
</dbReference>
<dbReference type="EMBL" id="AY291315">
    <property type="protein sequence ID" value="AAP33695.1"/>
    <property type="molecule type" value="Genomic_RNA"/>
</dbReference>
<dbReference type="EMBL" id="AY323977">
    <property type="protein sequence ID" value="AAP72974.2"/>
    <property type="molecule type" value="Genomic_RNA"/>
</dbReference>
<dbReference type="EMBL" id="AY321118">
    <property type="status" value="NOT_ANNOTATED_CDS"/>
    <property type="molecule type" value="Genomic_RNA"/>
</dbReference>
<dbReference type="EMBL" id="AY338174">
    <property type="protein sequence ID" value="AAQ01595.1"/>
    <property type="molecule type" value="Genomic_RNA"/>
</dbReference>
<dbReference type="EMBL" id="AY338175">
    <property type="protein sequence ID" value="AAQ01607.1"/>
    <property type="molecule type" value="Genomic_RNA"/>
</dbReference>
<dbReference type="EMBL" id="AY348314">
    <property type="protein sequence ID" value="AAP97880.1"/>
    <property type="molecule type" value="Genomic_RNA"/>
</dbReference>
<dbReference type="EMBL" id="AP006557">
    <property type="protein sequence ID" value="BAC81347.1"/>
    <property type="molecule type" value="Genomic_RNA"/>
</dbReference>
<dbReference type="EMBL" id="AP006558">
    <property type="protein sequence ID" value="BAC81361.1"/>
    <property type="molecule type" value="Genomic_RNA"/>
</dbReference>
<dbReference type="EMBL" id="AP006559">
    <property type="protein sequence ID" value="BAC81375.1"/>
    <property type="molecule type" value="Genomic_RNA"/>
</dbReference>
<dbReference type="EMBL" id="AP006560">
    <property type="protein sequence ID" value="BAC81389.1"/>
    <property type="molecule type" value="Genomic_RNA"/>
</dbReference>
<dbReference type="EMBL" id="AP006561">
    <property type="protein sequence ID" value="BAC81403.1"/>
    <property type="molecule type" value="Genomic_RNA"/>
</dbReference>
<dbReference type="EMBL" id="AY427439">
    <property type="protein sequence ID" value="AAQ94059.1"/>
    <property type="molecule type" value="Genomic_RNA"/>
</dbReference>
<dbReference type="EMBL" id="AH012999">
    <property type="protein sequence ID" value="AAP82966.1"/>
    <property type="molecule type" value="Genomic_RNA"/>
</dbReference>
<dbReference type="EMBL" id="AH012999">
    <property type="protein sequence ID" value="AAP82976.1"/>
    <property type="molecule type" value="Genomic_RNA"/>
</dbReference>
<dbReference type="EMBL" id="AY463059">
    <property type="status" value="NOT_ANNOTATED_CDS"/>
    <property type="molecule type" value="Genomic_RNA"/>
</dbReference>
<dbReference type="PDB" id="1Q2W">
    <property type="method" value="X-ray"/>
    <property type="resolution" value="1.86 A"/>
    <property type="chains" value="A/B=3241-3544"/>
</dbReference>
<dbReference type="PDB" id="1QZ8">
    <property type="method" value="X-ray"/>
    <property type="resolution" value="2.70 A"/>
    <property type="chains" value="A/B=4118-4230"/>
</dbReference>
<dbReference type="PDB" id="1UJ1">
    <property type="method" value="X-ray"/>
    <property type="resolution" value="1.90 A"/>
    <property type="chains" value="A/B=3241-3546"/>
</dbReference>
<dbReference type="PDB" id="1UK2">
    <property type="method" value="X-ray"/>
    <property type="resolution" value="2.20 A"/>
    <property type="chains" value="A/B=3241-3546"/>
</dbReference>
<dbReference type="PDB" id="1UK3">
    <property type="method" value="X-ray"/>
    <property type="resolution" value="2.40 A"/>
    <property type="chains" value="A/B=3241-3546"/>
</dbReference>
<dbReference type="PDB" id="1UK4">
    <property type="method" value="X-ray"/>
    <property type="resolution" value="2.50 A"/>
    <property type="chains" value="A/B=3241-3546"/>
</dbReference>
<dbReference type="PDB" id="1UW7">
    <property type="method" value="X-ray"/>
    <property type="resolution" value="2.80 A"/>
    <property type="chains" value="A=4118-4230"/>
</dbReference>
<dbReference type="PDB" id="1WOF">
    <property type="method" value="X-ray"/>
    <property type="resolution" value="2.00 A"/>
    <property type="chains" value="A/B=3241-3546"/>
</dbReference>
<dbReference type="PDB" id="1YSY">
    <property type="method" value="NMR"/>
    <property type="chains" value="A=3837-3919"/>
</dbReference>
<dbReference type="PDB" id="1Z1I">
    <property type="method" value="X-ray"/>
    <property type="resolution" value="2.80 A"/>
    <property type="chains" value="A=3241-3546"/>
</dbReference>
<dbReference type="PDB" id="1Z1J">
    <property type="method" value="X-ray"/>
    <property type="resolution" value="2.80 A"/>
    <property type="chains" value="A/B=3241-3546"/>
</dbReference>
<dbReference type="PDB" id="2A5A">
    <property type="method" value="X-ray"/>
    <property type="resolution" value="2.08 A"/>
    <property type="chains" value="A=3241-3546"/>
</dbReference>
<dbReference type="PDB" id="2A5I">
    <property type="method" value="X-ray"/>
    <property type="resolution" value="1.88 A"/>
    <property type="chains" value="A=3241-3546"/>
</dbReference>
<dbReference type="PDB" id="2A5K">
    <property type="method" value="X-ray"/>
    <property type="resolution" value="2.30 A"/>
    <property type="chains" value="A/B=3241-3546"/>
</dbReference>
<dbReference type="PDB" id="2ACF">
    <property type="method" value="X-ray"/>
    <property type="resolution" value="1.40 A"/>
    <property type="chains" value="A/B/C/D=1002-1176"/>
</dbReference>
<dbReference type="PDB" id="2AHM">
    <property type="method" value="X-ray"/>
    <property type="resolution" value="2.40 A"/>
    <property type="chains" value="A/B/C/D=3837-3919, E/F/G/H=3920-4117"/>
</dbReference>
<dbReference type="PDB" id="2ALV">
    <property type="method" value="X-ray"/>
    <property type="resolution" value="1.90 A"/>
    <property type="chains" value="A=3241-3543"/>
</dbReference>
<dbReference type="PDB" id="2AMD">
    <property type="method" value="X-ray"/>
    <property type="resolution" value="1.85 A"/>
    <property type="chains" value="A/B=3241-3546"/>
</dbReference>
<dbReference type="PDB" id="2AMQ">
    <property type="method" value="X-ray"/>
    <property type="resolution" value="2.30 A"/>
    <property type="chains" value="A/B=3241-3546"/>
</dbReference>
<dbReference type="PDB" id="2BX3">
    <property type="method" value="X-ray"/>
    <property type="resolution" value="2.00 A"/>
    <property type="chains" value="A=3241-3546"/>
</dbReference>
<dbReference type="PDB" id="2BX4">
    <property type="method" value="X-ray"/>
    <property type="resolution" value="2.79 A"/>
    <property type="chains" value="A=3241-3546"/>
</dbReference>
<dbReference type="PDB" id="2C3S">
    <property type="method" value="X-ray"/>
    <property type="resolution" value="1.90 A"/>
    <property type="chains" value="A=3241-3546"/>
</dbReference>
<dbReference type="PDB" id="2D2D">
    <property type="method" value="X-ray"/>
    <property type="resolution" value="2.70 A"/>
    <property type="chains" value="A/B=3241-3546"/>
</dbReference>
<dbReference type="PDB" id="2DUC">
    <property type="method" value="X-ray"/>
    <property type="resolution" value="1.70 A"/>
    <property type="chains" value="A/B=3241-3546"/>
</dbReference>
<dbReference type="PDB" id="2FAV">
    <property type="method" value="X-ray"/>
    <property type="resolution" value="1.80 A"/>
    <property type="chains" value="A/B/C=1000-1173"/>
</dbReference>
<dbReference type="PDB" id="2FE8">
    <property type="method" value="X-ray"/>
    <property type="resolution" value="1.85 A"/>
    <property type="chains" value="A/B/C=1541-1854"/>
</dbReference>
<dbReference type="PDB" id="2FYG">
    <property type="method" value="X-ray"/>
    <property type="resolution" value="1.80 A"/>
    <property type="chains" value="A=4240-4362"/>
</dbReference>
<dbReference type="PDB" id="2G9T">
    <property type="method" value="X-ray"/>
    <property type="resolution" value="2.10 A"/>
    <property type="chains" value="A/B/C/D/E/F/G/H/I/J/K/L/M/N/O/P/Q/R/S/T/U/V/W/X=4231-4382"/>
</dbReference>
<dbReference type="PDB" id="2GA6">
    <property type="method" value="X-ray"/>
    <property type="resolution" value="2.70 A"/>
    <property type="chains" value="A/B/C/D/E/F/G/H/I/J/K/L/M/N/O/P/Q/R/S/T/U/V/W/X=4231-4382"/>
</dbReference>
<dbReference type="PDB" id="2GDT">
    <property type="method" value="NMR"/>
    <property type="chains" value="A=13-127"/>
</dbReference>
<dbReference type="PDB" id="2GRI">
    <property type="method" value="NMR"/>
    <property type="chains" value="A=819-930"/>
</dbReference>
<dbReference type="PDB" id="2GT7">
    <property type="method" value="X-ray"/>
    <property type="resolution" value="1.82 A"/>
    <property type="chains" value="A/B=3241-3546"/>
</dbReference>
<dbReference type="PDB" id="2GT8">
    <property type="method" value="X-ray"/>
    <property type="resolution" value="2.00 A"/>
    <property type="chains" value="A=3241-3546"/>
</dbReference>
<dbReference type="PDB" id="2GTB">
    <property type="method" value="X-ray"/>
    <property type="resolution" value="2.00 A"/>
    <property type="chains" value="A=3241-3546"/>
</dbReference>
<dbReference type="PDB" id="2GX4">
    <property type="method" value="X-ray"/>
    <property type="resolution" value="1.93 A"/>
    <property type="chains" value="A=3241-3546"/>
</dbReference>
<dbReference type="PDB" id="2GZ7">
    <property type="method" value="X-ray"/>
    <property type="resolution" value="1.86 A"/>
    <property type="chains" value="A=3241-3546"/>
</dbReference>
<dbReference type="PDB" id="2GZ8">
    <property type="method" value="X-ray"/>
    <property type="resolution" value="1.97 A"/>
    <property type="chains" value="A=3241-3546"/>
</dbReference>
<dbReference type="PDB" id="2GZ9">
    <property type="method" value="X-ray"/>
    <property type="resolution" value="2.17 A"/>
    <property type="chains" value="A=3241-3546"/>
</dbReference>
<dbReference type="PDB" id="2H2Z">
    <property type="method" value="X-ray"/>
    <property type="resolution" value="1.60 A"/>
    <property type="chains" value="A=3241-3546"/>
</dbReference>
<dbReference type="PDB" id="2HOB">
    <property type="method" value="X-ray"/>
    <property type="resolution" value="1.95 A"/>
    <property type="chains" value="A=3241-3546"/>
</dbReference>
<dbReference type="PDB" id="2HSX">
    <property type="method" value="NMR"/>
    <property type="chains" value="A=13-127"/>
</dbReference>
<dbReference type="PDB" id="2IDY">
    <property type="method" value="NMR"/>
    <property type="chains" value="A=819-930"/>
</dbReference>
<dbReference type="PDB" id="2KAF">
    <property type="method" value="NMR"/>
    <property type="chains" value="A=1473-1538"/>
</dbReference>
<dbReference type="PDB" id="2KQV">
    <property type="method" value="NMR"/>
    <property type="chains" value="A=1345-1538"/>
</dbReference>
<dbReference type="PDB" id="2KQW">
    <property type="method" value="NMR"/>
    <property type="chains" value="A=1345-1538"/>
</dbReference>
<dbReference type="PDB" id="2KYS">
    <property type="method" value="NMR"/>
    <property type="chains" value="A=3837-3919"/>
</dbReference>
<dbReference type="PDB" id="2LIZ">
    <property type="method" value="NMR"/>
    <property type="chains" value="A=3427-3546"/>
</dbReference>
<dbReference type="PDB" id="2OP9">
    <property type="method" value="X-ray"/>
    <property type="resolution" value="1.80 A"/>
    <property type="chains" value="A/B=3241-3541"/>
</dbReference>
<dbReference type="PDB" id="2PWX">
    <property type="method" value="X-ray"/>
    <property type="resolution" value="2.50 A"/>
    <property type="chains" value="A=3241-3546"/>
</dbReference>
<dbReference type="PDB" id="2W2G">
    <property type="method" value="X-ray"/>
    <property type="resolution" value="2.22 A"/>
    <property type="chains" value="A/B=1207-1470"/>
</dbReference>
<dbReference type="PDB" id="2WCT">
    <property type="method" value="X-ray"/>
    <property type="resolution" value="2.79 A"/>
    <property type="chains" value="A/B/C/D=1207-1470"/>
</dbReference>
<dbReference type="PDB" id="2Z3C">
    <property type="method" value="X-ray"/>
    <property type="resolution" value="1.79 A"/>
    <property type="chains" value="A=3241-3546"/>
</dbReference>
<dbReference type="PDB" id="2Z3D">
    <property type="method" value="X-ray"/>
    <property type="resolution" value="2.10 A"/>
    <property type="chains" value="A=3241-3546"/>
</dbReference>
<dbReference type="PDB" id="2Z3E">
    <property type="method" value="X-ray"/>
    <property type="resolution" value="2.32 A"/>
    <property type="chains" value="A=3241-3546"/>
</dbReference>
<dbReference type="PDB" id="2ZU4">
    <property type="method" value="X-ray"/>
    <property type="resolution" value="1.93 A"/>
    <property type="chains" value="A=3241-3546"/>
</dbReference>
<dbReference type="PDB" id="2ZU5">
    <property type="method" value="X-ray"/>
    <property type="resolution" value="1.65 A"/>
    <property type="chains" value="A=3241-3546"/>
</dbReference>
<dbReference type="PDB" id="3ATW">
    <property type="method" value="X-ray"/>
    <property type="resolution" value="2.36 A"/>
    <property type="chains" value="A/B=3241-3546"/>
</dbReference>
<dbReference type="PDB" id="3AVZ">
    <property type="method" value="X-ray"/>
    <property type="resolution" value="2.46 A"/>
    <property type="chains" value="A=3241-3546"/>
</dbReference>
<dbReference type="PDB" id="3AW0">
    <property type="method" value="X-ray"/>
    <property type="resolution" value="2.30 A"/>
    <property type="chains" value="A=3241-3546"/>
</dbReference>
<dbReference type="PDB" id="3AW1">
    <property type="method" value="X-ray"/>
    <property type="resolution" value="2.00 A"/>
    <property type="chains" value="A/B=3241-3546"/>
</dbReference>
<dbReference type="PDB" id="3E91">
    <property type="method" value="X-ray"/>
    <property type="resolution" value="2.55 A"/>
    <property type="chains" value="A/B=3241-3546"/>
</dbReference>
<dbReference type="PDB" id="3EA7">
    <property type="method" value="X-ray"/>
    <property type="resolution" value="2.65 A"/>
    <property type="chains" value="A/B=3241-3546"/>
</dbReference>
<dbReference type="PDB" id="3EA8">
    <property type="method" value="X-ray"/>
    <property type="resolution" value="2.25 A"/>
    <property type="chains" value="A=3241-3546"/>
</dbReference>
<dbReference type="PDB" id="3EA9">
    <property type="method" value="X-ray"/>
    <property type="resolution" value="2.40 A"/>
    <property type="chains" value="A=3241-3546"/>
</dbReference>
<dbReference type="PDB" id="3EAJ">
    <property type="method" value="X-ray"/>
    <property type="resolution" value="2.70 A"/>
    <property type="chains" value="A/B=3241-3546"/>
</dbReference>
<dbReference type="PDB" id="3EE7">
    <property type="method" value="X-ray"/>
    <property type="resolution" value="2.60 A"/>
    <property type="chains" value="A/B/C/D=4118-4230"/>
</dbReference>
<dbReference type="PDB" id="3F9E">
    <property type="method" value="X-ray"/>
    <property type="resolution" value="2.50 A"/>
    <property type="chains" value="A=3241-3546"/>
</dbReference>
<dbReference type="PDB" id="3F9F">
    <property type="method" value="X-ray"/>
    <property type="resolution" value="2.30 A"/>
    <property type="chains" value="A/B=3241-3546"/>
</dbReference>
<dbReference type="PDB" id="3F9G">
    <property type="method" value="X-ray"/>
    <property type="resolution" value="2.60 A"/>
    <property type="chains" value="A/B=3241-3541"/>
</dbReference>
<dbReference type="PDB" id="3F9H">
    <property type="method" value="X-ray"/>
    <property type="resolution" value="2.90 A"/>
    <property type="chains" value="A/B=3241-3546"/>
</dbReference>
<dbReference type="PDB" id="3FZD">
    <property type="method" value="X-ray"/>
    <property type="resolution" value="2.35 A"/>
    <property type="chains" value="A=3241-3541"/>
</dbReference>
<dbReference type="PDB" id="3IWM">
    <property type="method" value="X-ray"/>
    <property type="resolution" value="3.20 A"/>
    <property type="chains" value="A/B/C/D=3241-3546"/>
</dbReference>
<dbReference type="PDB" id="3M3S">
    <property type="method" value="X-ray"/>
    <property type="resolution" value="2.30 A"/>
    <property type="chains" value="A/B=3241-3546"/>
</dbReference>
<dbReference type="PDB" id="3M3T">
    <property type="method" value="X-ray"/>
    <property type="resolution" value="2.90 A"/>
    <property type="chains" value="A=3241-3546"/>
</dbReference>
<dbReference type="PDB" id="3M3V">
    <property type="method" value="X-ray"/>
    <property type="resolution" value="2.70 A"/>
    <property type="chains" value="A/B=3241-3546"/>
</dbReference>
<dbReference type="PDB" id="3MJ5">
    <property type="method" value="X-ray"/>
    <property type="resolution" value="2.63 A"/>
    <property type="chains" value="A/B=1541-1855"/>
</dbReference>
<dbReference type="PDB" id="3R24">
    <property type="method" value="X-ray"/>
    <property type="resolution" value="2.00 A"/>
    <property type="chains" value="B=4240-4382"/>
</dbReference>
<dbReference type="PDB" id="3SN8">
    <property type="method" value="X-ray"/>
    <property type="resolution" value="1.99 A"/>
    <property type="chains" value="A=3241-3546"/>
</dbReference>
<dbReference type="PDB" id="3SNA">
    <property type="method" value="X-ray"/>
    <property type="resolution" value="3.05 A"/>
    <property type="chains" value="A=3241-3541"/>
</dbReference>
<dbReference type="PDB" id="3SNB">
    <property type="method" value="X-ray"/>
    <property type="resolution" value="2.40 A"/>
    <property type="chains" value="A=3241-3546"/>
</dbReference>
<dbReference type="PDB" id="3SNC">
    <property type="method" value="X-ray"/>
    <property type="resolution" value="2.58 A"/>
    <property type="chains" value="A=3241-3546"/>
</dbReference>
<dbReference type="PDB" id="3SND">
    <property type="method" value="X-ray"/>
    <property type="resolution" value="1.89 A"/>
    <property type="chains" value="A/B=3241-3546"/>
</dbReference>
<dbReference type="PDB" id="3SNE">
    <property type="method" value="X-ray"/>
    <property type="resolution" value="2.60 A"/>
    <property type="chains" value="A=3241-3546"/>
</dbReference>
<dbReference type="PDB" id="3SZN">
    <property type="method" value="X-ray"/>
    <property type="resolution" value="1.69 A"/>
    <property type="chains" value="A=3241-3546"/>
</dbReference>
<dbReference type="PDB" id="3TIT">
    <property type="method" value="X-ray"/>
    <property type="resolution" value="1.99 A"/>
    <property type="chains" value="A=3241-3546"/>
</dbReference>
<dbReference type="PDB" id="3TIU">
    <property type="method" value="X-ray"/>
    <property type="resolution" value="2.08 A"/>
    <property type="chains" value="A=3241-3546"/>
</dbReference>
<dbReference type="PDB" id="3TNS">
    <property type="method" value="X-ray"/>
    <property type="resolution" value="1.99 A"/>
    <property type="chains" value="A=3241-3546"/>
</dbReference>
<dbReference type="PDB" id="3TNT">
    <property type="method" value="X-ray"/>
    <property type="resolution" value="1.59 A"/>
    <property type="chains" value="A=3241-3546"/>
</dbReference>
<dbReference type="PDB" id="3V3M">
    <property type="method" value="X-ray"/>
    <property type="resolution" value="1.96 A"/>
    <property type="chains" value="A=3241-3546"/>
</dbReference>
<dbReference type="PDB" id="3VB3">
    <property type="method" value="X-ray"/>
    <property type="resolution" value="2.20 A"/>
    <property type="chains" value="A/B=3241-3546"/>
</dbReference>
<dbReference type="PDB" id="3VB4">
    <property type="method" value="X-ray"/>
    <property type="resolution" value="2.20 A"/>
    <property type="chains" value="A/B=3241-3546"/>
</dbReference>
<dbReference type="PDB" id="3VB5">
    <property type="method" value="X-ray"/>
    <property type="resolution" value="1.95 A"/>
    <property type="chains" value="A/B=3241-3546"/>
</dbReference>
<dbReference type="PDB" id="3VB6">
    <property type="method" value="X-ray"/>
    <property type="resolution" value="2.50 A"/>
    <property type="chains" value="A/B=3241-3546"/>
</dbReference>
<dbReference type="PDB" id="3VB7">
    <property type="method" value="X-ray"/>
    <property type="resolution" value="1.95 A"/>
    <property type="chains" value="A/B=3241-3546"/>
</dbReference>
<dbReference type="PDB" id="4HI3">
    <property type="method" value="X-ray"/>
    <property type="resolution" value="2.09 A"/>
    <property type="chains" value="A/B=3241-3546"/>
</dbReference>
<dbReference type="PDB" id="4M0W">
    <property type="method" value="X-ray"/>
    <property type="resolution" value="1.40 A"/>
    <property type="chains" value="A=1541-1858"/>
</dbReference>
<dbReference type="PDB" id="4MDS">
    <property type="method" value="X-ray"/>
    <property type="resolution" value="1.60 A"/>
    <property type="chains" value="A=3241-3542"/>
</dbReference>
<dbReference type="PDB" id="4MM3">
    <property type="method" value="X-ray"/>
    <property type="resolution" value="2.75 A"/>
    <property type="chains" value="B=1541-1855"/>
</dbReference>
<dbReference type="PDB" id="4OVZ">
    <property type="method" value="X-ray"/>
    <property type="resolution" value="2.50 A"/>
    <property type="chains" value="A/B=1541-1855"/>
</dbReference>
<dbReference type="PDB" id="4OW0">
    <property type="method" value="X-ray"/>
    <property type="resolution" value="2.10 A"/>
    <property type="chains" value="A/B=1541-1855"/>
</dbReference>
<dbReference type="PDB" id="5F22">
    <property type="method" value="X-ray"/>
    <property type="resolution" value="2.15 A"/>
    <property type="chains" value="A=3837-3919"/>
</dbReference>
<dbReference type="PDB" id="5Y3E">
    <property type="method" value="X-ray"/>
    <property type="resolution" value="1.65 A"/>
    <property type="chains" value="A=1541-1854"/>
</dbReference>
<dbReference type="PDB" id="5Y3Q">
    <property type="method" value="X-ray"/>
    <property type="resolution" value="1.65 A"/>
    <property type="chains" value="A=1541-1854"/>
</dbReference>
<dbReference type="PDB" id="6LNY">
    <property type="method" value="X-ray"/>
    <property type="resolution" value="2.25 A"/>
    <property type="chains" value="A=3241-3546"/>
</dbReference>
<dbReference type="PDB" id="6LO0">
    <property type="method" value="X-ray"/>
    <property type="resolution" value="1.94 A"/>
    <property type="chains" value="A=3241-3546"/>
</dbReference>
<dbReference type="PDB" id="6NUR">
    <property type="method" value="EM"/>
    <property type="resolution" value="3.10 A"/>
    <property type="chains" value="B/D=3920-4117"/>
</dbReference>
<dbReference type="PDB" id="6NUS">
    <property type="method" value="EM"/>
    <property type="resolution" value="3.50 A"/>
    <property type="chains" value="B=3920-4117"/>
</dbReference>
<dbReference type="PDB" id="6W2A">
    <property type="method" value="X-ray"/>
    <property type="resolution" value="1.65 A"/>
    <property type="chains" value="A/B=3241-3543"/>
</dbReference>
<dbReference type="PDB" id="6XHL">
    <property type="method" value="X-ray"/>
    <property type="resolution" value="1.47 A"/>
    <property type="chains" value="A/B=3241-3546"/>
</dbReference>
<dbReference type="PDB" id="6XHN">
    <property type="method" value="X-ray"/>
    <property type="resolution" value="1.38 A"/>
    <property type="chains" value="A/B=3241-3546"/>
</dbReference>
<dbReference type="PDB" id="6XHO">
    <property type="method" value="X-ray"/>
    <property type="resolution" value="1.45 A"/>
    <property type="chains" value="A/B=3241-3546"/>
</dbReference>
<dbReference type="PDB" id="6Y7M">
    <property type="method" value="X-ray"/>
    <property type="resolution" value="1.90 A"/>
    <property type="chains" value="AAA=3241-3546"/>
</dbReference>
<dbReference type="PDB" id="6YXJ">
    <property type="method" value="X-ray"/>
    <property type="resolution" value="3.50 A"/>
    <property type="chains" value="A=1207-1344"/>
</dbReference>
<dbReference type="PDB" id="7DQZ">
    <property type="method" value="X-ray"/>
    <property type="resolution" value="1.99 A"/>
    <property type="chains" value="A/B=3241-3546"/>
</dbReference>
<dbReference type="PDB" id="7END">
    <property type="method" value="X-ray"/>
    <property type="resolution" value="1.99 A"/>
    <property type="chains" value="A=3241-3546"/>
</dbReference>
<dbReference type="PDB" id="7EO8">
    <property type="method" value="X-ray"/>
    <property type="resolution" value="2.28 A"/>
    <property type="chains" value="A/B=3241-3546"/>
</dbReference>
<dbReference type="PDB" id="7FA1">
    <property type="method" value="X-ray"/>
    <property type="resolution" value="1.60 A"/>
    <property type="chains" value="A=181-456"/>
</dbReference>
<dbReference type="PDB" id="7FAC">
    <property type="method" value="X-ray"/>
    <property type="resolution" value="2.71 A"/>
    <property type="chains" value="A=292-818"/>
</dbReference>
<dbReference type="PDB" id="7K0G">
    <property type="method" value="X-ray"/>
    <property type="resolution" value="1.85 A"/>
    <property type="chains" value="A=3241-3543"/>
</dbReference>
<dbReference type="PDB" id="7K0H">
    <property type="method" value="X-ray"/>
    <property type="resolution" value="1.70 A"/>
    <property type="chains" value="A/B=3241-3543"/>
</dbReference>
<dbReference type="PDB" id="7LFU">
    <property type="method" value="X-ray"/>
    <property type="resolution" value="2.29 A"/>
    <property type="chains" value="D=1541-1856"/>
</dbReference>
<dbReference type="PDB" id="7LFV">
    <property type="method" value="X-ray"/>
    <property type="resolution" value="2.23 A"/>
    <property type="chains" value="A/B=1541-1856"/>
</dbReference>
<dbReference type="PDB" id="7LMG">
    <property type="method" value="X-ray"/>
    <property type="resolution" value="1.60 A"/>
    <property type="chains" value="AAA=3241-3546"/>
</dbReference>
<dbReference type="PDB" id="7LMH">
    <property type="method" value="X-ray"/>
    <property type="resolution" value="1.85 A"/>
    <property type="chains" value="AAA=3241-3546"/>
</dbReference>
<dbReference type="PDB" id="7LMI">
    <property type="method" value="X-ray"/>
    <property type="resolution" value="1.71 A"/>
    <property type="chains" value="AAA=3241-3546"/>
</dbReference>
<dbReference type="PDB" id="7LMJ">
    <property type="method" value="X-ray"/>
    <property type="resolution" value="1.69 A"/>
    <property type="chains" value="AAA=3241-3546"/>
</dbReference>
<dbReference type="PDB" id="7OPL">
    <property type="method" value="EM"/>
    <property type="resolution" value="4.12 A"/>
    <property type="chains" value="E=13-127"/>
</dbReference>
<dbReference type="PDB" id="7RC1">
    <property type="method" value="X-ray"/>
    <property type="resolution" value="1.63 A"/>
    <property type="chains" value="A=3241-3546"/>
</dbReference>
<dbReference type="PDB" id="7VLO">
    <property type="method" value="X-ray"/>
    <property type="resolution" value="2.02 A"/>
    <property type="chains" value="A/B=3242-3540"/>
</dbReference>
<dbReference type="PDB" id="7WQI">
    <property type="method" value="X-ray"/>
    <property type="resolution" value="1.93 A"/>
    <property type="chains" value="A/B=3242-3540"/>
</dbReference>
<dbReference type="PDB" id="7XAX">
    <property type="method" value="X-ray"/>
    <property type="resolution" value="2.25 A"/>
    <property type="chains" value="A/B=3241-3546"/>
</dbReference>
<dbReference type="PDB" id="7YGQ">
    <property type="method" value="X-ray"/>
    <property type="resolution" value="2.04 A"/>
    <property type="chains" value="A/B=3242-3539"/>
</dbReference>
<dbReference type="PDB" id="7ZQW">
    <property type="method" value="X-ray"/>
    <property type="resolution" value="2.53 A"/>
    <property type="chains" value="A=3241-3546"/>
</dbReference>
<dbReference type="PDB" id="8HUS">
    <property type="method" value="X-ray"/>
    <property type="resolution" value="1.97 A"/>
    <property type="chains" value="A/B=3242-3539"/>
</dbReference>
<dbReference type="PDB" id="8IG5">
    <property type="method" value="X-ray"/>
    <property type="resolution" value="2.17 A"/>
    <property type="chains" value="A/B=3242-3540"/>
</dbReference>
<dbReference type="PDB" id="8UFL">
    <property type="method" value="X-ray"/>
    <property type="resolution" value="2.51 A"/>
    <property type="chains" value="A/B=1207-1470"/>
</dbReference>
<dbReference type="PDB" id="8ULD">
    <property type="method" value="X-ray"/>
    <property type="resolution" value="1.80 A"/>
    <property type="chains" value="A=3241-3545"/>
</dbReference>
<dbReference type="PDB" id="8Y4E">
    <property type="method" value="X-ray"/>
    <property type="resolution" value="2.04 A"/>
    <property type="chains" value="A/B=3242-3539"/>
</dbReference>
<dbReference type="PDBsum" id="1Q2W"/>
<dbReference type="PDBsum" id="1QZ8"/>
<dbReference type="PDBsum" id="1UJ1"/>
<dbReference type="PDBsum" id="1UK2"/>
<dbReference type="PDBsum" id="1UK3"/>
<dbReference type="PDBsum" id="1UK4"/>
<dbReference type="PDBsum" id="1UW7"/>
<dbReference type="PDBsum" id="1WOF"/>
<dbReference type="PDBsum" id="1YSY"/>
<dbReference type="PDBsum" id="1Z1I"/>
<dbReference type="PDBsum" id="1Z1J"/>
<dbReference type="PDBsum" id="2A5A"/>
<dbReference type="PDBsum" id="2A5I"/>
<dbReference type="PDBsum" id="2A5K"/>
<dbReference type="PDBsum" id="2ACF"/>
<dbReference type="PDBsum" id="2AHM"/>
<dbReference type="PDBsum" id="2ALV"/>
<dbReference type="PDBsum" id="2AMD"/>
<dbReference type="PDBsum" id="2AMQ"/>
<dbReference type="PDBsum" id="2BX3"/>
<dbReference type="PDBsum" id="2BX4"/>
<dbReference type="PDBsum" id="2C3S"/>
<dbReference type="PDBsum" id="2D2D"/>
<dbReference type="PDBsum" id="2DUC"/>
<dbReference type="PDBsum" id="2FAV"/>
<dbReference type="PDBsum" id="2FE8"/>
<dbReference type="PDBsum" id="2FYG"/>
<dbReference type="PDBsum" id="2G9T"/>
<dbReference type="PDBsum" id="2GA6"/>
<dbReference type="PDBsum" id="2GDT"/>
<dbReference type="PDBsum" id="2GRI"/>
<dbReference type="PDBsum" id="2GT7"/>
<dbReference type="PDBsum" id="2GT8"/>
<dbReference type="PDBsum" id="2GTB"/>
<dbReference type="PDBsum" id="2GX4"/>
<dbReference type="PDBsum" id="2GZ7"/>
<dbReference type="PDBsum" id="2GZ8"/>
<dbReference type="PDBsum" id="2GZ9"/>
<dbReference type="PDBsum" id="2H2Z"/>
<dbReference type="PDBsum" id="2HOB"/>
<dbReference type="PDBsum" id="2HSX"/>
<dbReference type="PDBsum" id="2IDY"/>
<dbReference type="PDBsum" id="2KAF"/>
<dbReference type="PDBsum" id="2KQV"/>
<dbReference type="PDBsum" id="2KQW"/>
<dbReference type="PDBsum" id="2KYS"/>
<dbReference type="PDBsum" id="2LIZ"/>
<dbReference type="PDBsum" id="2OP9"/>
<dbReference type="PDBsum" id="2PWX"/>
<dbReference type="PDBsum" id="2W2G"/>
<dbReference type="PDBsum" id="2WCT"/>
<dbReference type="PDBsum" id="2Z3C"/>
<dbReference type="PDBsum" id="2Z3D"/>
<dbReference type="PDBsum" id="2Z3E"/>
<dbReference type="PDBsum" id="2ZU4"/>
<dbReference type="PDBsum" id="2ZU5"/>
<dbReference type="PDBsum" id="3ATW"/>
<dbReference type="PDBsum" id="3AVZ"/>
<dbReference type="PDBsum" id="3AW0"/>
<dbReference type="PDBsum" id="3AW1"/>
<dbReference type="PDBsum" id="3E91"/>
<dbReference type="PDBsum" id="3EA7"/>
<dbReference type="PDBsum" id="3EA8"/>
<dbReference type="PDBsum" id="3EA9"/>
<dbReference type="PDBsum" id="3EAJ"/>
<dbReference type="PDBsum" id="3EE7"/>
<dbReference type="PDBsum" id="3F9E"/>
<dbReference type="PDBsum" id="3F9F"/>
<dbReference type="PDBsum" id="3F9G"/>
<dbReference type="PDBsum" id="3F9H"/>
<dbReference type="PDBsum" id="3FZD"/>
<dbReference type="PDBsum" id="3IWM"/>
<dbReference type="PDBsum" id="3M3S"/>
<dbReference type="PDBsum" id="3M3T"/>
<dbReference type="PDBsum" id="3M3V"/>
<dbReference type="PDBsum" id="3MJ5"/>
<dbReference type="PDBsum" id="3R24"/>
<dbReference type="PDBsum" id="3SN8"/>
<dbReference type="PDBsum" id="3SNA"/>
<dbReference type="PDBsum" id="3SNB"/>
<dbReference type="PDBsum" id="3SNC"/>
<dbReference type="PDBsum" id="3SND"/>
<dbReference type="PDBsum" id="3SNE"/>
<dbReference type="PDBsum" id="3SZN"/>
<dbReference type="PDBsum" id="3TIT"/>
<dbReference type="PDBsum" id="3TIU"/>
<dbReference type="PDBsum" id="3TNS"/>
<dbReference type="PDBsum" id="3TNT"/>
<dbReference type="PDBsum" id="3V3M"/>
<dbReference type="PDBsum" id="3VB3"/>
<dbReference type="PDBsum" id="3VB4"/>
<dbReference type="PDBsum" id="3VB5"/>
<dbReference type="PDBsum" id="3VB6"/>
<dbReference type="PDBsum" id="3VB7"/>
<dbReference type="PDBsum" id="4HI3"/>
<dbReference type="PDBsum" id="4M0W"/>
<dbReference type="PDBsum" id="4MDS"/>
<dbReference type="PDBsum" id="4MM3"/>
<dbReference type="PDBsum" id="4OVZ"/>
<dbReference type="PDBsum" id="4OW0"/>
<dbReference type="PDBsum" id="5F22"/>
<dbReference type="PDBsum" id="5Y3E"/>
<dbReference type="PDBsum" id="5Y3Q"/>
<dbReference type="PDBsum" id="6LNY"/>
<dbReference type="PDBsum" id="6LO0"/>
<dbReference type="PDBsum" id="6NUR"/>
<dbReference type="PDBsum" id="6NUS"/>
<dbReference type="PDBsum" id="6W2A"/>
<dbReference type="PDBsum" id="6XHL"/>
<dbReference type="PDBsum" id="6XHN"/>
<dbReference type="PDBsum" id="6XHO"/>
<dbReference type="PDBsum" id="6Y7M"/>
<dbReference type="PDBsum" id="6YXJ"/>
<dbReference type="PDBsum" id="7DQZ"/>
<dbReference type="PDBsum" id="7END"/>
<dbReference type="PDBsum" id="7EO8"/>
<dbReference type="PDBsum" id="7FA1"/>
<dbReference type="PDBsum" id="7FAC"/>
<dbReference type="PDBsum" id="7K0G"/>
<dbReference type="PDBsum" id="7K0H"/>
<dbReference type="PDBsum" id="7LFU"/>
<dbReference type="PDBsum" id="7LFV"/>
<dbReference type="PDBsum" id="7LMG"/>
<dbReference type="PDBsum" id="7LMH"/>
<dbReference type="PDBsum" id="7LMI"/>
<dbReference type="PDBsum" id="7LMJ"/>
<dbReference type="PDBsum" id="7OPL"/>
<dbReference type="PDBsum" id="7RC1"/>
<dbReference type="PDBsum" id="7VLO"/>
<dbReference type="PDBsum" id="7WQI"/>
<dbReference type="PDBsum" id="7XAX"/>
<dbReference type="PDBsum" id="7YGQ"/>
<dbReference type="PDBsum" id="7ZQW"/>
<dbReference type="PDBsum" id="8HUS"/>
<dbReference type="PDBsum" id="8IG5"/>
<dbReference type="PDBsum" id="8UFL"/>
<dbReference type="PDBsum" id="8ULD"/>
<dbReference type="PDBsum" id="8Y4E"/>
<dbReference type="BMRB" id="P0C6U8"/>
<dbReference type="EMDB" id="EMD-0520"/>
<dbReference type="EMDB" id="EMD-0521"/>
<dbReference type="EMDB" id="EMD-13020"/>
<dbReference type="SASBDB" id="P0C6U8"/>
<dbReference type="SMR" id="P0C6U8"/>
<dbReference type="BioGRID" id="4383931">
    <property type="interactions" value="1"/>
</dbReference>
<dbReference type="BioGRID" id="4383933">
    <property type="interactions" value="1"/>
</dbReference>
<dbReference type="BioGRID" id="4383934">
    <property type="interactions" value="5"/>
</dbReference>
<dbReference type="BioGRID" id="4383935">
    <property type="interactions" value="2"/>
</dbReference>
<dbReference type="BioGRID" id="4383936">
    <property type="interactions" value="2"/>
</dbReference>
<dbReference type="BioGRID" id="4383937">
    <property type="interactions" value="4"/>
</dbReference>
<dbReference type="DIP" id="DIP-48580N"/>
<dbReference type="IntAct" id="P0C6U8">
    <property type="interactions" value="20"/>
</dbReference>
<dbReference type="BindingDB" id="P0C6U8"/>
<dbReference type="ChEMBL" id="CHEMBL3927"/>
<dbReference type="DrugBank" id="DB07620">
    <property type="generic name" value="2-[(2,4-DICHLORO-5-METHYLPHENYL)SULFONYL]-1,3-DINITRO-5-(TRIFLUOROMETHYL)BENZENE"/>
</dbReference>
<dbReference type="DrugBank" id="DB08732">
    <property type="generic name" value="NALPHA-[(BENZYLOXY)CARBONYL]-N-[(1R)-4-HYDROXY-1-METHYL-2-OXOBUTYL]-L-PHENYLALANINAMIDE"/>
</dbReference>
<dbReference type="DrugBank" id="DB07743">
    <property type="generic name" value="S-[5-(TRIFLUOROMETHYL)-4H-1,2,4-TRIAZOL-3-YL] 5-(PHENYLETHYNYL)FURAN-2-CARBOTHIOATE"/>
</dbReference>
<dbReference type="DrugCentral" id="P0C6U8"/>
<dbReference type="MEROPS" id="C16.009"/>
<dbReference type="MEROPS" id="C30.005"/>
<dbReference type="GlyGen" id="P0C6U8">
    <property type="glycosylation" value="1 site"/>
</dbReference>
<dbReference type="BRENDA" id="3.4.22.69">
    <property type="organism ID" value="7599"/>
</dbReference>
<dbReference type="BRENDA" id="3.4.22.B50">
    <property type="organism ID" value="7599"/>
</dbReference>
<dbReference type="Reactome" id="R-HSA-9679504">
    <property type="pathway name" value="Translation of Replicase and Assembly of the Replication Transcription Complex"/>
</dbReference>
<dbReference type="Reactome" id="R-HSA-9682706">
    <property type="pathway name" value="Replication of the SARS-CoV-1 genome"/>
</dbReference>
<dbReference type="Reactome" id="R-HSA-9682708">
    <property type="pathway name" value="Transcription of SARS-CoV-1 sgRNAs"/>
</dbReference>
<dbReference type="Reactome" id="R-HSA-9683439">
    <property type="pathway name" value="Assembly of the SARS-CoV-1 Replication-Transcription Complex (RTC)"/>
</dbReference>
<dbReference type="Reactome" id="R-HSA-9684325">
    <property type="pathway name" value="Maturation of replicase proteins"/>
</dbReference>
<dbReference type="Reactome" id="R-HSA-9692916">
    <property type="pathway name" value="SARS-CoV-1 activates/modulates innate immune responses"/>
</dbReference>
<dbReference type="Reactome" id="R-HSA-9735869">
    <property type="pathway name" value="SARS-CoV-1 modulates host translation machinery"/>
</dbReference>
<dbReference type="SABIO-RK" id="P0C6U8"/>
<dbReference type="EvolutionaryTrace" id="P0C6U8"/>
<dbReference type="Proteomes" id="UP000000354">
    <property type="component" value="Segment"/>
</dbReference>
<dbReference type="Proteomes" id="UP000103670">
    <property type="component" value="Segment"/>
</dbReference>
<dbReference type="Proteomes" id="UP000109640">
    <property type="component" value="Segment"/>
</dbReference>
<dbReference type="Proteomes" id="UP000116947">
    <property type="component" value="Segment"/>
</dbReference>
<dbReference type="Proteomes" id="UP000121636">
    <property type="component" value="Segment"/>
</dbReference>
<dbReference type="Proteomes" id="UP000131569">
    <property type="component" value="Segment"/>
</dbReference>
<dbReference type="Proteomes" id="UP000131955">
    <property type="component" value="Segment"/>
</dbReference>
<dbReference type="Proteomes" id="UP000137377">
    <property type="component" value="Genome"/>
</dbReference>
<dbReference type="Proteomes" id="UP000138690">
    <property type="component" value="Segment"/>
</dbReference>
<dbReference type="Proteomes" id="UP000143093">
    <property type="component" value="Segment"/>
</dbReference>
<dbReference type="Proteomes" id="UP000145651">
    <property type="component" value="Segment"/>
</dbReference>
<dbReference type="Proteomes" id="UP000146108">
    <property type="component" value="Segment"/>
</dbReference>
<dbReference type="Proteomes" id="UP000146181">
    <property type="component" value="Segment"/>
</dbReference>
<dbReference type="Proteomes" id="UP000146296">
    <property type="component" value="Segment"/>
</dbReference>
<dbReference type="Proteomes" id="UP000148194">
    <property type="component" value="Segment"/>
</dbReference>
<dbReference type="Proteomes" id="UP000153467">
    <property type="component" value="Segment"/>
</dbReference>
<dbReference type="Proteomes" id="UP000160648">
    <property type="component" value="Segment"/>
</dbReference>
<dbReference type="Proteomes" id="UP000164441">
    <property type="component" value="Segment"/>
</dbReference>
<dbReference type="Proteomes" id="UP000172416">
    <property type="component" value="Segment"/>
</dbReference>
<dbReference type="Proteomes" id="UP000180358">
    <property type="component" value="Segment"/>
</dbReference>
<dbReference type="GO" id="GO:0062243">
    <property type="term" value="C:double membrane vesicle viral factory outer membrane"/>
    <property type="evidence" value="ECO:0000304"/>
    <property type="project" value="Reactome"/>
</dbReference>
<dbReference type="GO" id="GO:0044165">
    <property type="term" value="C:host cell endoplasmic reticulum"/>
    <property type="evidence" value="ECO:0007669"/>
    <property type="project" value="UniProtKB-SubCell"/>
</dbReference>
<dbReference type="GO" id="GO:0044174">
    <property type="term" value="C:host cell endosome"/>
    <property type="evidence" value="ECO:0007669"/>
    <property type="project" value="UniProtKB-SubCell"/>
</dbReference>
<dbReference type="GO" id="GO:0044177">
    <property type="term" value="C:host cell Golgi apparatus"/>
    <property type="evidence" value="ECO:0007669"/>
    <property type="project" value="UniProtKB-SubCell"/>
</dbReference>
<dbReference type="GO" id="GO:0044220">
    <property type="term" value="C:host cell perinuclear region of cytoplasm"/>
    <property type="evidence" value="ECO:0007669"/>
    <property type="project" value="UniProtKB-SubCell"/>
</dbReference>
<dbReference type="GO" id="GO:0016020">
    <property type="term" value="C:membrane"/>
    <property type="evidence" value="ECO:0007669"/>
    <property type="project" value="UniProtKB-KW"/>
</dbReference>
<dbReference type="GO" id="GO:0004843">
    <property type="term" value="F:cysteine-type deubiquitinase activity"/>
    <property type="evidence" value="ECO:0007669"/>
    <property type="project" value="UniProtKB-EC"/>
</dbReference>
<dbReference type="GO" id="GO:0004197">
    <property type="term" value="F:cysteine-type endopeptidase activity"/>
    <property type="evidence" value="ECO:0000304"/>
    <property type="project" value="Reactome"/>
</dbReference>
<dbReference type="GO" id="GO:0004519">
    <property type="term" value="F:endonuclease activity"/>
    <property type="evidence" value="ECO:0007669"/>
    <property type="project" value="UniProtKB-KW"/>
</dbReference>
<dbReference type="GO" id="GO:0002151">
    <property type="term" value="F:G-quadruplex RNA binding"/>
    <property type="evidence" value="ECO:0007669"/>
    <property type="project" value="InterPro"/>
</dbReference>
<dbReference type="GO" id="GO:0042802">
    <property type="term" value="F:identical protein binding"/>
    <property type="evidence" value="ECO:0000353"/>
    <property type="project" value="IntAct"/>
</dbReference>
<dbReference type="GO" id="GO:1990380">
    <property type="term" value="F:K48-linked deubiquitinase activity"/>
    <property type="evidence" value="ECO:0000269"/>
    <property type="project" value="Reactome"/>
</dbReference>
<dbReference type="GO" id="GO:0061578">
    <property type="term" value="F:K63-linked deubiquitinase activity"/>
    <property type="evidence" value="ECO:0000269"/>
    <property type="project" value="Reactome"/>
</dbReference>
<dbReference type="GO" id="GO:0016829">
    <property type="term" value="F:lyase activity"/>
    <property type="evidence" value="ECO:0007669"/>
    <property type="project" value="UniProtKB-KW"/>
</dbReference>
<dbReference type="GO" id="GO:0008168">
    <property type="term" value="F:methyltransferase activity"/>
    <property type="evidence" value="ECO:0007669"/>
    <property type="project" value="UniProtKB-KW"/>
</dbReference>
<dbReference type="GO" id="GO:0008242">
    <property type="term" value="F:omega peptidase activity"/>
    <property type="evidence" value="ECO:0007669"/>
    <property type="project" value="InterPro"/>
</dbReference>
<dbReference type="GO" id="GO:0003968">
    <property type="term" value="F:RNA-directed RNA polymerase activity"/>
    <property type="evidence" value="ECO:0000304"/>
    <property type="project" value="Reactome"/>
</dbReference>
<dbReference type="GO" id="GO:0003727">
    <property type="term" value="F:single-stranded RNA binding"/>
    <property type="evidence" value="ECO:0007669"/>
    <property type="project" value="InterPro"/>
</dbReference>
<dbReference type="GO" id="GO:0008270">
    <property type="term" value="F:zinc ion binding"/>
    <property type="evidence" value="ECO:0007669"/>
    <property type="project" value="UniProtKB-KW"/>
</dbReference>
<dbReference type="GO" id="GO:0032259">
    <property type="term" value="P:methylation"/>
    <property type="evidence" value="ECO:0007669"/>
    <property type="project" value="UniProtKB-KW"/>
</dbReference>
<dbReference type="GO" id="GO:0006508">
    <property type="term" value="P:proteolysis"/>
    <property type="evidence" value="ECO:0007669"/>
    <property type="project" value="UniProtKB-KW"/>
</dbReference>
<dbReference type="GO" id="GO:0010506">
    <property type="term" value="P:regulation of autophagy"/>
    <property type="evidence" value="ECO:0007669"/>
    <property type="project" value="InterPro"/>
</dbReference>
<dbReference type="GO" id="GO:0039520">
    <property type="term" value="P:symbiont-mediated activation of host autophagy"/>
    <property type="evidence" value="ECO:0007669"/>
    <property type="project" value="UniProtKB-KW"/>
</dbReference>
<dbReference type="GO" id="GO:0039595">
    <property type="term" value="P:symbiont-mediated degradation of host mRNA"/>
    <property type="evidence" value="ECO:0007669"/>
    <property type="project" value="UniProtKB-KW"/>
</dbReference>
<dbReference type="GO" id="GO:0039648">
    <property type="term" value="P:symbiont-mediated perturbation of host ubiquitin-like protein modification"/>
    <property type="evidence" value="ECO:0000304"/>
    <property type="project" value="Reactome"/>
</dbReference>
<dbReference type="GO" id="GO:0039548">
    <property type="term" value="P:symbiont-mediated suppression of host cytoplasmic pattern recognition receptor signaling pathway via inhibition of IRF3 activity"/>
    <property type="evidence" value="ECO:0007669"/>
    <property type="project" value="UniProtKB-KW"/>
</dbReference>
<dbReference type="GO" id="GO:0039657">
    <property type="term" value="P:symbiont-mediated suppression of host gene expression"/>
    <property type="evidence" value="ECO:0007669"/>
    <property type="project" value="UniProtKB-KW"/>
</dbReference>
<dbReference type="GO" id="GO:0039579">
    <property type="term" value="P:symbiont-mediated suppression of host ISG15-protein conjugation"/>
    <property type="evidence" value="ECO:0007669"/>
    <property type="project" value="UniProtKB-KW"/>
</dbReference>
<dbReference type="GO" id="GO:0039502">
    <property type="term" value="P:symbiont-mediated suppression of host type I interferon-mediated signaling pathway"/>
    <property type="evidence" value="ECO:0007669"/>
    <property type="project" value="UniProtKB-KW"/>
</dbReference>
<dbReference type="GO" id="GO:0019079">
    <property type="term" value="P:viral genome replication"/>
    <property type="evidence" value="ECO:0007669"/>
    <property type="project" value="InterPro"/>
</dbReference>
<dbReference type="GO" id="GO:0019082">
    <property type="term" value="P:viral protein processing"/>
    <property type="evidence" value="ECO:0007669"/>
    <property type="project" value="InterPro"/>
</dbReference>
<dbReference type="GO" id="GO:0075523">
    <property type="term" value="P:viral translational frameshifting"/>
    <property type="evidence" value="ECO:0007669"/>
    <property type="project" value="UniProtKB-KW"/>
</dbReference>
<dbReference type="CDD" id="cd21560">
    <property type="entry name" value="betaCoV-Nsp6"/>
    <property type="match status" value="1"/>
</dbReference>
<dbReference type="CDD" id="cd21516">
    <property type="entry name" value="betaCoV_Nsp2_SARS-like"/>
    <property type="match status" value="1"/>
</dbReference>
<dbReference type="CDD" id="cd21666">
    <property type="entry name" value="betaCoV_Nsp5_Mpro"/>
    <property type="match status" value="1"/>
</dbReference>
<dbReference type="CDD" id="cd21827">
    <property type="entry name" value="betaCoV_Nsp7"/>
    <property type="match status" value="1"/>
</dbReference>
<dbReference type="CDD" id="cd21831">
    <property type="entry name" value="betaCoV_Nsp8"/>
    <property type="match status" value="1"/>
</dbReference>
<dbReference type="CDD" id="cd21898">
    <property type="entry name" value="betaCoV_Nsp9"/>
    <property type="match status" value="1"/>
</dbReference>
<dbReference type="CDD" id="cd21732">
    <property type="entry name" value="betaCoV_PLPro"/>
    <property type="match status" value="1"/>
</dbReference>
<dbReference type="CDD" id="cd21872">
    <property type="entry name" value="CoV_Nsp10"/>
    <property type="match status" value="1"/>
</dbReference>
<dbReference type="CDD" id="cd21473">
    <property type="entry name" value="cv_Nsp4_TM"/>
    <property type="match status" value="1"/>
</dbReference>
<dbReference type="CDD" id="cd21563">
    <property type="entry name" value="Macro_cv_SUD-M_Nsp3-like"/>
    <property type="match status" value="1"/>
</dbReference>
<dbReference type="CDD" id="cd21562">
    <property type="entry name" value="Macro_cv_SUD-N_Nsp3-like"/>
    <property type="match status" value="1"/>
</dbReference>
<dbReference type="CDD" id="cd21557">
    <property type="entry name" value="Macro_X_Nsp3-like"/>
    <property type="match status" value="1"/>
</dbReference>
<dbReference type="CDD" id="cd22662">
    <property type="entry name" value="SARS-CoV-like_Nsp1_C"/>
    <property type="match status" value="1"/>
</dbReference>
<dbReference type="CDD" id="cd21796">
    <property type="entry name" value="SARS-CoV-like_Nsp1_N"/>
    <property type="match status" value="1"/>
</dbReference>
<dbReference type="CDD" id="cd21814">
    <property type="entry name" value="SARS-CoV-like_Nsp3_betaSM"/>
    <property type="match status" value="1"/>
</dbReference>
<dbReference type="CDD" id="cd21822">
    <property type="entry name" value="SARS-CoV-like_Nsp3_NAB"/>
    <property type="match status" value="1"/>
</dbReference>
<dbReference type="CDD" id="cd21525">
    <property type="entry name" value="SUD_C_SARS-CoV_Nsp3"/>
    <property type="match status" value="1"/>
</dbReference>
<dbReference type="CDD" id="cd21717">
    <property type="entry name" value="TM_Y_SARS-CoV-like_Nsp3_C"/>
    <property type="match status" value="1"/>
</dbReference>
<dbReference type="CDD" id="cd21467">
    <property type="entry name" value="Ubl1_cv_Nsp3_N-like"/>
    <property type="match status" value="1"/>
</dbReference>
<dbReference type="FunFam" id="1.10.8.370:FF:000001">
    <property type="entry name" value="Orf1a polyprotein"/>
    <property type="match status" value="1"/>
</dbReference>
<dbReference type="FunFam" id="2.40.10.250:FF:000001">
    <property type="entry name" value="Orf1a polyprotein"/>
    <property type="match status" value="1"/>
</dbReference>
<dbReference type="FunFam" id="2.60.120.1680:FF:000001">
    <property type="entry name" value="Orf1a polyprotein"/>
    <property type="match status" value="1"/>
</dbReference>
<dbReference type="FunFam" id="3.40.220.10:FF:000008">
    <property type="entry name" value="Orf1a polyprotein"/>
    <property type="match status" value="1"/>
</dbReference>
<dbReference type="FunFam" id="3.40.220.30:FF:000001">
    <property type="entry name" value="Orf1a polyprotein"/>
    <property type="match status" value="1"/>
</dbReference>
<dbReference type="FunFam" id="1.10.150.420:FF:000001">
    <property type="entry name" value="Replicase polyprotein"/>
    <property type="match status" value="1"/>
</dbReference>
<dbReference type="FunFam" id="1.10.1840.10:FF:000001">
    <property type="entry name" value="Replicase polyprotein 1a"/>
    <property type="match status" value="1"/>
</dbReference>
<dbReference type="FunFam" id="1.10.8.1190:FF:000001">
    <property type="entry name" value="Replicase polyprotein 1a"/>
    <property type="match status" value="1"/>
</dbReference>
<dbReference type="FunFam" id="2.40.10.10:FF:000033">
    <property type="entry name" value="Replicase polyprotein 1a"/>
    <property type="match status" value="1"/>
</dbReference>
<dbReference type="FunFam" id="3.40.220.20:FF:000001">
    <property type="entry name" value="Replicase polyprotein 1a"/>
    <property type="match status" value="1"/>
</dbReference>
<dbReference type="Gene3D" id="1.10.8.1190">
    <property type="match status" value="1"/>
</dbReference>
<dbReference type="Gene3D" id="2.60.120.1680">
    <property type="match status" value="1"/>
</dbReference>
<dbReference type="Gene3D" id="3.10.20.350">
    <property type="match status" value="1"/>
</dbReference>
<dbReference type="Gene3D" id="3.10.20.540">
    <property type="match status" value="1"/>
</dbReference>
<dbReference type="Gene3D" id="6.10.140.2090">
    <property type="match status" value="1"/>
</dbReference>
<dbReference type="Gene3D" id="1.10.150.420">
    <property type="entry name" value="Coronavirus nonstructural protein 4 C-terminus"/>
    <property type="match status" value="1"/>
</dbReference>
<dbReference type="Gene3D" id="3.40.30.150">
    <property type="entry name" value="Coronavirus polyprotein cleavage domain"/>
    <property type="match status" value="1"/>
</dbReference>
<dbReference type="Gene3D" id="3.40.220.10">
    <property type="entry name" value="Leucine Aminopeptidase, subunit E, domain 1"/>
    <property type="match status" value="1"/>
</dbReference>
<dbReference type="Gene3D" id="1.10.1840.10">
    <property type="entry name" value="main proteinase (3clpro) structure, domain 3"/>
    <property type="match status" value="1"/>
</dbReference>
<dbReference type="Gene3D" id="3.40.220.20">
    <property type="entry name" value="Nsp3, SUD-M subdomain"/>
    <property type="match status" value="1"/>
</dbReference>
<dbReference type="Gene3D" id="3.40.220.30">
    <property type="entry name" value="Nsp3, SUD-N subdomain"/>
    <property type="match status" value="1"/>
</dbReference>
<dbReference type="Gene3D" id="1.10.8.370">
    <property type="entry name" value="nsp7 replicase"/>
    <property type="match status" value="1"/>
</dbReference>
<dbReference type="Gene3D" id="3.30.70.3540">
    <property type="entry name" value="Nsp8 replicase, head domain"/>
    <property type="match status" value="1"/>
</dbReference>
<dbReference type="Gene3D" id="2.40.10.250">
    <property type="entry name" value="Replicase NSP9"/>
    <property type="match status" value="1"/>
</dbReference>
<dbReference type="Gene3D" id="3.40.50.11020">
    <property type="entry name" value="Replicase polyprotein, nucleic acid-binding domain"/>
    <property type="match status" value="1"/>
</dbReference>
<dbReference type="Gene3D" id="2.40.10.10">
    <property type="entry name" value="Trypsin-like serine proteases"/>
    <property type="match status" value="2"/>
</dbReference>
<dbReference type="InterPro" id="IPR046443">
    <property type="entry name" value="a/bCoV_NSP1_glob"/>
</dbReference>
<dbReference type="InterPro" id="IPR046442">
    <property type="entry name" value="bCoV_NSP1_C"/>
</dbReference>
<dbReference type="InterPro" id="IPR043613">
    <property type="entry name" value="CoV_NSP2_C"/>
</dbReference>
<dbReference type="InterPro" id="IPR047573">
    <property type="entry name" value="CoV_NSP2_M"/>
</dbReference>
<dbReference type="InterPro" id="IPR049894">
    <property type="entry name" value="COV_NSP3_3ECTO"/>
</dbReference>
<dbReference type="InterPro" id="IPR043611">
    <property type="entry name" value="CoV_NSP3_C"/>
</dbReference>
<dbReference type="InterPro" id="IPR047566">
    <property type="entry name" value="CoV_NSP3_Y"/>
</dbReference>
<dbReference type="InterPro" id="IPR032505">
    <property type="entry name" value="CoV_NSP4_C"/>
</dbReference>
<dbReference type="InterPro" id="IPR043612">
    <property type="entry name" value="CoV_NSP4_N"/>
</dbReference>
<dbReference type="InterPro" id="IPR022733">
    <property type="entry name" value="DPUP_SUD_C_bCoV"/>
</dbReference>
<dbReference type="InterPro" id="IPR002589">
    <property type="entry name" value="Macro_dom"/>
</dbReference>
<dbReference type="InterPro" id="IPR043472">
    <property type="entry name" value="Macro_dom-like"/>
</dbReference>
<dbReference type="InterPro" id="IPR044371">
    <property type="entry name" value="Macro_X_NSP3-like"/>
</dbReference>
<dbReference type="InterPro" id="IPR036333">
    <property type="entry name" value="NSP10_sf_CoV"/>
</dbReference>
<dbReference type="InterPro" id="IPR021590">
    <property type="entry name" value="NSP1_glob_bCoV"/>
</dbReference>
<dbReference type="InterPro" id="IPR038030">
    <property type="entry name" value="NSP1_glob_sf_bCoV"/>
</dbReference>
<dbReference type="InterPro" id="IPR043615">
    <property type="entry name" value="NSP2_N_CoV"/>
</dbReference>
<dbReference type="InterPro" id="IPR044389">
    <property type="entry name" value="NSP2_SARS-CoV-like"/>
</dbReference>
<dbReference type="InterPro" id="IPR024375">
    <property type="entry name" value="NSP3_bCoV"/>
</dbReference>
<dbReference type="InterPro" id="IPR047567">
    <property type="entry name" value="NSP3_G2M_bCoV"/>
</dbReference>
<dbReference type="InterPro" id="IPR024358">
    <property type="entry name" value="NSP3_N_bCoV"/>
</dbReference>
<dbReference type="InterPro" id="IPR032592">
    <property type="entry name" value="NSP3_NAB_bCoV"/>
</dbReference>
<dbReference type="InterPro" id="IPR042570">
    <property type="entry name" value="NSP3_NAB_bCoV_sf"/>
</dbReference>
<dbReference type="InterPro" id="IPR038166">
    <property type="entry name" value="NSP3_PL2pro_sf_bCoV"/>
</dbReference>
<dbReference type="InterPro" id="IPR038400">
    <property type="entry name" value="NSP3_SUD-M_sf_bCoV"/>
</dbReference>
<dbReference type="InterPro" id="IPR044864">
    <property type="entry name" value="NSP3_SUD-N_bCoV"/>
</dbReference>
<dbReference type="InterPro" id="IPR044374">
    <property type="entry name" value="NSP3_SUD-N_SARS-CoV"/>
</dbReference>
<dbReference type="InterPro" id="IPR043478">
    <property type="entry name" value="NSP3_SUD-N_sf_bCoV"/>
</dbReference>
<dbReference type="InterPro" id="IPR044357">
    <property type="entry name" value="NSP3_Ubl1_dom_CoV"/>
</dbReference>
<dbReference type="InterPro" id="IPR044353">
    <property type="entry name" value="Nsp3_Ubl2_dom_CoV"/>
</dbReference>
<dbReference type="InterPro" id="IPR038083">
    <property type="entry name" value="NSP3A-like"/>
</dbReference>
<dbReference type="InterPro" id="IPR038123">
    <property type="entry name" value="NSP4_C_sf_CoV"/>
</dbReference>
<dbReference type="InterPro" id="IPR044367">
    <property type="entry name" value="NSP6_betaCoV"/>
</dbReference>
<dbReference type="InterPro" id="IPR043610">
    <property type="entry name" value="NSP6_CoV"/>
</dbReference>
<dbReference type="InterPro" id="IPR014828">
    <property type="entry name" value="NSP7_CoV"/>
</dbReference>
<dbReference type="InterPro" id="IPR037204">
    <property type="entry name" value="NSP7_sf_CoV"/>
</dbReference>
<dbReference type="InterPro" id="IPR014829">
    <property type="entry name" value="NSP8_CoV"/>
</dbReference>
<dbReference type="InterPro" id="IPR037230">
    <property type="entry name" value="NSP8_sf_CoV"/>
</dbReference>
<dbReference type="InterPro" id="IPR014822">
    <property type="entry name" value="NSP9_CoV"/>
</dbReference>
<dbReference type="InterPro" id="IPR036499">
    <property type="entry name" value="NSP9_sf_CoV"/>
</dbReference>
<dbReference type="InterPro" id="IPR013016">
    <property type="entry name" value="Peptidase_C16_CoV"/>
</dbReference>
<dbReference type="InterPro" id="IPR008740">
    <property type="entry name" value="Peptidase_C30_CoV"/>
</dbReference>
<dbReference type="InterPro" id="IPR043477">
    <property type="entry name" value="Peptidase_C30_dom3_CoV"/>
</dbReference>
<dbReference type="InterPro" id="IPR009003">
    <property type="entry name" value="Peptidase_S1_PA"/>
</dbReference>
<dbReference type="InterPro" id="IPR043504">
    <property type="entry name" value="Peptidase_S1_PA_chymotrypsin"/>
</dbReference>
<dbReference type="InterPro" id="IPR043177">
    <property type="entry name" value="PLpro_N_sf_CoV"/>
</dbReference>
<dbReference type="InterPro" id="IPR043503">
    <property type="entry name" value="PLpro_palm_finger_dom_CoV"/>
</dbReference>
<dbReference type="InterPro" id="IPR043178">
    <property type="entry name" value="PLpro_thumb_sf_CoV"/>
</dbReference>
<dbReference type="InterPro" id="IPR018995">
    <property type="entry name" value="RNA_synth_NSP10_CoV"/>
</dbReference>
<dbReference type="Pfam" id="PF16251">
    <property type="entry name" value="bCoV_NAB"/>
    <property type="match status" value="1"/>
</dbReference>
<dbReference type="Pfam" id="PF11501">
    <property type="entry name" value="bCoV_NSP1"/>
    <property type="match status" value="1"/>
</dbReference>
<dbReference type="Pfam" id="PF12379">
    <property type="entry name" value="bCoV_NSP3_N"/>
    <property type="match status" value="1"/>
</dbReference>
<dbReference type="Pfam" id="PF12124">
    <property type="entry name" value="bCoV_SUD_C"/>
    <property type="match status" value="1"/>
</dbReference>
<dbReference type="Pfam" id="PF11633">
    <property type="entry name" value="bCoV_SUD_M"/>
    <property type="match status" value="1"/>
</dbReference>
<dbReference type="Pfam" id="PF09401">
    <property type="entry name" value="CoV_NSP10"/>
    <property type="match status" value="1"/>
</dbReference>
<dbReference type="Pfam" id="PF19212">
    <property type="entry name" value="CoV_NSP2_C"/>
    <property type="match status" value="1"/>
</dbReference>
<dbReference type="Pfam" id="PF19211">
    <property type="entry name" value="CoV_NSP2_N"/>
    <property type="match status" value="1"/>
</dbReference>
<dbReference type="Pfam" id="PF19218">
    <property type="entry name" value="CoV_NSP3_C"/>
    <property type="match status" value="1"/>
</dbReference>
<dbReference type="Pfam" id="PF16348">
    <property type="entry name" value="CoV_NSP4_C"/>
    <property type="match status" value="1"/>
</dbReference>
<dbReference type="Pfam" id="PF19217">
    <property type="entry name" value="CoV_NSP4_N"/>
    <property type="match status" value="1"/>
</dbReference>
<dbReference type="Pfam" id="PF19213">
    <property type="entry name" value="CoV_NSP6"/>
    <property type="match status" value="1"/>
</dbReference>
<dbReference type="Pfam" id="PF08716">
    <property type="entry name" value="CoV_NSP7"/>
    <property type="match status" value="1"/>
</dbReference>
<dbReference type="Pfam" id="PF08717">
    <property type="entry name" value="CoV_NSP8"/>
    <property type="match status" value="1"/>
</dbReference>
<dbReference type="Pfam" id="PF08710">
    <property type="entry name" value="CoV_NSP9"/>
    <property type="match status" value="1"/>
</dbReference>
<dbReference type="Pfam" id="PF08715">
    <property type="entry name" value="CoV_peptidase"/>
    <property type="match status" value="1"/>
</dbReference>
<dbReference type="Pfam" id="PF01661">
    <property type="entry name" value="Macro"/>
    <property type="match status" value="1"/>
</dbReference>
<dbReference type="Pfam" id="PF05409">
    <property type="entry name" value="Peptidase_C30"/>
    <property type="match status" value="1"/>
</dbReference>
<dbReference type="SMART" id="SM00506">
    <property type="entry name" value="A1pp"/>
    <property type="match status" value="1"/>
</dbReference>
<dbReference type="SUPFAM" id="SSF144246">
    <property type="entry name" value="Coronavirus NSP10-like"/>
    <property type="match status" value="1"/>
</dbReference>
<dbReference type="SUPFAM" id="SSF140367">
    <property type="entry name" value="Coronavirus NSP7-like"/>
    <property type="match status" value="1"/>
</dbReference>
<dbReference type="SUPFAM" id="SSF143076">
    <property type="entry name" value="Coronavirus NSP8-like"/>
    <property type="match status" value="1"/>
</dbReference>
<dbReference type="SUPFAM" id="SSF52949">
    <property type="entry name" value="Macro domain-like"/>
    <property type="match status" value="1"/>
</dbReference>
<dbReference type="SUPFAM" id="SSF159936">
    <property type="entry name" value="NSP3A-like"/>
    <property type="match status" value="1"/>
</dbReference>
<dbReference type="SUPFAM" id="SSF101816">
    <property type="entry name" value="Replicase NSP9"/>
    <property type="match status" value="1"/>
</dbReference>
<dbReference type="SUPFAM" id="SSF160099">
    <property type="entry name" value="SARS Nsp1-like"/>
    <property type="match status" value="1"/>
</dbReference>
<dbReference type="SUPFAM" id="SSF50494">
    <property type="entry name" value="Trypsin-like serine proteases"/>
    <property type="match status" value="1"/>
</dbReference>
<dbReference type="PROSITE" id="PS51963">
    <property type="entry name" value="BCOV_NSP1_C"/>
    <property type="match status" value="1"/>
</dbReference>
<dbReference type="PROSITE" id="PS51942">
    <property type="entry name" value="BCOV_NSP3C_C"/>
    <property type="match status" value="1"/>
</dbReference>
<dbReference type="PROSITE" id="PS51941">
    <property type="entry name" value="BCOV_NSP3C_M"/>
    <property type="match status" value="1"/>
</dbReference>
<dbReference type="PROSITE" id="PS51994">
    <property type="entry name" value="BCOV_NSP3E_G2M"/>
    <property type="match status" value="1"/>
</dbReference>
<dbReference type="PROSITE" id="PS51945">
    <property type="entry name" value="BCOV_NSP3E_NAB"/>
    <property type="match status" value="1"/>
</dbReference>
<dbReference type="PROSITE" id="PS51993">
    <property type="entry name" value="COV_3ECTO"/>
    <property type="match status" value="1"/>
</dbReference>
<dbReference type="PROSITE" id="PS51952">
    <property type="entry name" value="COV_EXON_MTASE_COACT"/>
    <property type="match status" value="1"/>
</dbReference>
<dbReference type="PROSITE" id="PS51962">
    <property type="entry name" value="COV_NSP1"/>
    <property type="match status" value="1"/>
</dbReference>
<dbReference type="PROSITE" id="PS51991">
    <property type="entry name" value="COV_NSP2_C"/>
    <property type="match status" value="1"/>
</dbReference>
<dbReference type="PROSITE" id="PS51990">
    <property type="entry name" value="COV_NSP2_M"/>
    <property type="match status" value="1"/>
</dbReference>
<dbReference type="PROSITE" id="PS51989">
    <property type="entry name" value="COV_NSP2_N"/>
    <property type="match status" value="1"/>
</dbReference>
<dbReference type="PROSITE" id="PS51992">
    <property type="entry name" value="COV_NSP3_Y"/>
    <property type="match status" value="1"/>
</dbReference>
<dbReference type="PROSITE" id="PS51943">
    <property type="entry name" value="COV_NSP3A_UBL"/>
    <property type="match status" value="1"/>
</dbReference>
<dbReference type="PROSITE" id="PS51944">
    <property type="entry name" value="COV_NSP3D_UBL"/>
    <property type="match status" value="1"/>
</dbReference>
<dbReference type="PROSITE" id="PS51946">
    <property type="entry name" value="COV_NSP4C"/>
    <property type="match status" value="1"/>
</dbReference>
<dbReference type="PROSITE" id="PS51949">
    <property type="entry name" value="COV_NSP7"/>
    <property type="match status" value="1"/>
</dbReference>
<dbReference type="PROSITE" id="PS51950">
    <property type="entry name" value="COV_NSP8"/>
    <property type="match status" value="1"/>
</dbReference>
<dbReference type="PROSITE" id="PS51951">
    <property type="entry name" value="COV_NSP9_SSRNA_BD"/>
    <property type="match status" value="1"/>
</dbReference>
<dbReference type="PROSITE" id="PS51442">
    <property type="entry name" value="M_PRO"/>
    <property type="match status" value="1"/>
</dbReference>
<dbReference type="PROSITE" id="PS51154">
    <property type="entry name" value="MACRO"/>
    <property type="match status" value="1"/>
</dbReference>
<dbReference type="PROSITE" id="PS51124">
    <property type="entry name" value="PEPTIDASE_C16"/>
    <property type="match status" value="1"/>
</dbReference>
<dbReference type="PROSITE" id="PS51940">
    <property type="entry name" value="SARS_NSP3C_N"/>
    <property type="match status" value="1"/>
</dbReference>
<sequence length="4382" mass="486373">MESLVLGVNEKTHVQLSLPVLQVRDVLVRGFGDSVEEALSEAREHLKNGTCGLVELEKGVLPQLEQPYVFIKRSDALSTNHGHKVVELVAEMDGIQYGRSGITLGVLVPHVGETPIAYRNVLLRKNGNKGAGGHSYGIDLKSYDLGDELGTDPIEDYEQNWNTKHGSGALRELTRELNGGAVTRYVDNNFCGPDGYPLDCIKDFLARAGKSMCTLSEQLDYIESKRGVYCCRDHEHEIAWFTERSDKSYEHQTPFEIKSAKKFDTFKGECPKFVFPLNSKVKVIQPRVEKKKTEGFMGRIRSVYPVASPQECNNMHLSTLMKCNHCDEVSWQTCDFLKATCEHCGTENLVIEGPTTCGYLPTNAVVKMPCPACQDPEIGPEHSVADYHNHSNIETRLRKGGRTRCFGGCVFAYVGCYNKRAYWVPRASADIGSGHTGITGDNVETLNEDLLEILSRERVNINIVGDFHLNEEVAIILASFSASTSAFIDTIKSLDYKSFKTIVESCGNYKVTKGKPVKGAWNIGQQRSVLTPLCGFPSQAAGVIRSIFARTLDAANHSIPDLQRAAVTILDGISEQSLRLVDAMVYTSDLLTNSVIIMAYVTGGLVQQTSQWLSNLLGTTVEKLRPIFEWIEAKLSAGVEFLKDAWEILKFLITGVFDIVKGQIQVASDNIKDCVKCFIDVVNKALEMCIDQVTIAGAKLRSLNLGEVFIAQSKGLYRQCIRGKEQLQLLMPLKAPKEVTFLEGDSHDTVLTSEEVVLKNGELEALETPVDSFTNGAIVGTPVCVNGLMLLEIKDKEQYCALSPGLLATNNVFRLKGGAPIKGVTFGEDTVWEVQGYKNVRITFELDERVDKVLNEKCSVYTVESGTEVTEFACVVAEAVVKTLQPVSDLLTNMGIDLDEWSVATFYLFDDAGEENFSSRMYCSFYPPDEEEEDDAECEEEEIDETCEHEYGTEDDYQGLPLEFGASAETVRVEEEEEEDWLDDTTEQSEIEPEPEPTPEEPVNQFTGYLKLTDNVAIKCVDIVKEAQSANPMVIVNAANIHLKHGGGVAGALNKATNGAMQKESDDYIKLNGPLTVGGSCLLSGHNLAKKCLHVVGPNLNAGEDIQLLKAAYENFNSQDILLAPLLSAGIFGAKPLQSLQVCVQTVRTQVYIAVNDKALYEQVVMDYLDNLKPRVEAPKQEEPPNTEDSKTEEKSVVQKPVDVKPKIKACIDEVTTTLEETKFLTNKLLLFADINGKLYHDSQNMLRGEDMSFLEKDAPYMVGDVITSGDITCVVIPSKKAGGTTEMLSRALKKVPVDEYITTYPGQGCAGYTLEEAKTALKKCKSAFYVLPSEAPNAKEEILGTVSWNLREMLAHAEETRKLMPICMDVRAIMATIQRKYKGIKIQEGIVDYGVRFFFYTSKEPVASIITKLNSLNEPLVTMPIGYVTHGFNLEEAARCMRSLKAPAVVSVSSPDAVTTYNGYLTSSSKTSEEHFVETVSLAGSYRDWSYSGQRTELGVEFLKRGDKIVYHTLESPVEFHLDGEVLSLDKLKSLLSLREVKTIKVFTTVDNTNLHTQLVDMSMTYGQQFGPTYLDGADVTKIKPHVNHEGKTFFVLPSDDTLRSEAFEYYHTLDESFLGRYMSALNHTKKWKFPQVGGLTSIKWADNNCYLSSVLLALQQLEVKFNAPALQEAYYRARAGDAANFCALILAYSNKTVGELGDVRETMTHLLQHANLESAKRVLNVVCKHCGQKTTTLTGVEAVMYMGTLSYDNLKTGVSIPCVCGRDATQYLVQQESSFVMMSAPPAEYKLQQGTFLCANEYTGNYQCGHYTHITAKETLYRIDGAHLTKMSEYKGPVTDVFYKETSYTTTIKPVSYKLDGVTYTEIEPKLDGYYKKDNAYYTEQPIDLVPTQPLPNASFDNFKLTCSNTKFADDLNQMTGFTKPASRELSVTFFPDLNGDVVAIDYRHYSASFKKGAKLLHKPIVWHINQATTKTTFKPNTWCLRCLWSTKPVDTSNSFEVLAVEDTQGMDNLACESQQPTSEEVVENPTIQKEVIECDVKTTEVVGNVILKPSDEGVKVTQELGHEDLMAAYVENTSITIKKPNELSLALGLKTIATHGIAAINSVPWSKILAYVKPFLGQAAITTSNCAKRLAQRVFNNYMPYVFTLLFQLCTFTKSTNSRIRASLPTTIAKNSVKSVAKLCLDAGINYVKSPKFSKLFTIAMWLLLLSICLGSLICVTAAFGVLLSNFGAPSYCNGVRELYLNSSNVTTMDFCEGSFPCSICLSGLDSLDSYPALETIQVTISSYKLDLTILGLAAEWVLAYMLFTKFFYLLGLSAIMQVFFGYFASHFISNSWLMWFIISIVQMAPVSAMVRMYIFFASFYYIWKSYVHIMDGCTSSTCMMCYKRNRATRVECTTIVNGMKRSFYVYANGGRGFCKTHNWNCLNCDTFCTGSTFISDEVARDLSLQFKRPINPTDQSSYIVDSVAVKNGALHLYFDKAGQKTYERHPLSHFVNLDNLRANNTKGSLPINVIVFDGKSKCDESASKSASVYYSQLMCQPILLLDQALVSDVGDSTEVSVKMFDAYVDTFSATFSVPMEKLKALVATAHSELAKGVALDGVLSTFVSAARQGVVDTDVDTKDVIECLKLSHHSDLEVTGDSCNNFMLTYNKVENMTPRDLGACIDCNARHINAQVAKSHNVSLIWNVKDYMSLSEQLRKQIRSAAKKNNIPFRLTCATTRQVVNVITTKISLKGGKIVSTCFKLMLKATLLCVLAALVCYIVMPVHTLSIHDGYTNEIIGYKAIQDGVTRDIISTDDCFANKHAGFDAWFSQRGGSYKNDKSCPVVAAIITREIGFIVPGLPGTVLRAINGDFLHFLPRVFSAVGNICYTPSKLIEYSDFATSACVLAAECTIFKDAMGKPVPYCYDTNLLEGSISYSELRPDTRYVLMDGSIIQFPNTYLEGSVRVVTTFDAEYCRHGTCERSEVGICLSTSGRWVLNNEHYRALSGVFCGVDAMNLIANIFTPLVQPVGALDVSASVVAGGIIAILVTCAAYYFMKFRRVFGEYNHVVAANALLFLMSFTILCLVPAYSFLPGVYSVFYLYLTFYFTNDVSFLAHLQWFAMFSPIVPFWITAIYVFCISLKHCHWFFNNYLRKRVMFNGVTFSTFEEAALCTFLLNKEMYLKLRSETLLPLTQYNRYLALYNKYKYFSGALDTTSYREAACCHLAKALNDFSNSGADVLYQPPQTSITSAVLQSGFRKMAFPSGKVEGCMVQVTCGTTTLNGLWLDDTVYCPRHVICTAEDMLNPNYEDLLIRKSNHSFLVQAGNVQLRVIGHSMQNCLLRLKVDTSNPKTPKYKFVRIQPGQTFSVLACYNGSPSGVYQCAMRPNHTIKGSFLNGSCGSVGFNIDYDCVSFCYMHHMELPTGVHAGTDLEGKFYGPFVDRQTAQAAGTDTTITLNVLAWLYAAVINGDRWFLNRFTTTLNDFNLVAMKYNYEPLTQDHVDILGPLSAQTGIAVLDMCAALKELLQNGMNGRTILGSTILEDEFTPFDVVRQCSGVTFQGKFKKIVKGTHHWMLLTFLTSLLILVQSTQWSLFFFVYENAFLPFTLGIMAIAACAMLLVKHKHAFLCLFLLPSLATVAYFNMVYMPASWVMRIMTWLELADTSLSGYRLKDCVMYASALVLLILMTARTVYDDAARRVWTLMNVITLVYKVYYGNALDQAISMWALVISVTSNYSGVVTTIMFLARAIVFVCVEYYPLLFITGNTLQCIMLVYCFLGYCCCCYFGLFCLLNRYFRLTLGVYDYLVSTQEFRYMNSQGLLPPKSSIDAFKLNIKLLGIGGKPCIKVATVQSKMSDVKCTSVVLLSVLQQLRVESSSKLWAQCVQLHNDILLAKDTTEAFEKMVSLLSVLLSMQGAVDINRLCEEMLDNRATLQAIASEFSSLPSYAAYATAQEAYEQAVANGDSEVVLKKLKKSLNVAKSEFDRDAAMQRKLEKMADQAMTQMYKQARSEDKRAKVTSAMQTMLFTMLRKLDNDALNNIINNARDGCVPLNIIPLTTAAKLMVVVPDYGTYKNTCDGNTFTYASALWEIQQVVDADSKIVQLSEINMDNSPNLAWPLIVTALRANSAVKLQNNELSPVALRQMSCAAGTTQTACTDDNALAYYNNSKGGRFVLALLSDHQDLKWARFPKSDGTGTIYTELEPPCRFVTDTPKGPKVKYLYFIKGLNNLNRGMVLGSLAATVRLQAGNATEVPANSTVLSFCAFAVDPAKAYKDYLASGGQPITNCVKMLCTHTGTGQAITVTPEANMDQESFGGASCCLYCRCHIDHPNPKGFCDLKGKYVQIPTTCANDPVGFTLRNTVCTVCGMWKGYGCSCDQLREPLMQSADASTFLNGFAV</sequence>
<accession>P0C6U8</accession>
<accession>P59641</accession>
<organism>
    <name type="scientific">Severe acute respiratory syndrome coronavirus</name>
    <name type="common">SARS-CoV</name>
    <dbReference type="NCBI Taxonomy" id="694009"/>
    <lineage>
        <taxon>Viruses</taxon>
        <taxon>Riboviria</taxon>
        <taxon>Orthornavirae</taxon>
        <taxon>Pisuviricota</taxon>
        <taxon>Pisoniviricetes</taxon>
        <taxon>Nidovirales</taxon>
        <taxon>Cornidovirineae</taxon>
        <taxon>Coronaviridae</taxon>
        <taxon>Orthocoronavirinae</taxon>
        <taxon>Betacoronavirus</taxon>
        <taxon>Sarbecovirus</taxon>
    </lineage>
</organism>
<organismHost>
    <name type="scientific">Homo sapiens</name>
    <name type="common">Human</name>
    <dbReference type="NCBI Taxonomy" id="9606"/>
</organismHost>
<organismHost>
    <name type="scientific">Paguma larvata</name>
    <name type="common">Masked palm civet</name>
    <dbReference type="NCBI Taxonomy" id="9675"/>
</organismHost>
<reference key="1">
    <citation type="journal article" date="2003" name="Science">
        <title>Characterization of a novel coronavirus associated with severe acute respiratory syndrome.</title>
        <authorList>
            <person name="Rota P.A."/>
            <person name="Oberste M.S."/>
            <person name="Monroe S.S."/>
            <person name="Nix W.A."/>
            <person name="Campagnoli R."/>
            <person name="Icenogle J.P."/>
            <person name="Penaranda S."/>
            <person name="Bankamp B."/>
            <person name="Maher K."/>
            <person name="Chen M.-H."/>
            <person name="Tong S."/>
            <person name="Tamin A."/>
            <person name="Lowe L."/>
            <person name="Frace M."/>
            <person name="DeRisi J.L."/>
            <person name="Chen Q."/>
            <person name="Wang D."/>
            <person name="Erdman D.D."/>
            <person name="Peret T.C.T."/>
            <person name="Burns C."/>
            <person name="Ksiazek T.G."/>
            <person name="Rollin P.E."/>
            <person name="Sanchez A."/>
            <person name="Liffick S."/>
            <person name="Holloway B."/>
            <person name="Limor J."/>
            <person name="McCaustland K."/>
            <person name="Olsen-Rasmussen M."/>
            <person name="Fouchier R."/>
            <person name="Guenther S."/>
            <person name="Osterhaus A.D.M.E."/>
            <person name="Drosten C."/>
            <person name="Pallansch M.A."/>
            <person name="Anderson L.J."/>
            <person name="Bellini W.J."/>
        </authorList>
    </citation>
    <scope>NUCLEOTIDE SEQUENCE [GENOMIC RNA]</scope>
    <source>
        <strain>Isolate Urbani</strain>
    </source>
</reference>
<reference key="2">
    <citation type="journal article" date="2003" name="Science">
        <title>The genome sequence of the SARS-associated coronavirus.</title>
        <authorList>
            <person name="Marra M.A."/>
            <person name="Jones S.J.M."/>
            <person name="Astell C.R."/>
            <person name="Holt R.A."/>
            <person name="Brooks-Wilson A."/>
            <person name="Butterfield Y.S.N."/>
            <person name="Khattra J."/>
            <person name="Asano J.K."/>
            <person name="Barber S.A."/>
            <person name="Chan S.Y."/>
            <person name="Cloutier A."/>
            <person name="Coughlin S.M."/>
            <person name="Freeman D."/>
            <person name="Girn N."/>
            <person name="Griffith O.L."/>
            <person name="Leach S.R."/>
            <person name="Mayo M."/>
            <person name="McDonald H."/>
            <person name="Montgomery S.B."/>
            <person name="Pandoh P.K."/>
            <person name="Petrescu A.S."/>
            <person name="Robertson A.G."/>
            <person name="Schein J.E."/>
            <person name="Siddiqui A."/>
            <person name="Smailus D.E."/>
            <person name="Stott J.M."/>
            <person name="Yang G.S."/>
            <person name="Plummer F."/>
            <person name="Andonov A."/>
            <person name="Artsob H."/>
            <person name="Bastien N."/>
            <person name="Bernard K."/>
            <person name="Booth T.F."/>
            <person name="Bowness D."/>
            <person name="Czub M."/>
            <person name="Drebot M."/>
            <person name="Fernando L."/>
            <person name="Flick R."/>
            <person name="Garbutt M."/>
            <person name="Gray M."/>
            <person name="Grolla A."/>
            <person name="Jones S."/>
            <person name="Feldmann H."/>
            <person name="Meyers A."/>
            <person name="Kabani A."/>
            <person name="Li Y."/>
            <person name="Normand S."/>
            <person name="Stroher U."/>
            <person name="Tipples G.A."/>
            <person name="Tyler S."/>
            <person name="Vogrig R."/>
            <person name="Ward D."/>
            <person name="Watson B."/>
            <person name="Brunham R.C."/>
            <person name="Krajden M."/>
            <person name="Petric M."/>
            <person name="Skowronski D.M."/>
            <person name="Upton C."/>
            <person name="Roper R.L."/>
        </authorList>
    </citation>
    <scope>NUCLEOTIDE SEQUENCE [GENOMIC RNA]</scope>
    <source>
        <strain>Isolate Tor2</strain>
    </source>
</reference>
<reference key="3">
    <citation type="journal article" date="2003" name="N. Engl. J. Med.">
        <title>Coronavirus genomic-sequence variations and the epidemiology of the severe acute respiratory syndrome.</title>
        <authorList>
            <person name="Tsui S.K.W."/>
            <person name="Chim S.S.C."/>
            <person name="Lo Y.M.D."/>
        </authorList>
    </citation>
    <scope>NUCLEOTIDE SEQUENCE [GENOMIC RNA]</scope>
    <source>
        <strain>Isolate CUHK-Su10</strain>
        <strain>Isolate CUHK-W1</strain>
    </source>
</reference>
<reference key="4">
    <citation type="journal article" date="2003" name="Science">
        <title>Isolation and characterization of viruses related to the SARS coronavirus from animals in southern China.</title>
        <authorList>
            <person name="Guan Y."/>
            <person name="Zheng B.J."/>
            <person name="He Y.Q."/>
            <person name="Liu X.L."/>
            <person name="Zhuang Z.X."/>
            <person name="Cheung C.L."/>
            <person name="Luo S.W."/>
            <person name="Li P.H."/>
            <person name="Zhang L.J."/>
            <person name="Guan Y.J."/>
            <person name="Butt K.M."/>
            <person name="Wong K.L."/>
            <person name="Chan K.W."/>
            <person name="Lim W."/>
            <person name="Shortridge K.F."/>
            <person name="Yuen K.Y."/>
            <person name="Peiris J.S.M."/>
            <person name="Poon L.L.M."/>
        </authorList>
    </citation>
    <scope>NUCLEOTIDE SEQUENCE [GENOMIC RNA]</scope>
    <source>
        <strain>Isolate GZ50</strain>
        <strain>Isolate SZ16</strain>
        <strain>Isolate SZ3</strain>
    </source>
</reference>
<reference key="5">
    <citation type="journal article" date="2003" name="Exp. Biol. Med.">
        <title>The complete genome sequence of severe acute respiratory syndrome coronavirus strain HKU-39849 (HK-39).</title>
        <authorList>
            <person name="Zeng F.Y."/>
            <person name="Chan C.W."/>
            <person name="Chan M.N."/>
            <person name="Chen J.D."/>
            <person name="Chow K.Y.C."/>
            <person name="Hon C.C.C."/>
            <person name="Hui R.K.H."/>
            <person name="Li J."/>
            <person name="Li V.Y.Y."/>
            <person name="Wang C.Y."/>
            <person name="Wang P.Y."/>
            <person name="Guan Y."/>
            <person name="Zheng B."/>
            <person name="Poon L.L.M."/>
            <person name="Chan K.H."/>
            <person name="Yuen K.Y."/>
            <person name="Peiris J.S.M."/>
            <person name="Leung F.C."/>
        </authorList>
    </citation>
    <scope>NUCLEOTIDE SEQUENCE [GENOMIC RNA]</scope>
    <source>
        <strain>Isolate HKU-39849</strain>
    </source>
</reference>
<reference key="6">
    <citation type="journal article" date="2003" name="Lancet">
        <title>Comparative full-length genome sequence analysis of 14 SARS coronavirus isolates and common mutations associated with putative origins of infection.</title>
        <authorList>
            <person name="Ruan Y."/>
            <person name="Wei C.L."/>
            <person name="Ling A.E."/>
            <person name="Vega V.B."/>
            <person name="Thoreau H."/>
            <person name="Se Thoe S.Y."/>
            <person name="Chia J.-M."/>
            <person name="Ng P."/>
            <person name="Chiu K.P."/>
            <person name="Lim L."/>
            <person name="Zhang T."/>
            <person name="Chan K.P."/>
            <person name="Oon L.E.L."/>
            <person name="Ng M.L."/>
            <person name="Leo S.Y."/>
            <person name="Ng L.F.P."/>
            <person name="Ren E.C."/>
            <person name="Stanton L.W."/>
            <person name="Long P.M."/>
            <person name="Liu E.T."/>
        </authorList>
    </citation>
    <scope>NUCLEOTIDE SEQUENCE [GENOMIC RNA]</scope>
    <source>
        <strain>Isolate Sin2500</strain>
        <strain>Isolate Sin2677</strain>
        <strain>Isolate Sin2679</strain>
        <strain>Isolate Sin2748</strain>
        <strain>Isolate sin2774</strain>
    </source>
</reference>
<reference key="7">
    <citation type="journal article" date="2003" name="Lancet">
        <authorList>
            <person name="Ruan Y."/>
            <person name="Wei C.L."/>
            <person name="Ling A.E."/>
            <person name="Vega V.B."/>
            <person name="Thoreau H."/>
            <person name="Se Thoe S.Y."/>
            <person name="Chia J.-M."/>
            <person name="Ng P."/>
            <person name="Chiu K.P."/>
            <person name="Lim L."/>
            <person name="Zhang T."/>
            <person name="Chan K.P."/>
            <person name="Oon L.E.L."/>
            <person name="Ng M.L."/>
            <person name="Leo S.Y."/>
            <person name="Ng L.F.P."/>
            <person name="Ren E.C."/>
            <person name="Stanton L.W."/>
            <person name="Long P.M."/>
            <person name="Liu E.T."/>
        </authorList>
    </citation>
    <scope>ERRATUM OF PUBMED:12781537</scope>
</reference>
<reference key="8">
    <citation type="journal article" date="2003" name="Chin. Med. J.">
        <title>Severe acute respiratory syndrome-associated coronavirus genotype and its characterization.</title>
        <authorList>
            <person name="Li L."/>
            <person name="Wang Z."/>
            <person name="Lu Y."/>
            <person name="Bao Q."/>
            <person name="Chen S."/>
            <person name="Wu N."/>
            <person name="Cheng S."/>
            <person name="Weng J."/>
            <person name="Zhang Y."/>
            <person name="Yan J."/>
            <person name="Mei L."/>
            <person name="Wang X."/>
            <person name="Zhu H."/>
            <person name="Yu Y."/>
            <person name="Zhang M."/>
            <person name="Li M."/>
            <person name="Yao J."/>
            <person name="Lu Q."/>
            <person name="Yao P."/>
            <person name="Bo X."/>
            <person name="Wo J."/>
            <person name="Wang S."/>
            <person name="Hu S."/>
        </authorList>
    </citation>
    <scope>NUCLEOTIDE SEQUENCE [GENOMIC RNA]</scope>
    <source>
        <strain>Isolate ZJ01</strain>
    </source>
</reference>
<reference key="9">
    <citation type="submission" date="2003-04" db="EMBL/GenBank/DDBJ databases">
        <authorList>
            <person name="Qin E."/>
            <person name="Zhu Q."/>
            <person name="Yu M."/>
            <person name="Fan B."/>
            <person name="Chang G."/>
            <person name="Si B."/>
            <person name="Yang B."/>
            <person name="Peng W."/>
            <person name="Jiang T."/>
            <person name="Liu B."/>
            <person name="Deng Y."/>
            <person name="Liu H."/>
            <person name="Zhang Y."/>
            <person name="Wang C."/>
            <person name="Li Y."/>
            <person name="Gan Y."/>
            <person name="Li X."/>
            <person name="Lu F."/>
            <person name="Tan G."/>
            <person name="Yang R."/>
            <person name="Cao W.S."/>
            <person name="Wang J."/>
            <person name="Chen W."/>
            <person name="Cong L."/>
            <person name="Deng Y."/>
            <person name="Dong W."/>
            <person name="Han Y."/>
            <person name="Hu W."/>
            <person name="Lei M."/>
            <person name="Li C."/>
            <person name="Li G."/>
            <person name="Li G."/>
            <person name="Li H."/>
            <person name="Li S."/>
            <person name="Li S."/>
            <person name="Li W."/>
            <person name="Li W."/>
            <person name="Lin W."/>
            <person name="Liu J."/>
            <person name="Liu Z."/>
            <person name="Lu H."/>
            <person name="Ni P."/>
            <person name="Qi Q."/>
            <person name="Sun Y."/>
            <person name="Tang L."/>
            <person name="Tong Z."/>
            <person name="Wang J."/>
            <person name="Wang X."/>
            <person name="Wu Q."/>
            <person name="Xi Y."/>
            <person name="Xu Z."/>
            <person name="Yang L."/>
            <person name="Ye C."/>
            <person name="Ye J."/>
            <person name="Zhang B."/>
            <person name="Zhang F."/>
            <person name="Zhang J."/>
            <person name="Zhang X."/>
            <person name="Zhou J."/>
            <person name="Yang H."/>
        </authorList>
    </citation>
    <scope>NUCLEOTIDE SEQUENCE [GENOMIC RNA]</scope>
    <source>
        <strain>Isolate BJ01</strain>
        <strain>Isolate BJ02</strain>
        <strain>Isolate BJ03</strain>
        <strain>Isolate BJ04</strain>
        <strain>Isolate GD01</strain>
    </source>
</reference>
<reference key="10">
    <citation type="submission" date="2003-05" db="EMBL/GenBank/DDBJ databases">
        <title>The complete genome of SARS coronavirus clone TW1.</title>
        <authorList>
            <person name="Yeh S.-H."/>
            <person name="Kao C.-L."/>
            <person name="Tsai C.-Y."/>
            <person name="Liu C.-J."/>
            <person name="Chen D.-S."/>
            <person name="Chen P.-J."/>
        </authorList>
    </citation>
    <scope>NUCLEOTIDE SEQUENCE [GENOMIC RNA]</scope>
    <source>
        <strain>Isolate TW1</strain>
    </source>
</reference>
<reference key="11">
    <citation type="journal article" date="2003" name="Science">
        <title>Phylogeny of the SARS coronavirus.</title>
        <authorList>
            <person name="Eickmann M."/>
            <person name="Becker S."/>
            <person name="Klenk H.-D."/>
            <person name="Doerr H.W."/>
            <person name="Stadler K."/>
            <person name="Censini S."/>
            <person name="Guidotti S."/>
            <person name="Masignani V."/>
            <person name="Scarselli M."/>
            <person name="Mora M."/>
            <person name="Donati C."/>
            <person name="Han J.H."/>
            <person name="Song H.C."/>
            <person name="Abrignani S."/>
            <person name="Covacci A."/>
            <person name="Rappuoli R."/>
        </authorList>
    </citation>
    <scope>NUCLEOTIDE SEQUENCE [GENOMIC RNA]</scope>
    <source>
        <strain>Isolate FRA</strain>
    </source>
</reference>
<reference key="12">
    <citation type="submission" date="2003-05" db="EMBL/GenBank/DDBJ databases">
        <authorList>
            <person name="Thiel V."/>
            <person name="Hertzig T."/>
            <person name="Putics A."/>
            <person name="Ivanov K.A."/>
            <person name="Schelle B."/>
            <person name="Bayer S."/>
            <person name="Scheiner B."/>
            <person name="Weinand H."/>
            <person name="Weissbrich B."/>
            <person name="Ziebuhr J."/>
        </authorList>
    </citation>
    <scope>NUCLEOTIDE SEQUENCE [GENOMIC RNA]</scope>
    <source>
        <strain>Isolate Frankfurt-1</strain>
    </source>
</reference>
<reference key="13">
    <citation type="submission" date="2003-06" db="EMBL/GenBank/DDBJ databases">
        <title>Genomic sequence of SARS isolate from the first fatal case in Taiwan.</title>
        <authorList>
            <person name="Yang J.-Y."/>
            <person name="Lin J.-H."/>
            <person name="Chiu S.-C."/>
            <person name="Wang S.-F."/>
            <person name="Lee S.C."/>
            <person name="Lin Y.-C."/>
            <person name="Hsu C.-K."/>
            <person name="Chen H.-Y."/>
            <person name="Chang J.G."/>
            <person name="Chen P.-J."/>
            <person name="Su I.-J."/>
        </authorList>
    </citation>
    <scope>NUCLEOTIDE SEQUENCE [GENOMIC RNA]</scope>
    <source>
        <strain>Isolate TWC</strain>
    </source>
</reference>
<reference key="14">
    <citation type="submission" date="2003-06" db="EMBL/GenBank/DDBJ databases">
        <title>Analysis of SARS coronavirus genome in Shanghai isolates.</title>
        <authorList>
            <person name="Yuan Z."/>
            <person name="Zhang X."/>
            <person name="Hu Y."/>
            <person name="Lan S."/>
            <person name="Wang H."/>
            <person name="Zhou Z."/>
            <person name="Wen Y."/>
        </authorList>
    </citation>
    <scope>NUCLEOTIDE SEQUENCE [GENOMIC RNA]</scope>
    <source>
        <strain>Isolate Shanghai QXC1</strain>
    </source>
</reference>
<reference key="15">
    <citation type="submission" date="2003-07" db="EMBL/GenBank/DDBJ databases">
        <authorList>
            <person name="Canducci F."/>
            <person name="Clementi M."/>
            <person name="Poli G."/>
            <person name="Vicenzi E."/>
        </authorList>
    </citation>
    <scope>NUCLEOTIDE SEQUENCE [GENOMIC RNA]</scope>
    <source>
        <strain>Isolate HSR 1</strain>
    </source>
</reference>
<reference key="16">
    <citation type="submission" date="2003-07" db="EMBL/GenBank/DDBJ databases">
        <authorList>
            <person name="Chang J.-G.C."/>
            <person name="Lin T.-H."/>
            <person name="Chen C.-M."/>
            <person name="Lin C.-S."/>
            <person name="Chan W.-L."/>
            <person name="Shih M.-C."/>
        </authorList>
    </citation>
    <scope>NUCLEOTIDE SEQUENCE [GENOMIC RNA]</scope>
    <source>
        <strain>Isolate Taiwan TC1</strain>
        <strain>Isolate Taiwan TC2</strain>
        <strain>Isolate Taiwan TC3</strain>
    </source>
</reference>
<reference key="17">
    <citation type="submission" date="2003-07" db="EMBL/GenBank/DDBJ databases">
        <authorList>
            <person name="Shu H.Y."/>
            <person name="Wu K.M."/>
            <person name="Tsai S.F."/>
        </authorList>
    </citation>
    <scope>NUCLEOTIDE SEQUENCE [GENOMIC RNA]</scope>
    <source>
        <strain>Isolate TWH</strain>
        <strain>Isolate TWJ</strain>
        <strain>Isolate TWK</strain>
        <strain>Isolate TWS</strain>
        <strain>Isolate TWY</strain>
    </source>
</reference>
<reference key="18">
    <citation type="submission" date="2003-10" db="EMBL/GenBank/DDBJ databases">
        <authorList>
            <person name="Balotta C."/>
            <person name="Corvasce S."/>
            <person name="Violin M."/>
            <person name="Galli M."/>
            <person name="Moroni M."/>
            <person name="Vigevani G.M."/>
            <person name="Ruan Y.J."/>
            <person name="Salemi M."/>
        </authorList>
    </citation>
    <scope>NUCLEOTIDE SEQUENCE [GENOMIC RNA]</scope>
    <source>
        <strain>Isolate AS</strain>
    </source>
</reference>
<reference key="19">
    <citation type="submission" date="2003-11" db="EMBL/GenBank/DDBJ databases">
        <authorList>
            <person name="Wang Z."/>
            <person name="Cheng S."/>
            <person name="Zhang Y."/>
        </authorList>
    </citation>
    <scope>NUCLEOTIDE SEQUENCE [GENOMIC RNA]</scope>
    <source>
        <strain>Isolate ZJ01</strain>
    </source>
</reference>
<reference key="20">
    <citation type="submission" date="2003-06" db="EMBL/GenBank/DDBJ databases">
        <authorList>
            <person name="Yuan Z."/>
            <person name="Zhang X."/>
            <person name="Hu Y."/>
            <person name="Lan S."/>
            <person name="Wang H."/>
            <person name="Zhou Z."/>
            <person name="Wen Y."/>
        </authorList>
    </citation>
    <scope>NUCLEOTIDE SEQUENCE [GENOMIC RNA] OF 1-507 AND 1655-4382</scope>
    <source>
        <strain>Isolate Shanghai LY</strain>
    </source>
</reference>
<reference key="21">
    <citation type="journal article" date="2003" name="J. Gen. Virol.">
        <title>Mechanisms and enzymes involved in SARS coronavirus genome expression.</title>
        <authorList>
            <person name="Thiel V."/>
            <person name="Ivanov K.A."/>
            <person name="Putics A."/>
            <person name="Hertzig T."/>
            <person name="Schelle B."/>
            <person name="Bayer S."/>
            <person name="Weissbrich B."/>
            <person name="Snijder E.J."/>
            <person name="Rabenau H."/>
            <person name="Doerr H.W."/>
            <person name="Gorbalenya A.E."/>
            <person name="Ziebuhr J."/>
        </authorList>
    </citation>
    <scope>PROTEOLYTIC CLEAVAGE (ISOFORM REPLICASE POLYPROTEIN 1A)</scope>
    <scope>CATALYTIC ACTIVITY (3C-LIKE PROTEINASE NSP5)</scope>
    <scope>CATALYTIC ACTIVITY (PAPAIN-LIKE PROTEASE NSP3)</scope>
</reference>
<reference key="22">
    <citation type="journal article" date="2004" name="J. Virol.">
        <title>Identification and characterization of severe acute respiratory syndrome coronavirus replicase proteins.</title>
        <authorList>
            <person name="Prentice E."/>
            <person name="McAuliffe J."/>
            <person name="Lu X."/>
            <person name="Subbarao K."/>
            <person name="Denison M.R."/>
        </authorList>
    </citation>
    <scope>PROTEOLYTIC CLEAVAGE (ISOFORM REPLICASE POLYPROTEIN 1A)</scope>
</reference>
<reference key="23">
    <citation type="journal article" date="2004" name="J. Virol.">
        <title>Identification of severe acute respiratory syndrome coronavirus replicase products and characterization of papain-like protease activity.</title>
        <authorList>
            <person name="Harcourt B.H."/>
            <person name="Jukneliene D."/>
            <person name="Kanjanahaluethai A."/>
            <person name="Bechill J."/>
            <person name="Severson K.M."/>
            <person name="Smith C.M."/>
            <person name="Rota P.A."/>
            <person name="Baker S.C."/>
        </authorList>
    </citation>
    <scope>PROTEOLYTIC CLEAVAGE (ISOFORM REPLICASE POLYPROTEIN 1A)</scope>
    <source>
        <strain>Isolate Urbani</strain>
    </source>
</reference>
<reference key="24">
    <citation type="journal article" date="2004" name="J. Biol. Chem.">
        <title>Biosynthesis, purification, and substrate specificity of severe acute respiratory syndrome coronavirus 3C-like proteinase.</title>
        <authorList>
            <person name="Fan K."/>
            <person name="Wei P."/>
            <person name="Feng Q."/>
            <person name="Chen S."/>
            <person name="Huang C."/>
            <person name="Ma L."/>
            <person name="Lai B."/>
            <person name="Pei J."/>
            <person name="Liu Y."/>
            <person name="Chen J."/>
            <person name="Lai L."/>
        </authorList>
    </citation>
    <scope>CATALYTIC ACTIVITY (3C-LIKE PROTEINASE NSP5)</scope>
    <scope>SUBUNIT (3C-LIKE PROTEINASE NSP5)</scope>
    <scope>BIOPHYSICOCHEMICAL PROPERTIES (3C-LIKE PROTEINASE NSP5)</scope>
</reference>
<reference key="25">
    <citation type="journal article" date="2005" name="J. Virol.">
        <title>The papain-like protease of severe acute respiratory syndrome coronavirus has deubiquitinating activity.</title>
        <authorList>
            <person name="Barretto N."/>
            <person name="Jukneliene D."/>
            <person name="Ratia K."/>
            <person name="Chen Z."/>
            <person name="Mesecar A.D."/>
            <person name="Baker S.C."/>
        </authorList>
    </citation>
    <scope>CATALYTIC ACTIVITY (PAPAIN-LIKE PROTEASE NSP3)</scope>
    <scope>FUNCTION (PAPAIN-LIKE PROTEASE NSP3)</scope>
    <scope>PROTEOLYTIC CLEAVAGE (ISOFORM REPLICASE POLYPROTEIN 1A)</scope>
    <scope>COFACTOR (PAPAIN-LIKE PROTEASE NSP3)</scope>
    <scope>MUTAGENESIS OF CYS-1651; CYS-1688; CYS-1729; CYS-1732; CYS-1764; CYS-1766 AND ASP-1826</scope>
    <scope>ACTIVE SITE (PAPAIN-LIKE PROTEASE NSP3)</scope>
</reference>
<reference key="26">
    <citation type="journal article" date="2005" name="FEBS Lett.">
        <title>Binding interaction of SARS coronavirus 3CL(pro) protease with vacuolar-H+ ATPase G1 subunit.</title>
        <authorList>
            <person name="Lin C.W."/>
            <person name="Tsai F.J."/>
            <person name="Wan L."/>
            <person name="Lai C.C."/>
            <person name="Lin K.H."/>
            <person name="Hsieh T.H."/>
            <person name="Shiu S.Y."/>
            <person name="Li J.Y."/>
        </authorList>
    </citation>
    <scope>FUNCTION (3C-LIKE PROTEINASE NSP5)</scope>
</reference>
<reference key="27">
    <citation type="journal article" date="2005" name="J. Biol. Chem.">
        <title>Severe acute respiratory syndrome coronavirus 3C-like proteinase N terminus is indispensable for proteolytic activity but not for enzyme dimerization. Biochemical and thermodynamic investigation in conjunction with molecular dynamics simulations.</title>
        <authorList>
            <person name="Chen S."/>
            <person name="Chen L."/>
            <person name="Tan J."/>
            <person name="Chen J."/>
            <person name="Du L."/>
            <person name="Sun T."/>
            <person name="Shen J."/>
            <person name="Chen K."/>
            <person name="Jiang H."/>
            <person name="Shen X."/>
        </authorList>
    </citation>
    <scope>SUBUNIT (3C-LIKE PROTEINASE NSP5)</scope>
</reference>
<reference key="28">
    <citation type="journal article" date="2006" name="EMBO J.">
        <title>A second, non-canonical RNA-dependent RNA polymerase in SARS coronavirus.</title>
        <authorList>
            <person name="Imbert I."/>
            <person name="Guillemot J.-C."/>
            <person name="Bourhis J.-M."/>
            <person name="Bussetta C."/>
            <person name="Coutard B."/>
            <person name="Egloff M.-P."/>
            <person name="Ferron F."/>
            <person name="Gorbalenya A.E."/>
            <person name="Canard B."/>
        </authorList>
    </citation>
    <scope>FUNCTION (NON-STRUCTURAL PROTEIN 8)</scope>
</reference>
<reference key="29">
    <citation type="journal article" date="2007" name="Arch. Biochem. Biophys.">
        <title>Selectivity in ISG15 and ubiquitin recognition by the SARS coronavirus papain-like protease.</title>
        <authorList>
            <person name="Lindner H.A."/>
            <person name="Lytvyn V."/>
            <person name="Qi H."/>
            <person name="Lachance P."/>
            <person name="Ziomek E."/>
            <person name="Menard R."/>
        </authorList>
    </citation>
    <scope>FUNCTION (NON-STRUCTURAL PROTEIN 3)</scope>
    <scope>CATALYTIC ACTIVITY (PAPAIN-LIKE PROTEASE NSP3)</scope>
</reference>
<reference key="30">
    <citation type="journal article" date="2007" name="Virology">
        <title>The nonstructural protein 8 (nsp8) of the SARS coronavirus interacts with its ORF6 accessory protein.</title>
        <authorList>
            <person name="Kumar P."/>
            <person name="Gunalan V."/>
            <person name="Liu B."/>
            <person name="Chow V.T."/>
            <person name="Druce J."/>
            <person name="Birch C."/>
            <person name="Catton M."/>
            <person name="Fielding B.C."/>
            <person name="Tan Y.J."/>
            <person name="Lal S.K."/>
        </authorList>
    </citation>
    <scope>INTERACTION WITH ORF6 PROTEIN (NON-STRUCTURAL PROTEIN 8)</scope>
</reference>
<reference key="31">
    <citation type="journal article" date="2008" name="J. Virol.">
        <title>Topology and membrane anchoring of the coronavirus replication complex: not all hydrophobic domains of nsp3 and nsp6 are membrane spanning.</title>
        <authorList>
            <person name="Oostra M."/>
            <person name="Hagemeijer M.C."/>
            <person name="van Gent M."/>
            <person name="Bekker C.P."/>
            <person name="te Lintelo E.G."/>
            <person name="Rottier P.J."/>
            <person name="de Haan C.A."/>
        </authorList>
    </citation>
    <scope>TOPOLOGY (PAPAIN-LIKE PROTEASE NSP3)</scope>
    <scope>TOPOLOGY (NON-STRUCTURAL PROTEIN 4)</scope>
    <scope>TOPOLOGY (NON-STRUCTURAL PROTEIN 6)</scope>
</reference>
<reference key="32">
    <citation type="journal article" date="2009" name="J. Virol.">
        <title>Severe acute respiratory syndrome coronavirus papain-like protease ubiquitin-like domain and catalytic domain regulate antagonism of IRF3 and NF-kappaB signaling.</title>
        <authorList>
            <person name="Frieman M."/>
            <person name="Ratia K."/>
            <person name="Johnston R.E."/>
            <person name="Mesecar A.D."/>
            <person name="Baric R.S."/>
        </authorList>
    </citation>
    <scope>FUNCTION (NON-STRUCTURAL PROTEIN 3)</scope>
</reference>
<reference key="33">
    <citation type="journal article" date="2009" name="J. Virol.">
        <title>Severe acute respiratory syndrome coronavirus nonstructural protein 2 interacts with a host protein complex involved in mitochondrial biogenesis and intracellular signaling.</title>
        <authorList>
            <person name="Cornillez-Ty C.T."/>
            <person name="Liao L."/>
            <person name="Yates J.R."/>
            <person name="Kuhn P."/>
            <person name="Buchmeier M.J."/>
        </authorList>
    </citation>
    <scope>FUNCTION (NON-STRUCTURAL PROTEIN 2)</scope>
    <scope>INTERACTION WITH HOST PHB AND PHB2 (NON-STRUCTURAL PROTEIN 2)</scope>
</reference>
<reference key="34">
    <citation type="journal article" date="2009" name="J. Virol.">
        <title>Severe acute respiratory syndrome coronavirus nsp9 dimerization is essential for efficient viral growth.</title>
        <authorList>
            <person name="Miknis Z.J."/>
            <person name="Donaldson E.F."/>
            <person name="Umland T.C."/>
            <person name="Rimmer R.A."/>
            <person name="Baric R.S."/>
            <person name="Schultz L.W."/>
        </authorList>
    </citation>
    <scope>FUNCTION (NON-STRUCTURAL PROTEIN 9)</scope>
</reference>
<reference key="35">
    <citation type="journal article" date="2011" name="PLoS Pathog.">
        <title>SARS coronavirus nsp1 protein induces template-dependent endonucleolytic cleavage of mRNAs: viral mRNAs are resistant to nsp1-induced RNA cleavage.</title>
        <authorList>
            <person name="Huang C."/>
            <person name="Lokugamage K.G."/>
            <person name="Rozovics J.M."/>
            <person name="Narayanan K."/>
            <person name="Semler B.L."/>
            <person name="Makino S."/>
        </authorList>
    </citation>
    <scope>FUNCTION (NON-STRUCTURAL PROTEIN 1)</scope>
</reference>
<reference key="36">
    <citation type="journal article" date="2011" name="J. Virol.">
        <title>Mobility and interactions of coronavirus nonstructural protein 4.</title>
        <authorList>
            <person name="Hagemeijer M.C."/>
            <person name="Ulasli M."/>
            <person name="Vonk A.M."/>
            <person name="Reggiori F."/>
            <person name="Rottier P.J."/>
            <person name="de Haan C.A."/>
        </authorList>
    </citation>
    <scope>INTERACTION WITH PAPAIN-LIKE PROTEASE NSP3 (NON-STRUCTURAL PROTEIN 4)</scope>
    <scope>SUBCELLULAR LOCATION (NON-STRUCTURAL PROTEIN 4)</scope>
    <scope>INTERACTION WITH NON-STRUCTURAL PROTEIN 6 (NON-STRUCTURAL PROTEIN 4)</scope>
</reference>
<reference key="37">
    <citation type="journal article" date="2012" name="J. Virol.">
        <title>Severe acute respiratory syndrome coronavirus protein nsp1 is a novel eukaryotic translation inhibitor that represses multiple steps of translation initiation.</title>
        <authorList>
            <person name="Lokugamage K.G."/>
            <person name="Narayanan K."/>
            <person name="Huang C."/>
            <person name="Makino S."/>
        </authorList>
    </citation>
    <scope>FUNCTION (NON-STRUCTURAL PROTEIN 1)</scope>
</reference>
<reference key="38">
    <citation type="journal article" date="2012" name="Nucleic Acids Res.">
        <title>The SARS-coronavirus nsp7+nsp8 complex is a unique multimeric RNA polymerase capable of both de novo initiation and primer extension.</title>
        <authorList>
            <person name="te Velthuis A.J."/>
            <person name="van den Worm S.H."/>
            <person name="Snijder E.J."/>
        </authorList>
    </citation>
    <scope>FUNCTION (NON-STRUCTURAL PROTEIN 7)</scope>
    <scope>FUNCTION (NON-STRUCTURAL PROTEIN 8)</scope>
</reference>
<reference key="39">
    <citation type="journal article" date="2012" name="Proc. Natl. Acad. Sci. U.S.A.">
        <title>RNA 3'-end mismatch excision by the severe acute respiratory syndrome coronavirus nonstructural protein nsp10/nsp14 exoribonuclease complex.</title>
        <authorList>
            <person name="Bouvet M."/>
            <person name="Imbert I."/>
            <person name="Subissi L."/>
            <person name="Gluais L."/>
            <person name="Canard B."/>
            <person name="Decroly E."/>
        </authorList>
    </citation>
    <scope>FUNCTION (NON-STRUCTURAL PROTEIN 10)</scope>
    <scope>INTERACTION WITH PROOFREADING EXORIBONUCLEASE NSP14 (NON-STRUCTURAL PROTEIN 10)</scope>
</reference>
<reference key="40">
    <citation type="journal article" date="2013" name="MBio">
        <title>Severe acute respiratory syndrome coronavirus nonstructural proteins 3, 4, and 6 induce double-membrane vesicles.</title>
        <authorList>
            <person name="Angelini M.M."/>
            <person name="Akhlaghpour M."/>
            <person name="Neuman B.W."/>
            <person name="Buchmeier M.J."/>
        </authorList>
    </citation>
    <scope>FUNCTION (NON-STRUCTURAL PROTEIN 4)</scope>
    <scope>SUBCELLULAR LOCATION (NON-STRUCTURAL PROTEIN 4)</scope>
    <scope>FUNCTION (PAPAIN-LIKE PROTEASE NSP3)</scope>
    <scope>FUNCTION (NON-STRUCTURAL PROTEIN 6)</scope>
</reference>
<reference key="41">
    <citation type="journal article" date="2014" name="Autophagy">
        <title>Coronavirus NSP6 restricts autophagosome expansion.</title>
        <authorList>
            <person name="Cottam E.M."/>
            <person name="Whelband M.C."/>
            <person name="Wileman T."/>
        </authorList>
    </citation>
    <scope>FUNCTION (NON-STRUCTURAL PROTEIN 6)</scope>
</reference>
<reference key="42">
    <citation type="journal article" date="2014" name="DNA Cell Biol.">
        <title>Untangling membrane rearrangement in the nidovirales.</title>
        <authorList>
            <person name="Angelini M.M."/>
            <person name="Neuman B.W."/>
            <person name="Buchmeier M.J."/>
        </authorList>
    </citation>
    <scope>REVIEW</scope>
</reference>
<reference key="43">
    <citation type="journal article" date="2014" name="Protein Cell">
        <title>SARS coronavirus papain-like protease inhibits the type I interferon signaling pathway through interaction with the STING-TRAF3-TBK1 complex.</title>
        <authorList>
            <person name="Chen X."/>
            <person name="Yang X."/>
            <person name="Zheng Y."/>
            <person name="Yang Y."/>
            <person name="Xing Y."/>
            <person name="Chen Z."/>
        </authorList>
    </citation>
    <scope>FUNCTION (PAPAIN-LIKE PROTEASE NSP3)</scope>
</reference>
<reference key="44">
    <citation type="journal article" date="2019" name="Biochem. Cell Biol.">
        <title>SARS coronavirus protein nsp1 disrupts localization of Nup93 from the nuclear pore complex.</title>
        <authorList>
            <person name="Gomez G.N."/>
            <person name="Abrar F."/>
            <person name="Dodhia M.P."/>
            <person name="Gonzalez F.G."/>
            <person name="Nag A."/>
        </authorList>
    </citation>
    <scope>INTERACTION WITH NUP93 (HOST TRANSLATION INHIBITOR NSP1)</scope>
    <scope>FUNCTION (HOST TRANSLATION INHIBITOR NSP1)</scope>
</reference>
<reference key="45">
    <citation type="journal article" date="2020" name="Biochem. J.">
        <title>Processing of the SARS-CoV pp1a/ab nsp7-10 region.</title>
        <authorList>
            <person name="Krichel B."/>
            <person name="Falke S."/>
            <person name="Hilgenfeld R."/>
            <person name="Redecke L."/>
            <person name="Uetrecht C."/>
        </authorList>
    </citation>
    <scope>PROTEOLYTIC CLEAVAGE (ISOFORM REPLICASE POLYPROTEIN 1A)</scope>
    <scope>MASS SPECTROMETRY (NON-STRUCTURAL PROTEIN 8)</scope>
    <scope>MASS SPECTROMETRY (NON-STRUCTURAL PROTEIN 9)</scope>
    <scope>MASS SPECTROMETRY (NON-STRUCTURAL PROTEIN 10)</scope>
</reference>
<reference key="46">
    <citation type="journal article" date="2003" name="Science">
        <title>Coronavirus main proteinase (3CLpro) structure: basis for design of anti-SARS drugs.</title>
        <authorList>
            <person name="Anand K."/>
            <person name="Ziebuhr J."/>
            <person name="Wadhwani P."/>
            <person name="Mesters J.R."/>
            <person name="Hilgenfeld R."/>
        </authorList>
    </citation>
    <scope>3D-STRUCTURE MODELING OF 3241-3540</scope>
    <scope>CHARACTERIZATION (3C-LIKE PROTEINASE NSP5)</scope>
</reference>
<reference key="47">
    <citation type="journal article" date="2003" name="Acta Crystallogr. D">
        <title>Structural genomics of the SARS coronavirus: cloning, expression, crystallization and preliminary crystallographic study of the Nsp9 protein.</title>
        <authorList>
            <person name="Campanacci V."/>
            <person name="Egloff M.-P."/>
            <person name="Longhi S."/>
            <person name="Ferron F."/>
            <person name="Rancurel C."/>
            <person name="Salomoni A."/>
            <person name="Durousseau C."/>
            <person name="Tocque F."/>
            <person name="Bremond N."/>
            <person name="Dobbe J.C."/>
            <person name="Snijder E.J."/>
            <person name="Canard B."/>
            <person name="Cambillau C."/>
        </authorList>
    </citation>
    <scope>X-RAY CRYSTALLOGRAPHY (2.8 ANGSTROMS) OF 4118-4230 (NON-STRUCTURAL PROTEIN 9)</scope>
    <source>
        <strain>Isolate Frankfurt-1</strain>
    </source>
</reference>
<reference key="48">
    <citation type="journal article" date="2004" name="Proc. Natl. Acad. Sci. U.S.A.">
        <title>The severe acute respiratory syndrome-coronavirus replicative protein nsp9 is a single-stranded RNA-binding subunit unique in the RNA virus world.</title>
        <authorList>
            <person name="Egloff M.-P."/>
            <person name="Ferron F."/>
            <person name="Campanacci V."/>
            <person name="Longhi S."/>
            <person name="Rancurel C."/>
            <person name="Dutartre H."/>
            <person name="Snijder E.J."/>
            <person name="Gorbalenya A.E."/>
            <person name="Cambillau C."/>
            <person name="Canard B."/>
        </authorList>
    </citation>
    <scope>X-RAY CRYSTALLOGRAPHY (2.7 ANGSTROMS) OF 4118-4230</scope>
</reference>
<reference key="49">
    <citation type="journal article" date="2004" name="Structure">
        <title>The nsp9 replicase protein of SARS-coronavirus, structure and functional insights.</title>
        <authorList>
            <person name="Sutton G."/>
            <person name="Fry E."/>
            <person name="Carter L."/>
            <person name="Sainsbury S."/>
            <person name="Walter T."/>
            <person name="Nettleship J."/>
            <person name="Berrow N."/>
            <person name="Owens R."/>
            <person name="Gilbert R."/>
            <person name="Davidson A."/>
            <person name="Siddell S."/>
            <person name="Poon L.L.M."/>
            <person name="Diprose J."/>
            <person name="Alderton D."/>
            <person name="Walsh M."/>
            <person name="Grimes J.M."/>
            <person name="Stuart D.I."/>
        </authorList>
    </citation>
    <scope>X-RAY CRYSTALLOGRAPHY (2.8 ANGSTROMS) OF 4107-4230</scope>
</reference>
<reference key="50">
    <citation type="journal article" date="2005" name="Nat. Struct. Mol. Biol.">
        <title>Insights into SARS-CoV transcription and replication from the structure of the nsp7-nsp8 hexadecamer.</title>
        <authorList>
            <person name="Zhai Y."/>
            <person name="Sun F."/>
            <person name="Li X."/>
            <person name="Pang H."/>
            <person name="Xu X."/>
            <person name="Bartlam M."/>
            <person name="Rao Z."/>
        </authorList>
    </citation>
    <scope>X-RAY CRYSTALLOGRAPHY (2.4 ANGSTROMS) OF 3837-4117 AND 3920-4117</scope>
    <scope>INTERACTION WITH NON-STRUCTURAL PROTEIN 7 (NON-STRUCTURAL PROTEIN 8)</scope>
    <scope>INTERACTION WITH NON-STRUCTURAL PROTEIN 8 (NON-STRUCTURAL PROTEIN 7)</scope>
</reference>
<reference key="51">
    <citation type="journal article" date="2005" name="Structure">
        <title>Structural basis of severe acute respiratory syndrome coronavirus ADP-ribose-1''-phosphate dephosphorylation by a conserved domain of nsP3.</title>
        <authorList>
            <person name="Saikatendu K.S."/>
            <person name="Joseph J.S."/>
            <person name="Subramanian V."/>
            <person name="Clayton T."/>
            <person name="Griffith M."/>
            <person name="Moy K."/>
            <person name="Velasquez J."/>
            <person name="Neuman B.W."/>
            <person name="Buchmeier M.J."/>
            <person name="Stevens R.C."/>
            <person name="Kuhn P."/>
        </authorList>
    </citation>
    <scope>X-RAY CRYSTALLOGRAPHY (1.4 ANGSTROMS) OF 1002-1176</scope>
</reference>
<reference key="52">
    <citation type="journal article" date="2006" name="Proc. Natl. Acad. Sci. U.S.A.">
        <title>Severe acute respiratory syndrome coronavirus papain-like protease: structure of a viral deubiquitinating enzyme.</title>
        <authorList>
            <person name="Ratia K."/>
            <person name="Saikatendu K.S."/>
            <person name="Santarsiero B.D."/>
            <person name="Barretto N."/>
            <person name="Baker S.C."/>
            <person name="Stevens R.C."/>
            <person name="Mesecar A.D."/>
        </authorList>
    </citation>
    <scope>X-RAY CRYSTALLOGRAPHY (1.85 ANGSTROMS) OF 1541-1854</scope>
</reference>
<reference key="53">
    <citation type="journal article" date="2006" name="J. Virol.">
        <title>Crystal structure of nonstructural protein 10 from the severe acute respiratory syndrome coronavirus reveals a novel fold with two zinc-binding motifs.</title>
        <authorList>
            <person name="Joseph J.S."/>
            <person name="Saikatendu K.S."/>
            <person name="Subramanian V."/>
            <person name="Neuman B.W."/>
            <person name="Brooun A."/>
            <person name="Griffith M."/>
            <person name="Moy K."/>
            <person name="Yadav M.K."/>
            <person name="Velasquez J."/>
            <person name="Buchmeier M.J."/>
            <person name="Stevens R.C."/>
            <person name="Kuhn P."/>
        </authorList>
    </citation>
    <scope>X-RAY CRYSTALLOGRAPHY (1.8 ANGSTROMS) OF 4240-4362</scope>
    <source>
        <strain>Isolate Tor2</strain>
    </source>
</reference>
<reference key="54">
    <citation type="journal article" date="2006" name="J. Virol.">
        <title>Dodecamer structure of severe acute respiratory syndrome coronavirus nonstructural protein nsp10.</title>
        <authorList>
            <person name="Su D."/>
            <person name="Lou Z."/>
            <person name="Sun F."/>
            <person name="Zhai Y."/>
            <person name="Yang H."/>
            <person name="Zhang R."/>
            <person name="Joachimiak A."/>
            <person name="Zhang X.C."/>
            <person name="Bartlam M."/>
            <person name="Rao Z."/>
        </authorList>
    </citation>
    <scope>X-RAY CRYSTALLOGRAPHY (2.1 ANGSTROMS) OF 4231-4378</scope>
</reference>
<reference key="55">
    <citation type="journal article" date="2007" name="J. Virol.">
        <title>Novel beta-barrel fold in the nuclear magnetic resonance structure of the replicase nonstructural protein 1 from the severe acute respiratory syndrome coronavirus.</title>
        <authorList>
            <person name="Almeida M.S."/>
            <person name="Johnson M.A."/>
            <person name="Herrmann T."/>
            <person name="Geralt M."/>
            <person name="Wuthrich K."/>
        </authorList>
    </citation>
    <scope>STRUCTURE BY NMR OF 13-127</scope>
</reference>
<reference key="56">
    <citation type="submission" date="2007-07" db="PDB data bank">
        <title>Crystal structure of Sars coronavirus main proteinase(3CLPRO).</title>
        <authorList>
            <consortium name="RIKEN structural genomics initiative (RSGI)"/>
        </authorList>
    </citation>
    <scope>X-RAY CRYSTALLOGRAPHY (1.7 ANGSTROMS) OF 3241-3546</scope>
</reference>